<feature type="initiator methionine" description="Removed" evidence="11 12 15 16">
    <location>
        <position position="1"/>
    </location>
</feature>
<feature type="chain" id="PRO_0000052653" description="Hemoglobin subunit alpha">
    <location>
        <begin position="2"/>
        <end position="142"/>
    </location>
</feature>
<feature type="peptide" id="PRO_0000455882" description="Hemopressin" evidence="106">
    <location>
        <begin position="96"/>
        <end position="104"/>
    </location>
</feature>
<feature type="domain" description="Globin" evidence="2">
    <location>
        <begin position="2"/>
        <end position="142"/>
    </location>
</feature>
<feature type="binding site" evidence="2">
    <location>
        <position position="59"/>
    </location>
    <ligand>
        <name>O2</name>
        <dbReference type="ChEBI" id="CHEBI:15379"/>
    </ligand>
</feature>
<feature type="binding site" description="proximal binding residue" evidence="2">
    <location>
        <position position="88"/>
    </location>
    <ligand>
        <name>heme b</name>
        <dbReference type="ChEBI" id="CHEBI:60344"/>
    </ligand>
    <ligandPart>
        <name>Fe</name>
        <dbReference type="ChEBI" id="CHEBI:18248"/>
    </ligandPart>
</feature>
<feature type="site" description="(Microbial infection) Cleavage; by N.americanus apr-2" evidence="10">
    <location>
        <begin position="9"/>
        <end position="10"/>
    </location>
</feature>
<feature type="site" description="Not glycated" evidence="79">
    <location>
        <position position="12"/>
    </location>
</feature>
<feature type="site" description="(Microbial infection) Cleavage; by N.americanus apr-2" evidence="10">
    <location>
        <begin position="14"/>
        <end position="15"/>
    </location>
</feature>
<feature type="site" description="(Microbial infection) Cleavage; by N.americanus apr-2" evidence="10">
    <location>
        <begin position="25"/>
        <end position="26"/>
    </location>
</feature>
<feature type="site" description="(Microbial infection) Cleavage; by N.americanus apr-2" evidence="10">
    <location>
        <begin position="30"/>
        <end position="31"/>
    </location>
</feature>
<feature type="site" description="(Microbial infection) Cleavage; by N.americanus apr-2" evidence="10">
    <location>
        <begin position="46"/>
        <end position="47"/>
    </location>
</feature>
<feature type="site" description="(Microbial infection) Cleavage; by N.americanus apr-2" evidence="10">
    <location>
        <begin position="48"/>
        <end position="49"/>
    </location>
</feature>
<feature type="site" description="(Microbial infection) Cleavage; by N.americanus apr-2" evidence="10">
    <location>
        <begin position="53"/>
        <end position="54"/>
    </location>
</feature>
<feature type="site" description="(Microbial infection) Cleavage; by N.americanus apr-2" evidence="10">
    <location>
        <begin position="56"/>
        <end position="57"/>
    </location>
</feature>
<feature type="site" description="Not glycated" evidence="79">
    <location>
        <position position="57"/>
    </location>
</feature>
<feature type="site" description="(Microbial infection) Cleavage; by N.americanus apr-2" evidence="10">
    <location>
        <begin position="60"/>
        <end position="61"/>
    </location>
</feature>
<feature type="site" description="Not glycated" evidence="79">
    <location>
        <position position="61"/>
    </location>
</feature>
<feature type="site" description="Not glycated" evidence="79">
    <location>
        <position position="91"/>
    </location>
</feature>
<feature type="site" description="(Microbial infection) Cleavage; by N.americanus apr-2" evidence="10">
    <location>
        <begin position="92"/>
        <end position="93"/>
    </location>
</feature>
<feature type="site" description="Not glycated" evidence="79">
    <location>
        <position position="100"/>
    </location>
</feature>
<feature type="site" description="(Microbial infection) Cleavage; by N.americanus apr-2" evidence="10">
    <location>
        <begin position="107"/>
        <end position="108"/>
    </location>
</feature>
<feature type="site" description="(Microbial infection) Cleavage; by N.americanus apr-2" evidence="10">
    <location>
        <begin position="109"/>
        <end position="110"/>
    </location>
</feature>
<feature type="site" description="(Microbial infection) Cleavage; by N.americanus apr-2" evidence="10">
    <location>
        <begin position="122"/>
        <end position="123"/>
    </location>
</feature>
<feature type="site" description="(Microbial infection) Cleavage; by N.americanus apr-2" evidence="10">
    <location>
        <begin position="134"/>
        <end position="135"/>
    </location>
</feature>
<feature type="modified residue" description="Phosphoserine" evidence="108">
    <location>
        <position position="4"/>
    </location>
</feature>
<feature type="modified residue" description="N6-succinyllysine; alternate" evidence="1">
    <location>
        <position position="8"/>
    </location>
</feature>
<feature type="modified residue" description="Phosphothreonine" evidence="108">
    <location>
        <position position="9"/>
    </location>
</feature>
<feature type="modified residue" description="N6-succinyllysine" evidence="1">
    <location>
        <position position="12"/>
    </location>
</feature>
<feature type="modified residue" description="N6-acetyllysine; alternate" evidence="107">
    <location>
        <position position="17"/>
    </location>
</feature>
<feature type="modified residue" description="N6-succinyllysine; alternate" evidence="1">
    <location>
        <position position="17"/>
    </location>
</feature>
<feature type="modified residue" description="Phosphotyrosine" evidence="108">
    <location>
        <position position="25"/>
    </location>
</feature>
<feature type="modified residue" description="Phosphoserine" evidence="108">
    <location>
        <position position="36"/>
    </location>
</feature>
<feature type="modified residue" description="N6-succinyllysine; alternate" evidence="1">
    <location>
        <position position="41"/>
    </location>
</feature>
<feature type="modified residue" description="Phosphoserine" evidence="108">
    <location>
        <position position="50"/>
    </location>
</feature>
<feature type="modified residue" description="Phosphoserine" evidence="1">
    <location>
        <position position="103"/>
    </location>
</feature>
<feature type="modified residue" description="Phosphothreonine" evidence="1">
    <location>
        <position position="109"/>
    </location>
</feature>
<feature type="modified residue" description="Phosphoserine" evidence="1">
    <location>
        <position position="125"/>
    </location>
</feature>
<feature type="modified residue" description="Phosphoserine" evidence="1">
    <location>
        <position position="132"/>
    </location>
</feature>
<feature type="modified residue" description="Phosphothreonine" evidence="1">
    <location>
        <position position="135"/>
    </location>
</feature>
<feature type="modified residue" description="Phosphothreonine" evidence="1">
    <location>
        <position position="138"/>
    </location>
</feature>
<feature type="modified residue" description="Phosphoserine" evidence="1">
    <location>
        <position position="139"/>
    </location>
</feature>
<feature type="glycosylation site" description="N-linked (Glc) (glycation) lysine; alternate" evidence="79">
    <location>
        <position position="8"/>
    </location>
</feature>
<feature type="glycosylation site" description="N-linked (Glc) (glycation) lysine; alternate" evidence="79">
    <location>
        <position position="17"/>
    </location>
</feature>
<feature type="glycosylation site" description="N-linked (Glc) (glycation) lysine; alternate" evidence="79">
    <location>
        <position position="41"/>
    </location>
</feature>
<feature type="glycosylation site" description="N-linked (Glc) (glycation) lysine" evidence="79">
    <location>
        <position position="62"/>
    </location>
</feature>
<feature type="sequence variant" id="VAR_002719" description="In Thionville; O(2) affinity down; dbSNP:rs33981821." evidence="24">
    <original>V</original>
    <variation>E</variation>
    <location>
        <position position="2"/>
    </location>
</feature>
<feature type="sequence variant" id="VAR_002720" description="In ChongQing; O(2) affinity up; dbSNP:rs36030576." evidence="65">
    <original>L</original>
    <variation>R</variation>
    <location>
        <position position="3"/>
    </location>
</feature>
<feature type="sequence variant" id="VAR_002721" description="In J-Toronto; dbSNP:rs34090856.">
    <original>A</original>
    <variation>D</variation>
    <location>
        <position position="6"/>
    </location>
</feature>
<feature type="sequence variant" id="VAR_002722" description="In Karachi; dbSNP:rs34751764.">
    <original>A</original>
    <variation>P</variation>
    <location>
        <position position="6"/>
    </location>
</feature>
<feature type="sequence variant" id="VAR_002723" description="In Sawara; O(2) affinity up; dbSNP:rs33986902." evidence="33 51">
    <original>D</original>
    <variation>A</variation>
    <location>
        <position position="7"/>
    </location>
</feature>
<feature type="sequence variant" id="VAR_002724" description="In Swan River; dbSNP:rs281864805." evidence="95">
    <original>D</original>
    <variation>G</variation>
    <location>
        <position position="7"/>
    </location>
</feature>
<feature type="sequence variant" id="VAR_002725" description="In Dunn; O(2) affinity up; dbSNP:rs33961916." evidence="52 81">
    <original>D</original>
    <variation>N</variation>
    <location>
        <position position="7"/>
    </location>
</feature>
<feature type="sequence variant" id="VAR_002726" description="In Ferndown; O(2) affinity up; dbSNP:rs281864805." evidence="77">
    <original>D</original>
    <variation>V</variation>
    <location>
        <position position="7"/>
    </location>
</feature>
<feature type="sequence variant" id="VAR_002727" description="In Woodville; O(2) affinity up; dbSNP:rs281864806." evidence="45">
    <original>D</original>
    <variation>Y</variation>
    <location>
        <position position="7"/>
    </location>
</feature>
<feature type="sequence variant" id="VAR_002728" description="In Kurosaki; dbSNP:rs34817956." evidence="84">
    <original>K</original>
    <variation>E</variation>
    <location>
        <position position="8"/>
    </location>
</feature>
<feature type="sequence variant" id="VAR_038149" description="In Broomfield; dbSNP:rs281860608.">
    <original>N</original>
    <variation>T</variation>
    <location>
        <position position="10"/>
    </location>
</feature>
<feature type="sequence variant" id="VAR_002729" description="In Anantharaj; dbSNP:rs33938574.">
    <original>K</original>
    <variation>E</variation>
    <location>
        <position position="12"/>
    </location>
</feature>
<feature type="sequence variant" id="VAR_002730" description="In J-Paris 1/J-Aljezur; dbSNP:rs35615982.">
    <original>A</original>
    <variation>D</variation>
    <location>
        <position position="13"/>
    </location>
</feature>
<feature type="sequence variant" id="VAR_038150" description="In Ravenscourt Park; causes alpha-thalassemia; dbSNP:rs35331909.">
    <original>A</original>
    <variation>P</variation>
    <location>
        <position position="14"/>
    </location>
</feature>
<feature type="sequence variant" id="VAR_002731" description="In Evanston; O(2) affinity up; dbSNP:rs33964317." evidence="69 72">
    <original>W</original>
    <variation>R</variation>
    <location>
        <position position="15"/>
    </location>
</feature>
<feature type="sequence variant" id="VAR_002732" description="In Ottawa/Siam; dbSNP:rs35816645.">
    <original>G</original>
    <variation>R</variation>
    <location>
        <position position="16"/>
    </location>
</feature>
<feature type="sequence variant" id="VAR_002733" description="In Harbin; slightly unstable; dbSNP:rs35210126." evidence="65">
    <original>K</original>
    <variation>M</variation>
    <location>
        <position position="17"/>
    </location>
</feature>
<feature type="sequence variant" id="VAR_002734" description="In Beijing; dbSNP:rs281860648 and dbSNP:rs281860619.">
    <original>K</original>
    <variation>N</variation>
    <location>
        <position position="17"/>
    </location>
</feature>
<feature type="sequence variant" id="VAR_002735" description="In Al-Ain Abu Dhabi; dbSNP:rs35993097." evidence="17">
    <original>G</original>
    <variation>D</variation>
    <location>
        <position position="19"/>
    </location>
</feature>
<feature type="sequence variant" id="VAR_002736" description="In Handsworth; dbSNP:rs34504387.">
    <original>G</original>
    <variation>R</variation>
    <location>
        <position position="19"/>
    </location>
</feature>
<feature type="sequence variant" id="VAR_002737" description="In J-Kurosh.">
    <original>A</original>
    <variation>D</variation>
    <location>
        <position position="20"/>
    </location>
</feature>
<feature type="sequence variant" id="VAR_002738" description="In J-Tashikuergan; dbSNP:rs35628685.">
    <original>A</original>
    <variation>E</variation>
    <location>
        <position position="20"/>
    </location>
</feature>
<feature type="sequence variant" id="VAR_002739" description="In Le Lamentin; dbSNP:rs41525149.">
    <original>H</original>
    <variation>Q</variation>
    <location>
        <position position="21"/>
    </location>
</feature>
<feature type="sequence variant" id="VAR_002740" description="In Hobart; dbSNP:rs33943087." evidence="44">
    <original>H</original>
    <variation>R</variation>
    <location>
        <position position="21"/>
    </location>
</feature>
<feature type="sequence variant" id="VAR_002741" description="In J-Nyanza; dbSNP:rs11548605.">
    <original>A</original>
    <variation>D</variation>
    <location>
        <position position="22"/>
    </location>
</feature>
<feature type="sequence variant" id="VAR_002742" description="In Fontainebleau; dbSNP:rs34324664.">
    <original>A</original>
    <variation>P</variation>
    <location>
        <position position="22"/>
    </location>
</feature>
<feature type="sequence variant" id="VAR_002743" description="In J-Medellin; dbSNP:rs34608326.">
    <original>G</original>
    <variation>D</variation>
    <location>
        <position position="23"/>
    </location>
</feature>
<feature type="sequence variant" id="VAR_002744" description="In Reims; slightly unstable; dbSNP:rs33939421." evidence="39">
    <original>E</original>
    <variation>G</variation>
    <location>
        <position position="24"/>
    </location>
</feature>
<feature type="sequence variant" id="VAR_002745" description="In Chad; dbSNP:rs281864819.">
    <original>E</original>
    <variation>K</variation>
    <location>
        <position position="24"/>
    </location>
</feature>
<feature type="sequence variant" id="VAR_002746" description="In Luxembourg; unstable; dbSNP:rs281864821." evidence="36">
    <original>Y</original>
    <variation>H</variation>
    <location>
        <position position="25"/>
    </location>
</feature>
<feature type="sequence variant" id="VAR_002747" description="In Shenyang; unstable; dbSNP:rs281864822." evidence="75">
    <original>A</original>
    <variation>E</variation>
    <location>
        <position position="27"/>
    </location>
</feature>
<feature type="sequence variant" id="VAR_025387" description="In Campinas; dbSNP:rs281864822." evidence="20">
    <original>A</original>
    <variation>V</variation>
    <location>
        <position position="27"/>
    </location>
</feature>
<feature type="sequence variant" id="VAR_002748" description="In Hekinan; dbSNP:rs281865556.">
    <original>E</original>
    <variation>D</variation>
    <location>
        <position position="28"/>
    </location>
</feature>
<feature type="sequence variant" id="VAR_002749" description="In Fort Worth; dbSNP:rs281864823.">
    <original>E</original>
    <variation>G</variation>
    <location>
        <position position="28"/>
    </location>
</feature>
<feature type="sequence variant" id="VAR_002750" description="In Spanish town; dbSNP:rs281864823." evidence="40">
    <original>E</original>
    <variation>V</variation>
    <location>
        <position position="28"/>
    </location>
</feature>
<feature type="sequence variant" id="VAR_002751" description="In O-Padova; dbSNP:rs111033605.">
    <original>E</original>
    <variation>K</variation>
    <location>
        <position position="31"/>
    </location>
</feature>
<feature type="sequence variant" id="VAR_025002" description="Causes alpha-thalassemia; dbSNP:rs281864543." evidence="8">
    <original>R</original>
    <variation>K</variation>
    <location>
        <position position="32"/>
    </location>
</feature>
<feature type="sequence variant" id="VAR_002752" description="In Prato; unstable; dbSNP:rs111033606." evidence="55">
    <original>R</original>
    <variation>S</variation>
    <location>
        <position position="32"/>
    </location>
</feature>
<feature type="sequence variant" id="VAR_002753" description="In Queens/Ogi; dbSNP:rs281864825.">
    <original>L</original>
    <variation>R</variation>
    <location>
        <position position="35"/>
    </location>
</feature>
<feature type="sequence variant" id="VAR_002755" description="In Catonsville." evidence="92">
    <original>P</original>
    <variation>PE</variation>
    <location>
        <position position="38"/>
    </location>
</feature>
<feature type="sequence variant" id="VAR_002754" description="In Bourmedes; dbSNP:rs281864826.">
    <original>P</original>
    <variation>R</variation>
    <location>
        <position position="38"/>
    </location>
</feature>
<feature type="sequence variant" id="VAR_002756" description="In Kanagawa; O(2) affinity up; dbSNP:rs281864828." evidence="25">
    <original>K</original>
    <variation>M</variation>
    <location>
        <position position="41"/>
    </location>
</feature>
<feature type="sequence variant" id="VAR_002757" description="In Miyano; O(2) affinity up; dbSNP:rs281860623." evidence="38">
    <original>T</original>
    <variation>S</variation>
    <location>
        <position position="42"/>
    </location>
</feature>
<feature type="sequence variant" id="VAR_002758" description="In Hirosaki; unstable; dbSNP:rs41491146." evidence="9">
    <original>F</original>
    <variation>L</variation>
    <location>
        <position position="44"/>
    </location>
</feature>
<feature type="sequence variant" id="VAR_002759" description="In Milledgeville; O(2) affinity up; dbSNP:rs33978134 and dbSNP:rs281864830." evidence="76">
    <original>P</original>
    <variation>L</variation>
    <location>
        <position position="45"/>
    </location>
</feature>
<feature type="sequence variant" id="VAR_002760" description="In Kawachi; O(2) affinity up; dbSNP:rs281864830." evidence="73">
    <original>P</original>
    <variation>R</variation>
    <location>
        <position position="45"/>
    </location>
</feature>
<feature type="sequence variant" id="VAR_002761" description="In Bari; dbSNP:rs281860624.">
    <original>H</original>
    <variation>Q</variation>
    <location>
        <position position="46"/>
    </location>
</feature>
<feature type="sequence variant" id="VAR_002762" description="In Fort de France; O(2) affinity up; dbSNP:rs281864831." evidence="40">
    <original>H</original>
    <variation>R</variation>
    <location>
        <position position="46"/>
    </location>
</feature>
<feature type="sequence variant" id="VAR_002763" description="In Cordele; unstable; dbSNP:rs281864833." evidence="66">
    <original>D</original>
    <variation>A</variation>
    <location>
        <position position="48"/>
    </location>
</feature>
<feature type="sequence variant" id="VAR_002764" description="In Kokura; also in Umi/Michigan; unstable; dbSNP:rs281864833." evidence="74">
    <original>D</original>
    <variation>G</variation>
    <location>
        <position position="48"/>
    </location>
</feature>
<feature type="sequence variant" id="VAR_002765" description="In Hasharon/Sinai; unstable; dbSNP:rs281864834." evidence="62">
    <original>D</original>
    <variation>H</variation>
    <location>
        <position position="48"/>
    </location>
</feature>
<feature type="sequence variant" id="VAR_002766" description="In Kurdistan; dbSNP:rs281864834." evidence="88">
    <original>D</original>
    <variation>Y</variation>
    <location>
        <position position="48"/>
    </location>
</feature>
<feature type="sequence variant" id="VAR_002767" description="In Montgomery; dbSNP:rs41392146." evidence="7">
    <original>L</original>
    <variation>R</variation>
    <location>
        <position position="49"/>
    </location>
</feature>
<feature type="sequence variant" id="VAR_002768" description="In Savaria; dbSNP:rs41518249.">
    <original>S</original>
    <variation>R</variation>
    <location>
        <position position="50"/>
    </location>
</feature>
<feature type="sequence variant" id="VAR_002769" description="In Aichi; slightly unstable; dbSNP:rs281864835." evidence="68">
    <original>H</original>
    <variation>R</variation>
    <location>
        <position position="51"/>
    </location>
</feature>
<feature type="sequence variant" id="VAR_002770" description="In J-Abidjan; dbSNP:rs281864836.">
    <original>G</original>
    <variation>D</variation>
    <location>
        <position position="52"/>
    </location>
</feature>
<feature type="sequence variant" id="VAR_002771" description="In Russ; dbSNP:rs281864837.">
    <original>G</original>
    <variation>R</variation>
    <location>
        <position position="52"/>
    </location>
</feature>
<feature type="sequence variant" id="VAR_002772" description="In J-Rovigo; unstable; dbSNP:rs281864838." evidence="54">
    <original>A</original>
    <variation>D</variation>
    <location>
        <position position="54"/>
    </location>
</feature>
<feature type="sequence variant" id="VAR_002773" description="In Hikoshima/Shimonoseki; dbSNP:rs281864839.">
    <original>Q</original>
    <variation>R</variation>
    <location>
        <position position="55"/>
    </location>
</feature>
<feature type="sequence variant" id="VAR_002774" description="In Port Huron; dbSNP:rs281864841." evidence="29">
    <original>K</original>
    <variation>R</variation>
    <location>
        <position position="57"/>
    </location>
</feature>
<feature type="sequence variant" id="VAR_002775" description="In Thailand; dbSNP:rs281864841.">
    <original>K</original>
    <variation>T</variation>
    <location>
        <position position="57"/>
    </location>
</feature>
<feature type="sequence variant" id="VAR_002776" description="In L-Persian Gulf; dbSNP:rs281864843.">
    <original>G</original>
    <variation>R</variation>
    <location>
        <position position="58"/>
    </location>
</feature>
<feature type="sequence variant" id="VAR_025388" description="In Boghe; dbSNP:rs41378349." evidence="5">
    <original>H</original>
    <variation>Q</variation>
    <location>
        <position position="59"/>
    </location>
</feature>
<feature type="sequence variant" id="VAR_002777" description="In M-Boston/M-Osaka; O(2) affinity down; dbSNP:rs281864845." evidence="48">
    <original>H</original>
    <variation>Y</variation>
    <location>
        <position position="59"/>
    </location>
</feature>
<feature type="sequence variant" id="VAR_002778" description="In Adana; unstable; causes alpha-thalassemia; dbSNP:rs28928878." evidence="89">
    <original>G</original>
    <variation>D</variation>
    <location>
        <position position="60"/>
    </location>
</feature>
<feature type="sequence variant" id="VAR_002779" description="In Tottori; unstable; dbSNP:rs281864846." evidence="78">
    <original>G</original>
    <variation>V</variation>
    <location>
        <position position="60"/>
    </location>
</feature>
<feature type="sequence variant" id="VAR_002780" description="In Zambia; dbSNP:rs281860659 and dbSNP:rs111033598.">
    <original>K</original>
    <variation>N</variation>
    <location>
        <position position="61"/>
    </location>
</feature>
<feature type="sequence variant" id="VAR_002781" description="In Clinic; unstable; causes alpha-thalassemia." evidence="3">
    <location>
        <position position="61"/>
    </location>
</feature>
<feature type="sequence variant" id="VAR_002782" description="In J-Buda; dbSNP:rs33985574." evidence="103">
    <original>K</original>
    <variation>N</variation>
    <location>
        <position position="62"/>
    </location>
</feature>
<feature type="sequence variant" id="VAR_002783" description="In J-Anatolia; dbSNP:rs281865558.">
    <original>K</original>
    <variation>T</variation>
    <location>
        <position position="62"/>
    </location>
</feature>
<feature type="sequence variant" id="VAR_002784" description="In Evans; unstable; dbSNP:rs41515649." evidence="37 101">
    <original>V</original>
    <variation>M</variation>
    <location>
        <position position="63"/>
    </location>
</feature>
<feature type="sequence variant" id="VAR_066401" description="In HBH; hemoglobin Aghia Sophia." evidence="4">
    <location>
        <position position="63"/>
    </location>
</feature>
<feature type="sequence variant" id="VAR_002785" description="In Pontoise; unstable; dbSNP:rs34502246." evidence="94">
    <original>A</original>
    <variation>D</variation>
    <location>
        <position position="64"/>
    </location>
</feature>
<feature type="sequence variant" id="VAR_002786" description="In Persepolis; dbSNP:rs33984024.">
    <original>D</original>
    <variation>Y</variation>
    <location>
        <position position="65"/>
    </location>
</feature>
<feature type="sequence variant" id="VAR_002787" description="In G-Philadelphia; dbSNP:rs1060339." evidence="102">
    <original>N</original>
    <variation>K</variation>
    <location>
        <position position="69"/>
    </location>
</feature>
<feature type="sequence variant" id="VAR_002788" description="In J-Habana; dbSNP:rs281864853.">
    <original>A</original>
    <variation>E</variation>
    <location>
        <position position="72"/>
    </location>
</feature>
<feature type="sequence variant" id="VAR_002789" description="In Ozieri; dbSNP:rs281864853.">
    <original>A</original>
    <variation>V</variation>
    <location>
        <position position="72"/>
    </location>
</feature>
<feature type="sequence variant" id="VAR_002790" description="In Daneskgah-Teheran; dbSNP:rs281864854.">
    <original>H</original>
    <variation>R</variation>
    <location>
        <position position="73"/>
    </location>
</feature>
<feature type="sequence variant" id="VAR_002791" description="In Lille; dbSNP:rs281864856.">
    <original>D</original>
    <variation>A</variation>
    <location>
        <position position="75"/>
    </location>
</feature>
<feature type="sequence variant" id="VAR_002792" description="In Chapel Hill; dbSNP:rs33921047.">
    <original>D</original>
    <variation>G</variation>
    <location>
        <position position="75"/>
    </location>
</feature>
<feature type="sequence variant" id="VAR_002793" description="In G-Pest; dbSNP:rs281864857." evidence="103">
    <original>D</original>
    <variation>N</variation>
    <location>
        <position position="75"/>
    </location>
</feature>
<feature type="sequence variant" id="VAR_002794" description="In Duan; dbSNP:rs33991223.">
    <original>D</original>
    <variation>A</variation>
    <location>
        <position position="76"/>
    </location>
</feature>
<feature type="sequence variant" id="VAR_002795" description="In Q-Iran; dbSNP:rs281864858.">
    <original>D</original>
    <variation>H</variation>
    <location>
        <position position="76"/>
    </location>
</feature>
<feature type="sequence variant" id="VAR_002796" description="In Noko; dbSNP:rs33969953.">
    <original>M</original>
    <variation>K</variation>
    <location>
        <position position="77"/>
    </location>
</feature>
<feature type="sequence variant" id="VAR_002797" description="In Aztec; dbSNP:rs33969953.">
    <original>M</original>
    <variation>T</variation>
    <location>
        <position position="77"/>
    </location>
</feature>
<feature type="sequence variant" id="VAR_002798" description="In Guizhou; dbSNP:rs281864861.">
    <original>P</original>
    <variation>R</variation>
    <location>
        <position position="78"/>
    </location>
</feature>
<feature type="sequence variant" id="VAR_002799" description="In Davenport; dbSNP:rs111033602." evidence="34">
    <original>N</original>
    <variation>H</variation>
    <location>
        <position position="79"/>
    </location>
</feature>
<feature type="sequence variant" id="VAR_002800" description="In Stanleyville-2; dbSNP:rs281860607.">
    <original>N</original>
    <variation>K</variation>
    <location>
        <position position="79"/>
    </location>
</feature>
<feature type="sequence variant" id="VAR_012662" description="In Singapore; dbSNP:rs281860603.">
    <original>A</original>
    <variation>G</variation>
    <location>
        <position position="80"/>
    </location>
</feature>
<feature type="sequence variant" id="VAR_002801" description="In Ann Arbor; unstable; dbSNP:rs281864863." evidence="56">
    <original>L</original>
    <variation>R</variation>
    <location>
        <position position="81"/>
    </location>
</feature>
<feature type="sequence variant" id="VAR_002802" description="In Nigeria; dbSNP:rs281864864.">
    <original>S</original>
    <variation>C</variation>
    <location>
        <position position="82"/>
    </location>
</feature>
<feature type="sequence variant" id="VAR_002803" description="In Garden State; dbSNP:rs281864865.">
    <original>A</original>
    <variation>D</variation>
    <location>
        <position position="83"/>
    </location>
</feature>
<feature type="sequence variant" id="VAR_002804" description="In Etobicoke; O(2) affinity up; dbSNP:rs281860612." evidence="71">
    <original>S</original>
    <variation>R</variation>
    <location>
        <position position="85"/>
    </location>
</feature>
<feature type="sequence variant" id="VAR_002805" description="In Inkster; O(2) affinity up; dbSNP:rs41331747." evidence="47">
    <original>D</original>
    <variation>V</variation>
    <location>
        <position position="86"/>
    </location>
</feature>
<feature type="sequence variant" id="VAR_002806" description="In Atago; O(2) affinity up; dbSNP:rs281864777." evidence="59">
    <original>D</original>
    <variation>Y</variation>
    <location>
        <position position="86"/>
    </location>
</feature>
<feature type="sequence variant" id="VAR_002807" description="In Moabit; unstable; dbSNP:rs281864866." evidence="6">
    <original>L</original>
    <variation>R</variation>
    <location>
        <position position="87"/>
    </location>
</feature>
<feature type="sequence variant" id="VAR_002808" description="In Auckland; unstable; dbSNP:rs281864868." evidence="98">
    <original>H</original>
    <variation>N</variation>
    <location>
        <position position="88"/>
    </location>
</feature>
<feature type="sequence variant" id="VAR_002809" description="In Iwata; unstable; dbSNP:rs281864867.">
    <original>H</original>
    <variation>R</variation>
    <location>
        <position position="88"/>
    </location>
</feature>
<feature type="sequence variant" id="VAR_002810" description="In Loire; O(2) affinity up; dbSNP:rs35239527." evidence="43">
    <original>A</original>
    <variation>S</variation>
    <location>
        <position position="89"/>
    </location>
</feature>
<feature type="sequence variant" id="VAR_002811" description="In Handa; O(2) affinity up; dbSNP:rs281864873." evidence="70">
    <original>K</original>
    <variation>M</variation>
    <location>
        <position position="91"/>
    </location>
</feature>
<feature type="sequence variant" id="VAR_049272" description="In dbSNP:rs281864494.">
    <original>L</original>
    <variation>F</variation>
    <location>
        <position position="92"/>
    </location>
</feature>
<feature type="sequence variant" id="VAR_002812" description="In Port Phillip; unstable; dbSNP:rs281864874." evidence="97">
    <original>L</original>
    <variation>P</variation>
    <location>
        <position position="92"/>
    </location>
</feature>
<feature type="sequence variant" id="VAR_002813" description="In J-Cape Town; O(2) affinity up; dbSNP:rs281864875." evidence="58 63">
    <original>R</original>
    <variation>Q</variation>
    <location>
        <position position="93"/>
    </location>
</feature>
<feature type="sequence variant" id="VAR_020775" description="In Cemenelum; O(2) affinity up; dbSNP:rs281864876." evidence="87">
    <original>R</original>
    <variation>W</variation>
    <location>
        <position position="93"/>
    </location>
</feature>
<feature type="sequence variant" id="VAR_025389" description="In Bassett; markedly reduced oxygen affinity; dbSNP:rs281864879." evidence="22">
    <original>D</original>
    <variation>A</variation>
    <location>
        <position position="95"/>
    </location>
</feature>
<feature type="sequence variant" id="VAR_002814" description="In Setif; unstable; dbSNP:rs281864878." evidence="50">
    <original>D</original>
    <variation>Y</variation>
    <location>
        <position position="95"/>
    </location>
</feature>
<feature type="sequence variant" id="VAR_002815" description="In Denmark Hill; O(2) affinity up; dbSNP:rs281864881." evidence="57">
    <original>P</original>
    <variation>A</variation>
    <location>
        <position position="96"/>
    </location>
</feature>
<feature type="sequence variant" id="VAR_002816" description="In Godavari; O(2) affinity up; dbSNP:rs281864881." evidence="100">
    <original>P</original>
    <variation>T</variation>
    <location>
        <position position="96"/>
    </location>
</feature>
<feature type="sequence variant" id="VAR_002817" description="In Dallas; O(2) affinity up; dbSNP:rs41338947." evidence="13">
    <original>N</original>
    <variation>K</variation>
    <location>
        <position position="98"/>
    </location>
</feature>
<feature type="sequence variant" id="VAR_002818" description="In Turriff; dbSNP:rs281864882." evidence="26">
    <original>K</original>
    <variation>E</variation>
    <location>
        <position position="100"/>
    </location>
</feature>
<feature type="sequence variant" id="VAR_002819" description="In Manitoba; slightly unstable; dbSNP:rs41344646." evidence="67">
    <original>S</original>
    <variation>R</variation>
    <location>
        <position position="103"/>
    </location>
</feature>
<feature type="sequence variant" id="VAR_002820" description="In Contaldo; unstable; dbSNP:rs63750752." evidence="67">
    <original>H</original>
    <variation>R</variation>
    <location>
        <position position="104"/>
    </location>
</feature>
<feature type="sequence variant" id="VAR_025390" description="In Charolles; dbSNP:rs63750073." evidence="5">
    <original>H</original>
    <variation>Y</variation>
    <location>
        <position position="104"/>
    </location>
</feature>
<feature type="sequence variant" id="VAR_002821" description="In Suan-Dok; unstable; causes alpha-thalassemia; dbSNP:rs41479844." evidence="53">
    <original>L</original>
    <variation>R</variation>
    <location>
        <position position="110"/>
    </location>
</feature>
<feature type="sequence variant" id="VAR_002822" description="In Petah Tikva; unstable; causes alpha-thalassemia; dbSNP:rs28928889." evidence="83">
    <original>A</original>
    <variation>D</variation>
    <location>
        <position position="111"/>
    </location>
</feature>
<feature type="sequence variant" id="VAR_002823" description="In Hopkins-II; unstable; dbSNP:rs281864885." evidence="60">
    <original>H</original>
    <variation>D</variation>
    <location>
        <position position="113"/>
    </location>
</feature>
<feature type="sequence variant" id="VAR_002824" description="In Twin Peaks; dbSNP:rs281860618.">
    <original>L</original>
    <variation>H</variation>
    <location>
        <position position="114"/>
    </location>
</feature>
<feature type="sequence variant" id="VAR_002825" description="In Nouakchott; dbSNP:rs267607269.">
    <original>P</original>
    <variation>L</variation>
    <location>
        <position position="115"/>
    </location>
</feature>
<feature type="sequence variant" id="VAR_002826" description="In Chiapas; dbSNP:rs267607269.">
    <original>P</original>
    <variation>R</variation>
    <location>
        <position position="115"/>
    </location>
</feature>
<feature type="sequence variant" id="VAR_002827" description="In Melusine; dbSNP:rs281864887." evidence="90">
    <original>P</original>
    <variation>S</variation>
    <location>
        <position position="115"/>
    </location>
</feature>
<feature type="sequence variant" id="VAR_002828" description="In J-Tongariki; dbSNP:rs281864888.">
    <original>A</original>
    <variation>D</variation>
    <location>
        <position position="116"/>
    </location>
</feature>
<feature type="sequence variant" id="VAR_002829" description="In Ube-4; dbSNP:rs281864946.">
    <original>E</original>
    <variation>A</variation>
    <location>
        <position position="117"/>
    </location>
</feature>
<feature type="sequence variant" id="VAR_002830" description="In Zaire." evidence="21">
    <original>E</original>
    <variation>EHLPAE</variation>
    <location>
        <position position="117"/>
    </location>
</feature>
<feature type="sequence variant" id="VAR_002831" description="In Phnom Penh." evidence="99">
    <original>F</original>
    <variation>FI</variation>
    <location>
        <position position="118"/>
    </location>
</feature>
<feature type="sequence variant" id="VAR_002832" description="In Grady." evidence="49">
    <original>T</original>
    <variation>TEFT</variation>
    <location>
        <position position="119"/>
    </location>
</feature>
<feature type="sequence variant" id="VAR_002833" description="In J-Meerut/J-Birmingham; dbSNP:rs36075744." evidence="85">
    <original>A</original>
    <variation>E</variation>
    <location>
        <position position="121"/>
    </location>
</feature>
<feature type="sequence variant" id="VAR_002834" description="In Owari; dbSNP:rs35187567.">
    <original>V</original>
    <variation>M</variation>
    <location>
        <position position="122"/>
    </location>
</feature>
<feature type="sequence variant" id="VAR_002835" description="In Westmead; dbSNP:rs41479347." evidence="28">
    <original>H</original>
    <variation>Q</variation>
    <location>
        <position position="123"/>
    </location>
</feature>
<feature type="sequence variant" id="VAR_002836" description="In Quong Sze; causes alpha-thalassemia; dbSNP:rs41397847.">
    <original>L</original>
    <variation>P</variation>
    <location>
        <position position="126"/>
    </location>
</feature>
<feature type="sequence variant" id="VAR_025391" description="In Plasencia; family with moderate microcytosis and hypochromia; dbSNP:rs41397847." evidence="23">
    <original>L</original>
    <variation>R</variation>
    <location>
        <position position="126"/>
    </location>
</feature>
<feature type="sequence variant" id="VAR_025392" description="In West One; dbSNP:rs33957766." evidence="20">
    <original>D</original>
    <variation>G</variation>
    <location>
        <position position="127"/>
    </location>
</feature>
<feature type="sequence variant" id="VAR_002837" description="In Fukutomi; O(2) affinity up; dbSNP:rs33957766." evidence="32">
    <original>D</original>
    <variation>V</variation>
    <location>
        <position position="127"/>
    </location>
</feature>
<feature type="sequence variant" id="VAR_002838" description="In Montefiore; O(2) affinity up; dbSNP:rs33933481." evidence="96">
    <original>D</original>
    <variation>Y</variation>
    <location>
        <position position="127"/>
    </location>
</feature>
<feature type="sequence variant" id="VAR_002839" description="In Jackson; dbSNP:rs33972894.">
    <original>K</original>
    <variation>N</variation>
    <location>
        <position position="128"/>
    </location>
</feature>
<feature type="sequence variant" id="VAR_002840" description="In Tunis-Bizerte; unstable; causes alpha-thalassemia; dbSNP:rs281864889." evidence="86">
    <original>L</original>
    <variation>P</variation>
    <location>
        <position position="130"/>
    </location>
</feature>
<feature type="sequence variant" id="VAR_002842" description="In Yuda; O(2) affinity down; dbSNP:rs41528545." evidence="18">
    <original>A</original>
    <variation>D</variation>
    <location>
        <position position="131"/>
    </location>
</feature>
<feature type="sequence variant" id="VAR_002841" description="In Sun Prairie; unstable; dbSNP:rs41529844." evidence="31">
    <original>A</original>
    <variation>P</variation>
    <location>
        <position position="131"/>
    </location>
</feature>
<feature type="sequence variant" id="VAR_002843" description="In Questembert; highly unstable; causes alpha-thalassemia; dbSNP:rs63751417." evidence="93">
    <original>S</original>
    <variation>P</variation>
    <location>
        <position position="132"/>
    </location>
</feature>
<feature type="sequence variant" id="VAR_002844" description="In Val de Marne; O(2) affinity up; dbSNP:rs56308100 and dbSNP:rs55948437." evidence="91">
    <original>S</original>
    <variation>R</variation>
    <location>
        <position position="134"/>
    </location>
</feature>
<feature type="sequence variant" id="VAR_002845" description="In Pavie; dbSNP:rs63749809.">
    <original>V</original>
    <variation>E</variation>
    <location>
        <position position="136"/>
    </location>
</feature>
<feature type="sequence variant" id="VAR_002846" description="In Chicago; dbSNP:rs41364652.">
    <original>L</original>
    <variation>M</variation>
    <location>
        <position position="137"/>
    </location>
</feature>
<feature type="sequence variant" id="VAR_002847" description="In Bibba; unstable; causes alpha-thalassemia; dbSNP:rs41469945." evidence="61">
    <original>L</original>
    <variation>P</variation>
    <location>
        <position position="137"/>
    </location>
</feature>
<feature type="sequence variant" id="VAR_035242" description="In Toyama; dbSNP:rs41469945." evidence="41">
    <original>L</original>
    <variation>R</variation>
    <location>
        <position position="137"/>
    </location>
</feature>
<feature type="sequence variant" id="VAR_002848" description="In Attleboro; O(2) affinity up; dbSNP:rs63750801." evidence="35">
    <original>S</original>
    <variation>P</variation>
    <location>
        <position position="139"/>
    </location>
</feature>
<feature type="sequence variant" id="VAR_002849" description="In Hanamaki; O(2) affinity up; dbSNP:rs41361546." evidence="27">
    <original>K</original>
    <variation>E</variation>
    <location>
        <position position="140"/>
    </location>
</feature>
<feature type="sequence variant" id="VAR_002850" description="In Tokoname; O(2) affinity up; dbSNP:rs56348461." evidence="64">
    <original>K</original>
    <variation>T</variation>
    <location>
        <position position="140"/>
    </location>
</feature>
<feature type="sequence variant" id="VAR_002851" description="In Rouen/Ethiopia; O(2) affinity up; dbSNP:rs55870409." evidence="14 19">
    <original>Y</original>
    <variation>H</variation>
    <location>
        <position position="141"/>
    </location>
</feature>
<feature type="sequence variant" id="VAR_002852" description="In Nunobiki; O(2) affinity up; dbSNP:rs63750134." evidence="46">
    <original>R</original>
    <variation>C</variation>
    <location>
        <position position="142"/>
    </location>
</feature>
<feature type="sequence variant" id="VAR_002854" description="In Suresnes; O(2) affinity up; dbSNP:rs33935328." evidence="80">
    <original>R</original>
    <variation>H</variation>
    <location>
        <position position="142"/>
    </location>
</feature>
<feature type="sequence variant" id="VAR_002853" description="In Legnano; O(2) affinity up; dbSNP:rs33935328." evidence="82">
    <original>R</original>
    <variation>L</variation>
    <location>
        <position position="142"/>
    </location>
</feature>
<feature type="sequence variant" id="VAR_002855" description="In Singapore; dbSNP:rs33935328.">
    <original>R</original>
    <variation>P</variation>
    <location>
        <position position="142"/>
    </location>
</feature>
<feature type="sequence conflict" description="In Ref. 13; BAD97112." evidence="105" ref="13">
    <original>N</original>
    <variation>H</variation>
    <location>
        <position position="10"/>
    </location>
</feature>
<feature type="helix" evidence="111">
    <location>
        <begin position="5"/>
        <end position="18"/>
    </location>
</feature>
<feature type="helix" evidence="111">
    <location>
        <begin position="19"/>
        <end position="21"/>
    </location>
</feature>
<feature type="helix" evidence="111">
    <location>
        <begin position="22"/>
        <end position="36"/>
    </location>
</feature>
<feature type="helix" evidence="111">
    <location>
        <begin position="38"/>
        <end position="43"/>
    </location>
</feature>
<feature type="strand" evidence="109">
    <location>
        <begin position="45"/>
        <end position="47"/>
    </location>
</feature>
<feature type="strand" evidence="113">
    <location>
        <begin position="50"/>
        <end position="52"/>
    </location>
</feature>
<feature type="helix" evidence="111">
    <location>
        <begin position="54"/>
        <end position="72"/>
    </location>
</feature>
<feature type="turn" evidence="111">
    <location>
        <begin position="73"/>
        <end position="75"/>
    </location>
</feature>
<feature type="helix" evidence="111">
    <location>
        <begin position="77"/>
        <end position="80"/>
    </location>
</feature>
<feature type="helix" evidence="111">
    <location>
        <begin position="82"/>
        <end position="90"/>
    </location>
</feature>
<feature type="turn" evidence="110">
    <location>
        <begin position="91"/>
        <end position="93"/>
    </location>
</feature>
<feature type="helix" evidence="111">
    <location>
        <begin position="97"/>
        <end position="113"/>
    </location>
</feature>
<feature type="turn" evidence="111">
    <location>
        <begin position="115"/>
        <end position="117"/>
    </location>
</feature>
<feature type="helix" evidence="111">
    <location>
        <begin position="120"/>
        <end position="138"/>
    </location>
</feature>
<feature type="helix" evidence="112">
    <location>
        <begin position="139"/>
        <end position="141"/>
    </location>
</feature>
<name>HBA_HUMAN</name>
<dbReference type="EMBL" id="J00153">
    <property type="protein sequence ID" value="AAB59407.1"/>
    <property type="molecule type" value="Genomic_DNA"/>
</dbReference>
<dbReference type="EMBL" id="J00153">
    <property type="protein sequence ID" value="AAB59408.1"/>
    <property type="molecule type" value="Genomic_DNA"/>
</dbReference>
<dbReference type="EMBL" id="V00491">
    <property type="protein sequence ID" value="CAA23750.1"/>
    <property type="molecule type" value="Genomic_DNA"/>
</dbReference>
<dbReference type="EMBL" id="V00493">
    <property type="protein sequence ID" value="CAA23752.1"/>
    <property type="molecule type" value="mRNA"/>
</dbReference>
<dbReference type="EMBL" id="V00488">
    <property type="protein sequence ID" value="CAA23748.1"/>
    <property type="molecule type" value="Genomic_DNA"/>
</dbReference>
<dbReference type="EMBL" id="V00516">
    <property type="protein sequence ID" value="CAA23774.1"/>
    <property type="molecule type" value="Genomic_DNA"/>
</dbReference>
<dbReference type="EMBL" id="AF230076">
    <property type="protein sequence ID" value="AAF72612.1"/>
    <property type="molecule type" value="Genomic_DNA"/>
</dbReference>
<dbReference type="EMBL" id="AF525460">
    <property type="protein sequence ID" value="AAM83102.1"/>
    <property type="molecule type" value="Genomic_DNA"/>
</dbReference>
<dbReference type="EMBL" id="DQ431198">
    <property type="protein sequence ID" value="ABD95910.1"/>
    <property type="molecule type" value="Genomic_DNA"/>
</dbReference>
<dbReference type="EMBL" id="DQ431198">
    <property type="protein sequence ID" value="ABD95911.1"/>
    <property type="molecule type" value="Genomic_DNA"/>
</dbReference>
<dbReference type="EMBL" id="AF097635">
    <property type="protein sequence ID" value="AAC72839.1"/>
    <property type="molecule type" value="mRNA"/>
</dbReference>
<dbReference type="EMBL" id="AF105974">
    <property type="protein sequence ID" value="AAC97373.1"/>
    <property type="molecule type" value="mRNA"/>
</dbReference>
<dbReference type="EMBL" id="AF349571">
    <property type="protein sequence ID" value="AAK37554.1"/>
    <property type="molecule type" value="mRNA"/>
</dbReference>
<dbReference type="EMBL" id="AF536204">
    <property type="protein sequence ID" value="AAN04486.1"/>
    <property type="molecule type" value="Genomic_DNA"/>
</dbReference>
<dbReference type="EMBL" id="DQ499017">
    <property type="protein sequence ID" value="ABF56144.1"/>
    <property type="molecule type" value="Genomic_DNA"/>
</dbReference>
<dbReference type="EMBL" id="DQ499018">
    <property type="protein sequence ID" value="ABF56145.1"/>
    <property type="molecule type" value="Genomic_DNA"/>
</dbReference>
<dbReference type="EMBL" id="AK223392">
    <property type="protein sequence ID" value="BAD97112.1"/>
    <property type="status" value="ALT_INIT"/>
    <property type="molecule type" value="mRNA"/>
</dbReference>
<dbReference type="EMBL" id="AE006462">
    <property type="protein sequence ID" value="AAK61215.1"/>
    <property type="molecule type" value="Genomic_DNA"/>
</dbReference>
<dbReference type="EMBL" id="AE006462">
    <property type="protein sequence ID" value="AAK61216.1"/>
    <property type="molecule type" value="Genomic_DNA"/>
</dbReference>
<dbReference type="EMBL" id="Z84721">
    <property type="protein sequence ID" value="CAB06554.1"/>
    <property type="molecule type" value="Genomic_DNA"/>
</dbReference>
<dbReference type="EMBL" id="Z84721">
    <property type="protein sequence ID" value="CAB06555.1"/>
    <property type="molecule type" value="Genomic_DNA"/>
</dbReference>
<dbReference type="EMBL" id="BC005931">
    <property type="protein sequence ID" value="AAH05931.1"/>
    <property type="molecule type" value="mRNA"/>
</dbReference>
<dbReference type="EMBL" id="BC008572">
    <property type="protein sequence ID" value="AAH08572.1"/>
    <property type="molecule type" value="mRNA"/>
</dbReference>
<dbReference type="EMBL" id="BC032122">
    <property type="protein sequence ID" value="AAH32122.1"/>
    <property type="molecule type" value="mRNA"/>
</dbReference>
<dbReference type="EMBL" id="BC050661">
    <property type="protein sequence ID" value="AAH50661.1"/>
    <property type="molecule type" value="mRNA"/>
</dbReference>
<dbReference type="EMBL" id="BC101846">
    <property type="protein sequence ID" value="AAI01847.1"/>
    <property type="molecule type" value="mRNA"/>
</dbReference>
<dbReference type="EMBL" id="BC101848">
    <property type="protein sequence ID" value="AAI01849.1"/>
    <property type="molecule type" value="mRNA"/>
</dbReference>
<dbReference type="CCDS" id="CCDS10398.1"/>
<dbReference type="CCDS" id="CCDS10399.1"/>
<dbReference type="PIR" id="A90807">
    <property type="entry name" value="HAHU"/>
</dbReference>
<dbReference type="PIR" id="C93303">
    <property type="entry name" value="HACZP"/>
</dbReference>
<dbReference type="PIR" id="I58217">
    <property type="entry name" value="HACZ"/>
</dbReference>
<dbReference type="RefSeq" id="NP_000508.1">
    <property type="nucleotide sequence ID" value="NM_000517.4"/>
</dbReference>
<dbReference type="RefSeq" id="NP_000549.1">
    <property type="nucleotide sequence ID" value="NM_000558.5"/>
</dbReference>
<dbReference type="PDB" id="1A00">
    <property type="method" value="X-ray"/>
    <property type="resolution" value="2.00 A"/>
    <property type="chains" value="A/C=2-142"/>
</dbReference>
<dbReference type="PDB" id="1A01">
    <property type="method" value="X-ray"/>
    <property type="resolution" value="1.80 A"/>
    <property type="chains" value="A/C=2-142"/>
</dbReference>
<dbReference type="PDB" id="1A0U">
    <property type="method" value="X-ray"/>
    <property type="resolution" value="2.14 A"/>
    <property type="chains" value="A/C=2-142"/>
</dbReference>
<dbReference type="PDB" id="1A0Z">
    <property type="method" value="X-ray"/>
    <property type="resolution" value="2.00 A"/>
    <property type="chains" value="A/C=2-142"/>
</dbReference>
<dbReference type="PDB" id="1A3N">
    <property type="method" value="X-ray"/>
    <property type="resolution" value="1.80 A"/>
    <property type="chains" value="A/C=2-142"/>
</dbReference>
<dbReference type="PDB" id="1A3O">
    <property type="method" value="X-ray"/>
    <property type="resolution" value="1.80 A"/>
    <property type="chains" value="A/C=2-142"/>
</dbReference>
<dbReference type="PDB" id="1A9W">
    <property type="method" value="X-ray"/>
    <property type="resolution" value="2.90 A"/>
    <property type="chains" value="A/C=2-142"/>
</dbReference>
<dbReference type="PDB" id="1ABW">
    <property type="method" value="X-ray"/>
    <property type="resolution" value="2.00 A"/>
    <property type="chains" value="A=1-142"/>
</dbReference>
<dbReference type="PDB" id="1ABY">
    <property type="method" value="X-ray"/>
    <property type="resolution" value="2.60 A"/>
    <property type="chains" value="A=1-142"/>
</dbReference>
<dbReference type="PDB" id="1AJ9">
    <property type="method" value="X-ray"/>
    <property type="resolution" value="2.20 A"/>
    <property type="chains" value="A=2-142"/>
</dbReference>
<dbReference type="PDB" id="1B86">
    <property type="method" value="X-ray"/>
    <property type="resolution" value="2.50 A"/>
    <property type="chains" value="A/C=2-142"/>
</dbReference>
<dbReference type="PDB" id="1BAB">
    <property type="method" value="X-ray"/>
    <property type="resolution" value="1.50 A"/>
    <property type="chains" value="A/C=1-142"/>
</dbReference>
<dbReference type="PDB" id="1BBB">
    <property type="method" value="X-ray"/>
    <property type="resolution" value="1.70 A"/>
    <property type="chains" value="A/C=2-142"/>
</dbReference>
<dbReference type="PDB" id="1BIJ">
    <property type="method" value="X-ray"/>
    <property type="resolution" value="2.30 A"/>
    <property type="chains" value="A/C=2-142"/>
</dbReference>
<dbReference type="PDB" id="1BUW">
    <property type="method" value="X-ray"/>
    <property type="resolution" value="1.90 A"/>
    <property type="chains" value="A/C=2-142"/>
</dbReference>
<dbReference type="PDB" id="1BZ0">
    <property type="method" value="X-ray"/>
    <property type="resolution" value="1.50 A"/>
    <property type="chains" value="A/C=2-142"/>
</dbReference>
<dbReference type="PDB" id="1BZ1">
    <property type="method" value="X-ray"/>
    <property type="resolution" value="1.59 A"/>
    <property type="chains" value="A/C=1-142"/>
</dbReference>
<dbReference type="PDB" id="1BZZ">
    <property type="method" value="X-ray"/>
    <property type="resolution" value="1.59 A"/>
    <property type="chains" value="A/C=2-142"/>
</dbReference>
<dbReference type="PDB" id="1C7B">
    <property type="method" value="X-ray"/>
    <property type="resolution" value="1.80 A"/>
    <property type="chains" value="A/C=2-142"/>
</dbReference>
<dbReference type="PDB" id="1C7C">
    <property type="method" value="X-ray"/>
    <property type="resolution" value="1.80 A"/>
    <property type="chains" value="A=2-142"/>
</dbReference>
<dbReference type="PDB" id="1C7D">
    <property type="method" value="X-ray"/>
    <property type="resolution" value="1.80 A"/>
    <property type="chains" value="A=2-142"/>
</dbReference>
<dbReference type="PDB" id="1CLS">
    <property type="method" value="X-ray"/>
    <property type="resolution" value="1.90 A"/>
    <property type="chains" value="A/C=2-142"/>
</dbReference>
<dbReference type="PDB" id="1CMY">
    <property type="method" value="X-ray"/>
    <property type="resolution" value="3.00 A"/>
    <property type="chains" value="A/C=2-142"/>
</dbReference>
<dbReference type="PDB" id="1COH">
    <property type="method" value="X-ray"/>
    <property type="resolution" value="2.90 A"/>
    <property type="chains" value="A/C=2-142"/>
</dbReference>
<dbReference type="PDB" id="1DKE">
    <property type="method" value="X-ray"/>
    <property type="resolution" value="2.10 A"/>
    <property type="chains" value="A/C=2-142"/>
</dbReference>
<dbReference type="PDB" id="1DXT">
    <property type="method" value="X-ray"/>
    <property type="resolution" value="1.70 A"/>
    <property type="chains" value="A/C=2-142"/>
</dbReference>
<dbReference type="PDB" id="1DXU">
    <property type="method" value="X-ray"/>
    <property type="resolution" value="1.70 A"/>
    <property type="chains" value="A/C=2-142"/>
</dbReference>
<dbReference type="PDB" id="1DXV">
    <property type="method" value="X-ray"/>
    <property type="resolution" value="1.70 A"/>
    <property type="chains" value="A/C=2-142"/>
</dbReference>
<dbReference type="PDB" id="1FDH">
    <property type="method" value="X-ray"/>
    <property type="resolution" value="2.50 A"/>
    <property type="chains" value="A/B=2-142"/>
</dbReference>
<dbReference type="PDB" id="1FN3">
    <property type="method" value="X-ray"/>
    <property type="resolution" value="2.48 A"/>
    <property type="chains" value="A/C=2-142"/>
</dbReference>
<dbReference type="PDB" id="1G9V">
    <property type="method" value="X-ray"/>
    <property type="resolution" value="1.85 A"/>
    <property type="chains" value="A/C=2-142"/>
</dbReference>
<dbReference type="PDB" id="1GBU">
    <property type="method" value="X-ray"/>
    <property type="resolution" value="1.80 A"/>
    <property type="chains" value="A/C=2-142"/>
</dbReference>
<dbReference type="PDB" id="1GBV">
    <property type="method" value="X-ray"/>
    <property type="resolution" value="2.00 A"/>
    <property type="chains" value="A/C=2-142"/>
</dbReference>
<dbReference type="PDB" id="1GLI">
    <property type="method" value="X-ray"/>
    <property type="resolution" value="2.50 A"/>
    <property type="chains" value="A/C=3-142"/>
</dbReference>
<dbReference type="PDB" id="1GZX">
    <property type="method" value="X-ray"/>
    <property type="resolution" value="2.10 A"/>
    <property type="chains" value="A/C=2-142"/>
</dbReference>
<dbReference type="PDB" id="1HAB">
    <property type="method" value="X-ray"/>
    <property type="resolution" value="2.30 A"/>
    <property type="chains" value="A/C=2-142"/>
</dbReference>
<dbReference type="PDB" id="1HAC">
    <property type="method" value="X-ray"/>
    <property type="resolution" value="2.60 A"/>
    <property type="chains" value="A/C=2-142"/>
</dbReference>
<dbReference type="PDB" id="1HBA">
    <property type="method" value="X-ray"/>
    <property type="resolution" value="2.10 A"/>
    <property type="chains" value="A/C=2-142"/>
</dbReference>
<dbReference type="PDB" id="1HBB">
    <property type="method" value="X-ray"/>
    <property type="resolution" value="1.90 A"/>
    <property type="chains" value="A/C=2-142"/>
</dbReference>
<dbReference type="PDB" id="1HBS">
    <property type="method" value="X-ray"/>
    <property type="resolution" value="3.00 A"/>
    <property type="chains" value="A/C/E/G=2-142"/>
</dbReference>
<dbReference type="PDB" id="1HCO">
    <property type="method" value="X-ray"/>
    <property type="resolution" value="2.70 A"/>
    <property type="chains" value="A=2-142"/>
</dbReference>
<dbReference type="PDB" id="1HDB">
    <property type="method" value="X-ray"/>
    <property type="resolution" value="2.20 A"/>
    <property type="chains" value="A/C=2-142"/>
</dbReference>
<dbReference type="PDB" id="1HGA">
    <property type="method" value="X-ray"/>
    <property type="resolution" value="2.10 A"/>
    <property type="chains" value="A/C=2-142"/>
</dbReference>
<dbReference type="PDB" id="1HGB">
    <property type="method" value="X-ray"/>
    <property type="resolution" value="2.10 A"/>
    <property type="chains" value="A/C=2-142"/>
</dbReference>
<dbReference type="PDB" id="1HGC">
    <property type="method" value="X-ray"/>
    <property type="resolution" value="2.10 A"/>
    <property type="chains" value="A/C=2-142"/>
</dbReference>
<dbReference type="PDB" id="1HHO">
    <property type="method" value="X-ray"/>
    <property type="resolution" value="2.10 A"/>
    <property type="chains" value="A=2-142"/>
</dbReference>
<dbReference type="PDB" id="1IRD">
    <property type="method" value="X-ray"/>
    <property type="resolution" value="1.25 A"/>
    <property type="chains" value="A=2-142"/>
</dbReference>
<dbReference type="PDB" id="1J3Y">
    <property type="method" value="X-ray"/>
    <property type="resolution" value="1.55 A"/>
    <property type="chains" value="A/C/E/G=2-142"/>
</dbReference>
<dbReference type="PDB" id="1J3Z">
    <property type="method" value="X-ray"/>
    <property type="resolution" value="1.60 A"/>
    <property type="chains" value="A/C/E/G=2-142"/>
</dbReference>
<dbReference type="PDB" id="1J40">
    <property type="method" value="X-ray"/>
    <property type="resolution" value="1.45 A"/>
    <property type="chains" value="A/C/E/G=2-142"/>
</dbReference>
<dbReference type="PDB" id="1J41">
    <property type="method" value="X-ray"/>
    <property type="resolution" value="1.45 A"/>
    <property type="chains" value="A/C/E/G=2-142"/>
</dbReference>
<dbReference type="PDB" id="1J7S">
    <property type="method" value="X-ray"/>
    <property type="resolution" value="2.20 A"/>
    <property type="chains" value="A/C=2-142"/>
</dbReference>
<dbReference type="PDB" id="1J7W">
    <property type="method" value="X-ray"/>
    <property type="resolution" value="2.00 A"/>
    <property type="chains" value="A/C=2-142"/>
</dbReference>
<dbReference type="PDB" id="1J7Y">
    <property type="method" value="X-ray"/>
    <property type="resolution" value="1.70 A"/>
    <property type="chains" value="A/C=2-142"/>
</dbReference>
<dbReference type="PDB" id="1JY7">
    <property type="method" value="X-ray"/>
    <property type="resolution" value="3.20 A"/>
    <property type="chains" value="A/C/P/R/U/W=2-142"/>
</dbReference>
<dbReference type="PDB" id="1K0Y">
    <property type="method" value="X-ray"/>
    <property type="resolution" value="1.87 A"/>
    <property type="chains" value="A/C=2-142"/>
</dbReference>
<dbReference type="PDB" id="1K1K">
    <property type="method" value="X-ray"/>
    <property type="resolution" value="2.00 A"/>
    <property type="chains" value="A=2-142"/>
</dbReference>
<dbReference type="PDB" id="1KD2">
    <property type="method" value="X-ray"/>
    <property type="resolution" value="1.87 A"/>
    <property type="chains" value="A/C=2-142"/>
</dbReference>
<dbReference type="PDB" id="1LFL">
    <property type="method" value="X-ray"/>
    <property type="resolution" value="2.70 A"/>
    <property type="chains" value="A/C/P/R=2-142"/>
</dbReference>
<dbReference type="PDB" id="1LFQ">
    <property type="method" value="X-ray"/>
    <property type="resolution" value="2.60 A"/>
    <property type="chains" value="A=2-142"/>
</dbReference>
<dbReference type="PDB" id="1LFT">
    <property type="method" value="X-ray"/>
    <property type="resolution" value="2.60 A"/>
    <property type="chains" value="A=2-142"/>
</dbReference>
<dbReference type="PDB" id="1LFV">
    <property type="method" value="X-ray"/>
    <property type="resolution" value="2.80 A"/>
    <property type="chains" value="A=2-142"/>
</dbReference>
<dbReference type="PDB" id="1LFY">
    <property type="method" value="X-ray"/>
    <property type="resolution" value="3.30 A"/>
    <property type="chains" value="A=2-142"/>
</dbReference>
<dbReference type="PDB" id="1LFZ">
    <property type="method" value="X-ray"/>
    <property type="resolution" value="3.10 A"/>
    <property type="chains" value="A=2-142"/>
</dbReference>
<dbReference type="PDB" id="1LJW">
    <property type="method" value="X-ray"/>
    <property type="resolution" value="2.16 A"/>
    <property type="chains" value="A=2-142"/>
</dbReference>
<dbReference type="PDB" id="1M9P">
    <property type="method" value="X-ray"/>
    <property type="resolution" value="2.10 A"/>
    <property type="chains" value="A/C=2-142"/>
</dbReference>
<dbReference type="PDB" id="1MKO">
    <property type="method" value="X-ray"/>
    <property type="resolution" value="2.18 A"/>
    <property type="chains" value="A/C=2-142"/>
</dbReference>
<dbReference type="PDB" id="1NEJ">
    <property type="method" value="X-ray"/>
    <property type="resolution" value="2.10 A"/>
    <property type="chains" value="A/C=2-142"/>
</dbReference>
<dbReference type="PDB" id="1NIH">
    <property type="method" value="X-ray"/>
    <property type="resolution" value="2.60 A"/>
    <property type="chains" value="A/C=2-142"/>
</dbReference>
<dbReference type="PDB" id="1NQP">
    <property type="method" value="X-ray"/>
    <property type="resolution" value="1.73 A"/>
    <property type="chains" value="A/C=2-142"/>
</dbReference>
<dbReference type="PDB" id="1O1I">
    <property type="method" value="X-ray"/>
    <property type="resolution" value="2.30 A"/>
    <property type="chains" value="A=2-142"/>
</dbReference>
<dbReference type="PDB" id="1O1J">
    <property type="method" value="X-ray"/>
    <property type="resolution" value="1.90 A"/>
    <property type="chains" value="A=2-142"/>
</dbReference>
<dbReference type="PDB" id="1O1K">
    <property type="method" value="X-ray"/>
    <property type="resolution" value="2.00 A"/>
    <property type="chains" value="A/C=3-142"/>
</dbReference>
<dbReference type="PDB" id="1O1L">
    <property type="method" value="X-ray"/>
    <property type="resolution" value="1.80 A"/>
    <property type="chains" value="A=2-142"/>
</dbReference>
<dbReference type="PDB" id="1O1M">
    <property type="method" value="X-ray"/>
    <property type="resolution" value="1.85 A"/>
    <property type="chains" value="A=2-142"/>
</dbReference>
<dbReference type="PDB" id="1O1N">
    <property type="method" value="X-ray"/>
    <property type="resolution" value="1.80 A"/>
    <property type="chains" value="A=2-142"/>
</dbReference>
<dbReference type="PDB" id="1O1O">
    <property type="method" value="X-ray"/>
    <property type="resolution" value="1.80 A"/>
    <property type="chains" value="A/C=2-142"/>
</dbReference>
<dbReference type="PDB" id="1O1P">
    <property type="method" value="X-ray"/>
    <property type="resolution" value="1.80 A"/>
    <property type="chains" value="A=2-142"/>
</dbReference>
<dbReference type="PDB" id="1QI8">
    <property type="method" value="X-ray"/>
    <property type="resolution" value="1.80 A"/>
    <property type="chains" value="A/C=3-142"/>
</dbReference>
<dbReference type="PDB" id="1QSH">
    <property type="method" value="X-ray"/>
    <property type="resolution" value="1.70 A"/>
    <property type="chains" value="A/C=2-142"/>
</dbReference>
<dbReference type="PDB" id="1QSI">
    <property type="method" value="X-ray"/>
    <property type="resolution" value="1.70 A"/>
    <property type="chains" value="A/C=2-142"/>
</dbReference>
<dbReference type="PDB" id="1QXD">
    <property type="method" value="X-ray"/>
    <property type="resolution" value="2.25 A"/>
    <property type="chains" value="A/C=2-142"/>
</dbReference>
<dbReference type="PDB" id="1QXE">
    <property type="method" value="X-ray"/>
    <property type="resolution" value="1.85 A"/>
    <property type="chains" value="A/C=2-142"/>
</dbReference>
<dbReference type="PDB" id="1R1X">
    <property type="method" value="X-ray"/>
    <property type="resolution" value="2.15 A"/>
    <property type="chains" value="A=2-142"/>
</dbReference>
<dbReference type="PDB" id="1R1Y">
    <property type="method" value="X-ray"/>
    <property type="resolution" value="1.80 A"/>
    <property type="chains" value="A/C=2-142"/>
</dbReference>
<dbReference type="PDB" id="1RPS">
    <property type="method" value="X-ray"/>
    <property type="resolution" value="2.11 A"/>
    <property type="chains" value="A/C=2-142"/>
</dbReference>
<dbReference type="PDB" id="1RQ3">
    <property type="method" value="X-ray"/>
    <property type="resolution" value="1.91 A"/>
    <property type="chains" value="A/C=2-142"/>
</dbReference>
<dbReference type="PDB" id="1RQ4">
    <property type="method" value="X-ray"/>
    <property type="resolution" value="2.11 A"/>
    <property type="chains" value="A/C=2-142"/>
</dbReference>
<dbReference type="PDB" id="1RQA">
    <property type="method" value="X-ray"/>
    <property type="resolution" value="2.11 A"/>
    <property type="chains" value="A/C=2-142"/>
</dbReference>
<dbReference type="PDB" id="1RVW">
    <property type="method" value="X-ray"/>
    <property type="resolution" value="2.50 A"/>
    <property type="chains" value="A=2-142"/>
</dbReference>
<dbReference type="PDB" id="1SDK">
    <property type="method" value="X-ray"/>
    <property type="resolution" value="1.80 A"/>
    <property type="chains" value="A/C=2-142"/>
</dbReference>
<dbReference type="PDB" id="1SDL">
    <property type="method" value="X-ray"/>
    <property type="resolution" value="1.80 A"/>
    <property type="chains" value="A/C=2-142"/>
</dbReference>
<dbReference type="PDB" id="1SHR">
    <property type="method" value="X-ray"/>
    <property type="resolution" value="1.88 A"/>
    <property type="chains" value="A/C=2-142"/>
</dbReference>
<dbReference type="PDB" id="1SI4">
    <property type="method" value="X-ray"/>
    <property type="resolution" value="2.20 A"/>
    <property type="chains" value="A/C=2-142"/>
</dbReference>
<dbReference type="PDB" id="1THB">
    <property type="method" value="X-ray"/>
    <property type="resolution" value="1.50 A"/>
    <property type="chains" value="A/C=2-142"/>
</dbReference>
<dbReference type="PDB" id="1UIW">
    <property type="method" value="X-ray"/>
    <property type="resolution" value="1.50 A"/>
    <property type="chains" value="A/C/E/G=2-142"/>
</dbReference>
<dbReference type="PDB" id="1VWT">
    <property type="method" value="X-ray"/>
    <property type="resolution" value="1.90 A"/>
    <property type="chains" value="A/C=2-142"/>
</dbReference>
<dbReference type="PDB" id="1XXT">
    <property type="method" value="X-ray"/>
    <property type="resolution" value="1.91 A"/>
    <property type="chains" value="A/C=2-142"/>
</dbReference>
<dbReference type="PDB" id="1XY0">
    <property type="method" value="X-ray"/>
    <property type="resolution" value="1.99 A"/>
    <property type="chains" value="A/C=2-142"/>
</dbReference>
<dbReference type="PDB" id="1XYE">
    <property type="method" value="X-ray"/>
    <property type="resolution" value="2.13 A"/>
    <property type="chains" value="A/C=3-142"/>
</dbReference>
<dbReference type="PDB" id="1XZ2">
    <property type="method" value="X-ray"/>
    <property type="resolution" value="1.90 A"/>
    <property type="chains" value="A/C=2-142"/>
</dbReference>
<dbReference type="PDB" id="1XZ4">
    <property type="method" value="X-ray"/>
    <property type="resolution" value="2.00 A"/>
    <property type="chains" value="A/C=3-142"/>
</dbReference>
<dbReference type="PDB" id="1XZ5">
    <property type="method" value="X-ray"/>
    <property type="resolution" value="2.11 A"/>
    <property type="chains" value="A/C=2-142"/>
</dbReference>
<dbReference type="PDB" id="1XZ7">
    <property type="method" value="X-ray"/>
    <property type="resolution" value="1.90 A"/>
    <property type="chains" value="A/C=2-142"/>
</dbReference>
<dbReference type="PDB" id="1XZU">
    <property type="method" value="X-ray"/>
    <property type="resolution" value="2.16 A"/>
    <property type="chains" value="A/C=2-142"/>
</dbReference>
<dbReference type="PDB" id="1XZV">
    <property type="method" value="X-ray"/>
    <property type="resolution" value="2.11 A"/>
    <property type="chains" value="A/C=2-142"/>
</dbReference>
<dbReference type="PDB" id="1Y01">
    <property type="method" value="X-ray"/>
    <property type="resolution" value="2.80 A"/>
    <property type="chains" value="B=1-142"/>
</dbReference>
<dbReference type="PDB" id="1Y09">
    <property type="method" value="X-ray"/>
    <property type="resolution" value="2.25 A"/>
    <property type="chains" value="A/C=2-142"/>
</dbReference>
<dbReference type="PDB" id="1Y0A">
    <property type="method" value="X-ray"/>
    <property type="resolution" value="2.22 A"/>
    <property type="chains" value="A/C=2-140"/>
</dbReference>
<dbReference type="PDB" id="1Y0C">
    <property type="method" value="X-ray"/>
    <property type="resolution" value="2.30 A"/>
    <property type="chains" value="A/C=2-140"/>
</dbReference>
<dbReference type="PDB" id="1Y0D">
    <property type="method" value="X-ray"/>
    <property type="resolution" value="2.10 A"/>
    <property type="chains" value="A/C=2-141"/>
</dbReference>
<dbReference type="PDB" id="1Y0T">
    <property type="method" value="X-ray"/>
    <property type="resolution" value="2.14 A"/>
    <property type="chains" value="A/C=2-142"/>
</dbReference>
<dbReference type="PDB" id="1Y0W">
    <property type="method" value="X-ray"/>
    <property type="resolution" value="2.14 A"/>
    <property type="chains" value="A/C=2-142"/>
</dbReference>
<dbReference type="PDB" id="1Y22">
    <property type="method" value="X-ray"/>
    <property type="resolution" value="2.16 A"/>
    <property type="chains" value="A/C=2-142"/>
</dbReference>
<dbReference type="PDB" id="1Y2Z">
    <property type="method" value="X-ray"/>
    <property type="resolution" value="2.07 A"/>
    <property type="chains" value="A/C=2-142"/>
</dbReference>
<dbReference type="PDB" id="1Y31">
    <property type="method" value="X-ray"/>
    <property type="resolution" value="2.13 A"/>
    <property type="chains" value="A/C=2-142"/>
</dbReference>
<dbReference type="PDB" id="1Y35">
    <property type="method" value="X-ray"/>
    <property type="resolution" value="2.12 A"/>
    <property type="chains" value="A/C=2-142"/>
</dbReference>
<dbReference type="PDB" id="1Y45">
    <property type="method" value="X-ray"/>
    <property type="resolution" value="2.00 A"/>
    <property type="chains" value="A/C=2-142"/>
</dbReference>
<dbReference type="PDB" id="1Y46">
    <property type="method" value="X-ray"/>
    <property type="resolution" value="2.22 A"/>
    <property type="chains" value="A/C=2-142"/>
</dbReference>
<dbReference type="PDB" id="1Y4B">
    <property type="method" value="X-ray"/>
    <property type="resolution" value="2.10 A"/>
    <property type="chains" value="A/C=2-142"/>
</dbReference>
<dbReference type="PDB" id="1Y4F">
    <property type="method" value="X-ray"/>
    <property type="resolution" value="2.00 A"/>
    <property type="chains" value="A/C=2-142"/>
</dbReference>
<dbReference type="PDB" id="1Y4G">
    <property type="method" value="X-ray"/>
    <property type="resolution" value="1.91 A"/>
    <property type="chains" value="A/C=2-142"/>
</dbReference>
<dbReference type="PDB" id="1Y4P">
    <property type="method" value="X-ray"/>
    <property type="resolution" value="1.98 A"/>
    <property type="chains" value="A/C=2-142"/>
</dbReference>
<dbReference type="PDB" id="1Y4Q">
    <property type="method" value="X-ray"/>
    <property type="resolution" value="2.11 A"/>
    <property type="chains" value="A/C=2-142"/>
</dbReference>
<dbReference type="PDB" id="1Y4R">
    <property type="method" value="X-ray"/>
    <property type="resolution" value="2.22 A"/>
    <property type="chains" value="A/C=2-142"/>
</dbReference>
<dbReference type="PDB" id="1Y4V">
    <property type="method" value="X-ray"/>
    <property type="resolution" value="1.84 A"/>
    <property type="chains" value="A/C=2-142"/>
</dbReference>
<dbReference type="PDB" id="1Y5F">
    <property type="method" value="X-ray"/>
    <property type="resolution" value="2.14 A"/>
    <property type="chains" value="A/C=2-142"/>
</dbReference>
<dbReference type="PDB" id="1Y5J">
    <property type="method" value="X-ray"/>
    <property type="resolution" value="2.03 A"/>
    <property type="chains" value="A/C=2-142"/>
</dbReference>
<dbReference type="PDB" id="1Y5K">
    <property type="method" value="X-ray"/>
    <property type="resolution" value="2.20 A"/>
    <property type="chains" value="A/C=2-142"/>
</dbReference>
<dbReference type="PDB" id="1Y7C">
    <property type="method" value="X-ray"/>
    <property type="resolution" value="2.10 A"/>
    <property type="chains" value="A/C=2-142"/>
</dbReference>
<dbReference type="PDB" id="1Y7D">
    <property type="method" value="X-ray"/>
    <property type="resolution" value="1.90 A"/>
    <property type="chains" value="A/C=2-142"/>
</dbReference>
<dbReference type="PDB" id="1Y7G">
    <property type="method" value="X-ray"/>
    <property type="resolution" value="2.10 A"/>
    <property type="chains" value="A/C=2-142"/>
</dbReference>
<dbReference type="PDB" id="1Y7Z">
    <property type="method" value="X-ray"/>
    <property type="resolution" value="1.98 A"/>
    <property type="chains" value="A/C=2-142"/>
</dbReference>
<dbReference type="PDB" id="1Y83">
    <property type="method" value="X-ray"/>
    <property type="resolution" value="1.90 A"/>
    <property type="chains" value="A/C=2-142"/>
</dbReference>
<dbReference type="PDB" id="1Y85">
    <property type="method" value="X-ray"/>
    <property type="resolution" value="2.13 A"/>
    <property type="chains" value="A/C=2-142"/>
</dbReference>
<dbReference type="PDB" id="1Y8W">
    <property type="method" value="X-ray"/>
    <property type="resolution" value="2.90 A"/>
    <property type="chains" value="A/C=2-142"/>
</dbReference>
<dbReference type="PDB" id="1YDZ">
    <property type="method" value="X-ray"/>
    <property type="resolution" value="3.30 A"/>
    <property type="chains" value="A/C=2-140"/>
</dbReference>
<dbReference type="PDB" id="1YE0">
    <property type="method" value="X-ray"/>
    <property type="resolution" value="2.50 A"/>
    <property type="chains" value="A/C=2-142"/>
</dbReference>
<dbReference type="PDB" id="1YE1">
    <property type="method" value="X-ray"/>
    <property type="resolution" value="4.50 A"/>
    <property type="chains" value="A/C=2-142"/>
</dbReference>
<dbReference type="PDB" id="1YE2">
    <property type="method" value="X-ray"/>
    <property type="resolution" value="1.80 A"/>
    <property type="chains" value="A/C=2-142"/>
</dbReference>
<dbReference type="PDB" id="1YEN">
    <property type="method" value="X-ray"/>
    <property type="resolution" value="2.80 A"/>
    <property type="chains" value="A/C=2-142"/>
</dbReference>
<dbReference type="PDB" id="1YEO">
    <property type="method" value="X-ray"/>
    <property type="resolution" value="2.22 A"/>
    <property type="chains" value="A/C=2-142"/>
</dbReference>
<dbReference type="PDB" id="1YEQ">
    <property type="method" value="X-ray"/>
    <property type="resolution" value="2.75 A"/>
    <property type="chains" value="A/C=2-142"/>
</dbReference>
<dbReference type="PDB" id="1YEU">
    <property type="method" value="X-ray"/>
    <property type="resolution" value="2.12 A"/>
    <property type="chains" value="A/C=2-142"/>
</dbReference>
<dbReference type="PDB" id="1YEV">
    <property type="method" value="X-ray"/>
    <property type="resolution" value="2.11 A"/>
    <property type="chains" value="A/C=2-142"/>
</dbReference>
<dbReference type="PDB" id="1YFF">
    <property type="method" value="X-ray"/>
    <property type="resolution" value="2.40 A"/>
    <property type="chains" value="A/C/E/G=2-142"/>
</dbReference>
<dbReference type="PDB" id="1YG5">
    <property type="method" value="X-ray"/>
    <property type="resolution" value="2.70 A"/>
    <property type="chains" value="A/C=2-142"/>
</dbReference>
<dbReference type="PDB" id="1YGD">
    <property type="method" value="X-ray"/>
    <property type="resolution" value="2.73 A"/>
    <property type="chains" value="A/C=2-142"/>
</dbReference>
<dbReference type="PDB" id="1YGF">
    <property type="method" value="X-ray"/>
    <property type="resolution" value="2.70 A"/>
    <property type="chains" value="A/C=2-142"/>
</dbReference>
<dbReference type="PDB" id="1YH9">
    <property type="method" value="X-ray"/>
    <property type="resolution" value="2.20 A"/>
    <property type="chains" value="A/C=2-142"/>
</dbReference>
<dbReference type="PDB" id="1YHE">
    <property type="method" value="X-ray"/>
    <property type="resolution" value="2.10 A"/>
    <property type="chains" value="A/C=2-142"/>
</dbReference>
<dbReference type="PDB" id="1YHR">
    <property type="method" value="X-ray"/>
    <property type="resolution" value="2.60 A"/>
    <property type="chains" value="A/C=2-142"/>
</dbReference>
<dbReference type="PDB" id="1YIE">
    <property type="method" value="X-ray"/>
    <property type="resolution" value="2.40 A"/>
    <property type="chains" value="A/C=2-142"/>
</dbReference>
<dbReference type="PDB" id="1YIH">
    <property type="method" value="X-ray"/>
    <property type="resolution" value="2.00 A"/>
    <property type="chains" value="A/C=2-142"/>
</dbReference>
<dbReference type="PDB" id="1YVQ">
    <property type="method" value="X-ray"/>
    <property type="resolution" value="1.80 A"/>
    <property type="chains" value="A/C=2-142"/>
</dbReference>
<dbReference type="PDB" id="1YVT">
    <property type="method" value="X-ray"/>
    <property type="resolution" value="1.80 A"/>
    <property type="chains" value="A=2-142"/>
</dbReference>
<dbReference type="PDB" id="1YZI">
    <property type="method" value="X-ray"/>
    <property type="resolution" value="2.07 A"/>
    <property type="chains" value="A=2-142"/>
</dbReference>
<dbReference type="PDB" id="1Z8U">
    <property type="method" value="X-ray"/>
    <property type="resolution" value="2.40 A"/>
    <property type="chains" value="B/D=1-142"/>
</dbReference>
<dbReference type="PDB" id="2D5Z">
    <property type="method" value="X-ray"/>
    <property type="resolution" value="1.45 A"/>
    <property type="chains" value="A/C=2-142"/>
</dbReference>
<dbReference type="PDB" id="2D60">
    <property type="method" value="X-ray"/>
    <property type="resolution" value="1.70 A"/>
    <property type="chains" value="A/C=2-142"/>
</dbReference>
<dbReference type="PDB" id="2DN1">
    <property type="method" value="X-ray"/>
    <property type="resolution" value="1.25 A"/>
    <property type="chains" value="A=2-142"/>
</dbReference>
<dbReference type="PDB" id="2DN2">
    <property type="method" value="X-ray"/>
    <property type="resolution" value="1.25 A"/>
    <property type="chains" value="A/C=2-142"/>
</dbReference>
<dbReference type="PDB" id="2DN3">
    <property type="method" value="X-ray"/>
    <property type="resolution" value="1.25 A"/>
    <property type="chains" value="A=2-142"/>
</dbReference>
<dbReference type="PDB" id="2DXM">
    <property type="method" value="Neutron"/>
    <property type="resolution" value="2.10 A"/>
    <property type="chains" value="A/C=2-142"/>
</dbReference>
<dbReference type="PDB" id="2H35">
    <property type="method" value="NMR"/>
    <property type="chains" value="A/C=2-142"/>
</dbReference>
<dbReference type="PDB" id="2HBC">
    <property type="method" value="X-ray"/>
    <property type="resolution" value="2.10 A"/>
    <property type="chains" value="A=2-142"/>
</dbReference>
<dbReference type="PDB" id="2HBD">
    <property type="method" value="X-ray"/>
    <property type="resolution" value="2.20 A"/>
    <property type="chains" value="A=2-142"/>
</dbReference>
<dbReference type="PDB" id="2HBE">
    <property type="method" value="X-ray"/>
    <property type="resolution" value="2.00 A"/>
    <property type="chains" value="A=2-142"/>
</dbReference>
<dbReference type="PDB" id="2HBF">
    <property type="method" value="X-ray"/>
    <property type="resolution" value="2.20 A"/>
    <property type="chains" value="A=2-142"/>
</dbReference>
<dbReference type="PDB" id="2HBS">
    <property type="method" value="X-ray"/>
    <property type="resolution" value="2.05 A"/>
    <property type="chains" value="A/C/E/G=2-142"/>
</dbReference>
<dbReference type="PDB" id="2HCO">
    <property type="method" value="X-ray"/>
    <property type="resolution" value="2.70 A"/>
    <property type="chains" value="A=2-142"/>
</dbReference>
<dbReference type="PDB" id="2HHB">
    <property type="method" value="X-ray"/>
    <property type="resolution" value="1.74 A"/>
    <property type="chains" value="A/C=2-142"/>
</dbReference>
<dbReference type="PDB" id="2HHD">
    <property type="method" value="X-ray"/>
    <property type="resolution" value="2.20 A"/>
    <property type="chains" value="A/C=2-142"/>
</dbReference>
<dbReference type="PDB" id="2HHE">
    <property type="method" value="X-ray"/>
    <property type="resolution" value="2.20 A"/>
    <property type="chains" value="A/C=2-142"/>
</dbReference>
<dbReference type="PDB" id="2M6Z">
    <property type="method" value="NMR"/>
    <property type="chains" value="A/C=2-142"/>
</dbReference>
<dbReference type="PDB" id="2W6V">
    <property type="method" value="X-ray"/>
    <property type="resolution" value="1.80 A"/>
    <property type="chains" value="A/C=2-142"/>
</dbReference>
<dbReference type="PDB" id="2W72">
    <property type="method" value="X-ray"/>
    <property type="resolution" value="1.07 A"/>
    <property type="chains" value="A=2-142, C=3-142"/>
</dbReference>
<dbReference type="PDB" id="2YRS">
    <property type="method" value="X-ray"/>
    <property type="resolution" value="2.30 A"/>
    <property type="chains" value="A/C/I/M=2-142"/>
</dbReference>
<dbReference type="PDB" id="3B75">
    <property type="method" value="X-ray"/>
    <property type="resolution" value="2.30 A"/>
    <property type="chains" value="A/C/E/G/S=2-142"/>
</dbReference>
<dbReference type="PDB" id="3D17">
    <property type="method" value="X-ray"/>
    <property type="resolution" value="2.80 A"/>
    <property type="chains" value="A/C=2-142"/>
</dbReference>
<dbReference type="PDB" id="3D7O">
    <property type="method" value="X-ray"/>
    <property type="resolution" value="1.80 A"/>
    <property type="chains" value="A=2-142"/>
</dbReference>
<dbReference type="PDB" id="3DUT">
    <property type="method" value="X-ray"/>
    <property type="resolution" value="1.55 A"/>
    <property type="chains" value="A/C=2-142"/>
</dbReference>
<dbReference type="PDB" id="3HHB">
    <property type="method" value="X-ray"/>
    <property type="resolution" value="1.74 A"/>
    <property type="chains" value="A/C=2-142"/>
</dbReference>
<dbReference type="PDB" id="3HXN">
    <property type="method" value="X-ray"/>
    <property type="resolution" value="2.00 A"/>
    <property type="chains" value="A/C=2-142"/>
</dbReference>
<dbReference type="PDB" id="3IA3">
    <property type="method" value="X-ray"/>
    <property type="resolution" value="3.20 A"/>
    <property type="chains" value="B/D=1-142"/>
</dbReference>
<dbReference type="PDB" id="3IC0">
    <property type="method" value="X-ray"/>
    <property type="resolution" value="1.80 A"/>
    <property type="chains" value="A/C=2-142"/>
</dbReference>
<dbReference type="PDB" id="3IC2">
    <property type="method" value="X-ray"/>
    <property type="resolution" value="2.40 A"/>
    <property type="chains" value="A/C=2-142"/>
</dbReference>
<dbReference type="PDB" id="3KMF">
    <property type="method" value="Neutron"/>
    <property type="resolution" value="2.00 A"/>
    <property type="chains" value="A/E=2-142"/>
</dbReference>
<dbReference type="PDB" id="3NL7">
    <property type="method" value="X-ray"/>
    <property type="resolution" value="1.80 A"/>
    <property type="chains" value="A=2-142"/>
</dbReference>
<dbReference type="PDB" id="3NMM">
    <property type="method" value="X-ray"/>
    <property type="resolution" value="1.60 A"/>
    <property type="chains" value="A/C=2-142"/>
</dbReference>
<dbReference type="PDB" id="3ODQ">
    <property type="method" value="X-ray"/>
    <property type="resolution" value="3.10 A"/>
    <property type="chains" value="A/C=2-142"/>
</dbReference>
<dbReference type="PDB" id="3ONZ">
    <property type="method" value="X-ray"/>
    <property type="resolution" value="2.09 A"/>
    <property type="chains" value="A=2-142"/>
</dbReference>
<dbReference type="PDB" id="3OO4">
    <property type="method" value="X-ray"/>
    <property type="resolution" value="1.90 A"/>
    <property type="chains" value="A=2-142"/>
</dbReference>
<dbReference type="PDB" id="3OO5">
    <property type="method" value="X-ray"/>
    <property type="resolution" value="2.10 A"/>
    <property type="chains" value="A=2-142"/>
</dbReference>
<dbReference type="PDB" id="3OVU">
    <property type="method" value="X-ray"/>
    <property type="resolution" value="2.83 A"/>
    <property type="chains" value="C=2-142"/>
</dbReference>
<dbReference type="PDB" id="3P5Q">
    <property type="method" value="X-ray"/>
    <property type="resolution" value="2.00 A"/>
    <property type="chains" value="A=2-142"/>
</dbReference>
<dbReference type="PDB" id="3QJB">
    <property type="method" value="X-ray"/>
    <property type="resolution" value="1.80 A"/>
    <property type="chains" value="A=2-142"/>
</dbReference>
<dbReference type="PDB" id="3QJC">
    <property type="method" value="X-ray"/>
    <property type="resolution" value="2.00 A"/>
    <property type="chains" value="A=2-142"/>
</dbReference>
<dbReference type="PDB" id="3QJD">
    <property type="method" value="X-ray"/>
    <property type="resolution" value="1.56 A"/>
    <property type="chains" value="A/C=2-142"/>
</dbReference>
<dbReference type="PDB" id="3QJE">
    <property type="method" value="X-ray"/>
    <property type="resolution" value="1.80 A"/>
    <property type="chains" value="A/C=2-142"/>
</dbReference>
<dbReference type="PDB" id="3R5I">
    <property type="method" value="X-ray"/>
    <property type="resolution" value="2.20 A"/>
    <property type="chains" value="A/C=2-142"/>
</dbReference>
<dbReference type="PDB" id="3S48">
    <property type="method" value="X-ray"/>
    <property type="resolution" value="3.05 A"/>
    <property type="chains" value="C/D=2-142"/>
</dbReference>
<dbReference type="PDB" id="3S65">
    <property type="method" value="X-ray"/>
    <property type="resolution" value="1.80 A"/>
    <property type="chains" value="A/C=2-142"/>
</dbReference>
<dbReference type="PDB" id="3S66">
    <property type="method" value="X-ray"/>
    <property type="resolution" value="1.40 A"/>
    <property type="chains" value="A=2-142"/>
</dbReference>
<dbReference type="PDB" id="3SZK">
    <property type="method" value="X-ray"/>
    <property type="resolution" value="3.01 A"/>
    <property type="chains" value="A/D=2-142"/>
</dbReference>
<dbReference type="PDB" id="3WCP">
    <property type="method" value="X-ray"/>
    <property type="resolution" value="1.94 A"/>
    <property type="chains" value="A/C=2-142"/>
</dbReference>
<dbReference type="PDB" id="3WHM">
    <property type="method" value="X-ray"/>
    <property type="resolution" value="1.85 A"/>
    <property type="chains" value="A/E=2-142"/>
</dbReference>
<dbReference type="PDB" id="4FC3">
    <property type="method" value="X-ray"/>
    <property type="resolution" value="2.26 A"/>
    <property type="chains" value="A=2-142"/>
</dbReference>
<dbReference type="PDB" id="4HHB">
    <property type="method" value="X-ray"/>
    <property type="resolution" value="1.74 A"/>
    <property type="chains" value="A/C=2-142"/>
</dbReference>
<dbReference type="PDB" id="4IJ2">
    <property type="method" value="X-ray"/>
    <property type="resolution" value="4.24 A"/>
    <property type="chains" value="A/C=2-142"/>
</dbReference>
<dbReference type="PDB" id="4L7Y">
    <property type="method" value="X-ray"/>
    <property type="resolution" value="1.80 A"/>
    <property type="chains" value="A/C=2-142"/>
</dbReference>
<dbReference type="PDB" id="4M4A">
    <property type="method" value="X-ray"/>
    <property type="resolution" value="2.05 A"/>
    <property type="chains" value="A=2-142"/>
</dbReference>
<dbReference type="PDB" id="4M4B">
    <property type="method" value="X-ray"/>
    <property type="resolution" value="2.00 A"/>
    <property type="chains" value="A=2-142"/>
</dbReference>
<dbReference type="PDB" id="4MQC">
    <property type="method" value="X-ray"/>
    <property type="resolution" value="2.20 A"/>
    <property type="chains" value="A=2-142"/>
</dbReference>
<dbReference type="PDB" id="4MQG">
    <property type="method" value="X-ray"/>
    <property type="resolution" value="1.68 A"/>
    <property type="chains" value="A=2-142"/>
</dbReference>
<dbReference type="PDB" id="4MQH">
    <property type="method" value="X-ray"/>
    <property type="resolution" value="2.50 A"/>
    <property type="chains" value="A=2-140"/>
</dbReference>
<dbReference type="PDB" id="4MQI">
    <property type="method" value="X-ray"/>
    <property type="resolution" value="1.92 A"/>
    <property type="chains" value="A=2-141"/>
</dbReference>
<dbReference type="PDB" id="4MQJ">
    <property type="method" value="X-ray"/>
    <property type="resolution" value="1.80 A"/>
    <property type="chains" value="A/C/E/G=2-142"/>
</dbReference>
<dbReference type="PDB" id="4MQK">
    <property type="method" value="X-ray"/>
    <property type="resolution" value="2.24 A"/>
    <property type="chains" value="A/C/E/G=2-142"/>
</dbReference>
<dbReference type="PDB" id="4N7N">
    <property type="method" value="X-ray"/>
    <property type="resolution" value="2.75 A"/>
    <property type="chains" value="A/C/E/G/I/K=2-142"/>
</dbReference>
<dbReference type="PDB" id="4N7O">
    <property type="method" value="X-ray"/>
    <property type="resolution" value="2.50 A"/>
    <property type="chains" value="A/C/E/G/I/K=2-142"/>
</dbReference>
<dbReference type="PDB" id="4N7P">
    <property type="method" value="X-ray"/>
    <property type="resolution" value="2.81 A"/>
    <property type="chains" value="A/C/E/G/I/K=2-142"/>
</dbReference>
<dbReference type="PDB" id="4N8T">
    <property type="method" value="X-ray"/>
    <property type="resolution" value="1.90 A"/>
    <property type="chains" value="A=2-142"/>
</dbReference>
<dbReference type="PDB" id="4NI0">
    <property type="method" value="X-ray"/>
    <property type="resolution" value="2.15 A"/>
    <property type="chains" value="A=2-142"/>
</dbReference>
<dbReference type="PDB" id="4NI1">
    <property type="method" value="X-ray"/>
    <property type="resolution" value="1.90 A"/>
    <property type="chains" value="A=2-142"/>
</dbReference>
<dbReference type="PDB" id="4ROL">
    <property type="method" value="X-ray"/>
    <property type="resolution" value="1.70 A"/>
    <property type="chains" value="A/C=2-142"/>
</dbReference>
<dbReference type="PDB" id="4ROM">
    <property type="method" value="X-ray"/>
    <property type="resolution" value="1.90 A"/>
    <property type="chains" value="A/C=2-142"/>
</dbReference>
<dbReference type="PDB" id="4WJG">
    <property type="method" value="X-ray"/>
    <property type="resolution" value="3.10 A"/>
    <property type="chains" value="A/F/K/P/U/Z=2-142"/>
</dbReference>
<dbReference type="PDB" id="4X0L">
    <property type="method" value="X-ray"/>
    <property type="resolution" value="2.05 A"/>
    <property type="chains" value="A=2-142"/>
</dbReference>
<dbReference type="PDB" id="4XS0">
    <property type="method" value="X-ray"/>
    <property type="resolution" value="2.55 A"/>
    <property type="chains" value="A=2-142"/>
</dbReference>
<dbReference type="PDB" id="5E29">
    <property type="method" value="X-ray"/>
    <property type="resolution" value="1.85 A"/>
    <property type="chains" value="A/C=2-142"/>
</dbReference>
<dbReference type="PDB" id="5E6E">
    <property type="method" value="X-ray"/>
    <property type="resolution" value="1.76 A"/>
    <property type="chains" value="A=2-142"/>
</dbReference>
<dbReference type="PDB" id="5E83">
    <property type="method" value="X-ray"/>
    <property type="resolution" value="1.80 A"/>
    <property type="chains" value="A/C=2-142"/>
</dbReference>
<dbReference type="PDB" id="5EE4">
    <property type="method" value="X-ray"/>
    <property type="resolution" value="2.30 A"/>
    <property type="chains" value="C/E=2-142"/>
</dbReference>
<dbReference type="PDB" id="5HU6">
    <property type="method" value="X-ray"/>
    <property type="resolution" value="2.90 A"/>
    <property type="chains" value="A=2-142"/>
</dbReference>
<dbReference type="PDB" id="5HY8">
    <property type="method" value="X-ray"/>
    <property type="resolution" value="2.30 A"/>
    <property type="chains" value="A/C/E/G/S=2-142"/>
</dbReference>
<dbReference type="PDB" id="5JDO">
    <property type="method" value="X-ray"/>
    <property type="resolution" value="3.20 A"/>
    <property type="chains" value="C=2-142, E=2-141"/>
</dbReference>
<dbReference type="PDB" id="5KDQ">
    <property type="method" value="X-ray"/>
    <property type="resolution" value="2.15 A"/>
    <property type="chains" value="A/C=3-142"/>
</dbReference>
<dbReference type="PDB" id="5KSI">
    <property type="method" value="X-ray"/>
    <property type="resolution" value="1.80 A"/>
    <property type="chains" value="A/C=2-142"/>
</dbReference>
<dbReference type="PDB" id="5KSJ">
    <property type="method" value="X-ray"/>
    <property type="resolution" value="2.40 A"/>
    <property type="chains" value="A/C=2-142"/>
</dbReference>
<dbReference type="PDB" id="5NI1">
    <property type="method" value="EM"/>
    <property type="resolution" value="3.20 A"/>
    <property type="chains" value="A/C=2-142"/>
</dbReference>
<dbReference type="PDB" id="5SW7">
    <property type="method" value="X-ray"/>
    <property type="resolution" value="1.85 A"/>
    <property type="chains" value="A=2-142"/>
</dbReference>
<dbReference type="PDB" id="5U3I">
    <property type="method" value="X-ray"/>
    <property type="resolution" value="1.95 A"/>
    <property type="chains" value="A/C=2-142"/>
</dbReference>
<dbReference type="PDB" id="5UCU">
    <property type="method" value="X-ray"/>
    <property type="resolution" value="1.80 A"/>
    <property type="chains" value="A=2-142"/>
</dbReference>
<dbReference type="PDB" id="5UFJ">
    <property type="method" value="X-ray"/>
    <property type="resolution" value="2.05 A"/>
    <property type="chains" value="A/C=2-142"/>
</dbReference>
<dbReference type="PDB" id="5URC">
    <property type="method" value="X-ray"/>
    <property type="resolution" value="1.85 A"/>
    <property type="chains" value="A/C=2-142"/>
</dbReference>
<dbReference type="PDB" id="5VMM">
    <property type="method" value="X-ray"/>
    <property type="resolution" value="3.60 A"/>
    <property type="chains" value="A/C=2-142"/>
</dbReference>
<dbReference type="PDB" id="5WOG">
    <property type="method" value="X-ray"/>
    <property type="resolution" value="1.54 A"/>
    <property type="chains" value="A/B=3-139"/>
</dbReference>
<dbReference type="PDB" id="5WOH">
    <property type="method" value="X-ray"/>
    <property type="resolution" value="1.58 A"/>
    <property type="chains" value="A/C=3-139"/>
</dbReference>
<dbReference type="PDB" id="5X2R">
    <property type="method" value="X-ray"/>
    <property type="resolution" value="2.70 A"/>
    <property type="chains" value="A/C/E/G/I/K=2-142"/>
</dbReference>
<dbReference type="PDB" id="5X2S">
    <property type="method" value="X-ray"/>
    <property type="resolution" value="2.39 A"/>
    <property type="chains" value="A/C/E/G/I/K=2-142"/>
</dbReference>
<dbReference type="PDB" id="5X2T">
    <property type="method" value="X-ray"/>
    <property type="resolution" value="2.64 A"/>
    <property type="chains" value="A/C/E/G/I/K=2-142"/>
</dbReference>
<dbReference type="PDB" id="5X2U">
    <property type="method" value="X-ray"/>
    <property type="resolution" value="2.53 A"/>
    <property type="chains" value="A/C/E/G/I/K=2-142"/>
</dbReference>
<dbReference type="PDB" id="6BB5">
    <property type="method" value="X-ray"/>
    <property type="resolution" value="2.28 A"/>
    <property type="chains" value="A=3-141"/>
</dbReference>
<dbReference type="PDB" id="6BNR">
    <property type="method" value="X-ray"/>
    <property type="resolution" value="1.95 A"/>
    <property type="chains" value="A/C=2-142"/>
</dbReference>
<dbReference type="PDB" id="6BWP">
    <property type="method" value="X-ray"/>
    <property type="resolution" value="1.70 A"/>
    <property type="chains" value="A/C=2-142"/>
</dbReference>
<dbReference type="PDB" id="6BWU">
    <property type="method" value="X-ray"/>
    <property type="resolution" value="2.00 A"/>
    <property type="chains" value="A=2-142"/>
</dbReference>
<dbReference type="PDB" id="6DI4">
    <property type="method" value="X-ray"/>
    <property type="resolution" value="1.90 A"/>
    <property type="chains" value="A/C=2-142"/>
</dbReference>
<dbReference type="PDB" id="6HAL">
    <property type="method" value="X-ray"/>
    <property type="resolution" value="2.20 A"/>
    <property type="chains" value="A/C=3-141"/>
</dbReference>
<dbReference type="PDB" id="6HBW">
    <property type="method" value="X-ray"/>
    <property type="resolution" value="2.00 A"/>
    <property type="chains" value="A/C=2-142"/>
</dbReference>
<dbReference type="PDB" id="6HK2">
    <property type="method" value="X-ray"/>
    <property type="resolution" value="1.55 A"/>
    <property type="chains" value="A/C=2-142"/>
</dbReference>
<dbReference type="PDB" id="6KA9">
    <property type="method" value="X-ray"/>
    <property type="resolution" value="1.40 A"/>
    <property type="chains" value="A/C/E/G=2-142"/>
</dbReference>
<dbReference type="PDB" id="6KAE">
    <property type="method" value="X-ray"/>
    <property type="resolution" value="1.45 A"/>
    <property type="chains" value="A/C/E/G=2-142"/>
</dbReference>
<dbReference type="PDB" id="6KAH">
    <property type="method" value="X-ray"/>
    <property type="resolution" value="1.45 A"/>
    <property type="chains" value="A/C/E/G=2-142"/>
</dbReference>
<dbReference type="PDB" id="6KAI">
    <property type="method" value="X-ray"/>
    <property type="resolution" value="1.45 A"/>
    <property type="chains" value="A/C/E/G=2-142"/>
</dbReference>
<dbReference type="PDB" id="6KAO">
    <property type="method" value="X-ray"/>
    <property type="resolution" value="1.40 A"/>
    <property type="chains" value="A=2-142"/>
</dbReference>
<dbReference type="PDB" id="6KAP">
    <property type="method" value="X-ray"/>
    <property type="resolution" value="1.45 A"/>
    <property type="chains" value="A=2-142"/>
</dbReference>
<dbReference type="PDB" id="6KAQ">
    <property type="method" value="X-ray"/>
    <property type="resolution" value="1.50 A"/>
    <property type="chains" value="A=2-142"/>
</dbReference>
<dbReference type="PDB" id="6KAR">
    <property type="method" value="X-ray"/>
    <property type="resolution" value="1.60 A"/>
    <property type="chains" value="A=2-142"/>
</dbReference>
<dbReference type="PDB" id="6KAS">
    <property type="method" value="X-ray"/>
    <property type="resolution" value="1.65 A"/>
    <property type="chains" value="A/C=2-142"/>
</dbReference>
<dbReference type="PDB" id="6KAT">
    <property type="method" value="X-ray"/>
    <property type="resolution" value="1.70 A"/>
    <property type="chains" value="A/C=2-142"/>
</dbReference>
<dbReference type="PDB" id="6KAU">
    <property type="method" value="X-ray"/>
    <property type="resolution" value="1.60 A"/>
    <property type="chains" value="A/C=2-142"/>
</dbReference>
<dbReference type="PDB" id="6KAV">
    <property type="method" value="X-ray"/>
    <property type="resolution" value="1.70 A"/>
    <property type="chains" value="A/C=2-142"/>
</dbReference>
<dbReference type="PDB" id="6KYE">
    <property type="method" value="X-ray"/>
    <property type="resolution" value="2.28 A"/>
    <property type="chains" value="A/C/E/G/I/K=1-142"/>
</dbReference>
<dbReference type="PDB" id="6L5V">
    <property type="method" value="X-ray"/>
    <property type="resolution" value="1.45 A"/>
    <property type="chains" value="A=2-142"/>
</dbReference>
<dbReference type="PDB" id="6L5W">
    <property type="method" value="X-ray"/>
    <property type="resolution" value="1.50 A"/>
    <property type="chains" value="A=2-142"/>
</dbReference>
<dbReference type="PDB" id="6L5X">
    <property type="method" value="X-ray"/>
    <property type="resolution" value="1.65 A"/>
    <property type="chains" value="A/C=2-142"/>
</dbReference>
<dbReference type="PDB" id="6L5Y">
    <property type="method" value="X-ray"/>
    <property type="resolution" value="1.65 A"/>
    <property type="chains" value="A/C=2-142"/>
</dbReference>
<dbReference type="PDB" id="6LCW">
    <property type="method" value="X-ray"/>
    <property type="resolution" value="1.40 A"/>
    <property type="chains" value="A/C/E/G=2-142"/>
</dbReference>
<dbReference type="PDB" id="6LCX">
    <property type="method" value="X-ray"/>
    <property type="resolution" value="1.40 A"/>
    <property type="chains" value="A/C/E/G=2-142"/>
</dbReference>
<dbReference type="PDB" id="6NBC">
    <property type="method" value="EM"/>
    <property type="resolution" value="2.80 A"/>
    <property type="chains" value="A/C=2-141"/>
</dbReference>
<dbReference type="PDB" id="6NBD">
    <property type="method" value="EM"/>
    <property type="resolution" value="3.20 A"/>
    <property type="chains" value="A/C=2-141"/>
</dbReference>
<dbReference type="PDB" id="6NQ5">
    <property type="method" value="X-ray"/>
    <property type="resolution" value="1.85 A"/>
    <property type="chains" value="A=2-142"/>
</dbReference>
<dbReference type="PDB" id="6TB2">
    <property type="method" value="X-ray"/>
    <property type="resolution" value="2.90 A"/>
    <property type="chains" value="A=2-142"/>
</dbReference>
<dbReference type="PDB" id="6XD9">
    <property type="method" value="X-ray"/>
    <property type="resolution" value="2.10 A"/>
    <property type="chains" value="A/C=2-142"/>
</dbReference>
<dbReference type="PDB" id="6XDT">
    <property type="method" value="X-ray"/>
    <property type="resolution" value="1.90 A"/>
    <property type="chains" value="A/C=2-142"/>
</dbReference>
<dbReference type="PDB" id="6XE7">
    <property type="method" value="X-ray"/>
    <property type="resolution" value="2.00 A"/>
    <property type="chains" value="A/C=2-142"/>
</dbReference>
<dbReference type="PDB" id="7AET">
    <property type="method" value="X-ray"/>
    <property type="resolution" value="2.53 A"/>
    <property type="chains" value="AAA/CCC=3-141"/>
</dbReference>
<dbReference type="PDB" id="7AEU">
    <property type="method" value="X-ray"/>
    <property type="resolution" value="2.54 A"/>
    <property type="chains" value="AAA/CCC=3-141"/>
</dbReference>
<dbReference type="PDB" id="7AEV">
    <property type="method" value="X-ray"/>
    <property type="resolution" value="2.77 A"/>
    <property type="chains" value="AAA/CCC=3-141"/>
</dbReference>
<dbReference type="PDB" id="7CUE">
    <property type="method" value="X-ray"/>
    <property type="resolution" value="2.75 A"/>
    <property type="chains" value="A/C=1-142"/>
</dbReference>
<dbReference type="PDB" id="7DY3">
    <property type="method" value="X-ray"/>
    <property type="resolution" value="1.40 A"/>
    <property type="chains" value="A/C/E/G=2-142"/>
</dbReference>
<dbReference type="PDB" id="7DY4">
    <property type="method" value="X-ray"/>
    <property type="resolution" value="1.30 A"/>
    <property type="chains" value="A/C/E/G=2-142"/>
</dbReference>
<dbReference type="PDB" id="7JJQ">
    <property type="method" value="X-ray"/>
    <property type="resolution" value="2.15 A"/>
    <property type="chains" value="A/C=2-142"/>
</dbReference>
<dbReference type="PDB" id="7JXZ">
    <property type="method" value="X-ray"/>
    <property type="resolution" value="2.23 A"/>
    <property type="chains" value="A/C=2-142"/>
</dbReference>
<dbReference type="PDB" id="7JY0">
    <property type="method" value="X-ray"/>
    <property type="resolution" value="1.63 A"/>
    <property type="chains" value="A/C=2-142"/>
</dbReference>
<dbReference type="PDB" id="7JY1">
    <property type="method" value="X-ray"/>
    <property type="resolution" value="1.59 A"/>
    <property type="chains" value="A/C=2-142"/>
</dbReference>
<dbReference type="PDB" id="7JY3">
    <property type="method" value="X-ray"/>
    <property type="resolution" value="1.48 A"/>
    <property type="chains" value="A/C=2-142"/>
</dbReference>
<dbReference type="PDB" id="7K4M">
    <property type="method" value="X-ray"/>
    <property type="resolution" value="2.50 A"/>
    <property type="chains" value="A/C/E/G/I=1-142"/>
</dbReference>
<dbReference type="PDB" id="7PCF">
    <property type="method" value="EM"/>
    <property type="resolution" value="5.82 A"/>
    <property type="chains" value="A=2-142"/>
</dbReference>
<dbReference type="PDB" id="7PCH">
    <property type="method" value="EM"/>
    <property type="resolution" value="2.89 A"/>
    <property type="chains" value="A/C=2-142"/>
</dbReference>
<dbReference type="PDB" id="7PCQ">
    <property type="method" value="EM"/>
    <property type="resolution" value="3.62 A"/>
    <property type="chains" value="A/C=2-142"/>
</dbReference>
<dbReference type="PDB" id="7QU4">
    <property type="method" value="X-ray"/>
    <property type="resolution" value="1.66 A"/>
    <property type="chains" value="A/B=1-142"/>
</dbReference>
<dbReference type="PDB" id="7UD7">
    <property type="method" value="X-ray"/>
    <property type="resolution" value="1.80 A"/>
    <property type="chains" value="A/C=1-142"/>
</dbReference>
<dbReference type="PDB" id="7UD8">
    <property type="method" value="X-ray"/>
    <property type="resolution" value="1.80 A"/>
    <property type="chains" value="A/C=1-142"/>
</dbReference>
<dbReference type="PDB" id="7UF6">
    <property type="method" value="X-ray"/>
    <property type="resolution" value="2.00 A"/>
    <property type="chains" value="A/C=1-142"/>
</dbReference>
<dbReference type="PDB" id="7UF7">
    <property type="method" value="X-ray"/>
    <property type="resolution" value="2.00 A"/>
    <property type="chains" value="A/C=1-142"/>
</dbReference>
<dbReference type="PDB" id="7UVB">
    <property type="method" value="X-ray"/>
    <property type="resolution" value="2.05 A"/>
    <property type="chains" value="A/C=2-142"/>
</dbReference>
<dbReference type="PDB" id="7VDE">
    <property type="method" value="EM"/>
    <property type="resolution" value="3.20 A"/>
    <property type="chains" value="A/C=1-142"/>
</dbReference>
<dbReference type="PDB" id="7XGY">
    <property type="method" value="EM"/>
    <property type="resolution" value="3.50 A"/>
    <property type="chains" value="A/C=1-142"/>
</dbReference>
<dbReference type="PDB" id="8DOV">
    <property type="method" value="X-ray"/>
    <property type="resolution" value="2.10 A"/>
    <property type="chains" value="A/C/E/G=2-142"/>
</dbReference>
<dbReference type="PDB" id="8EGI">
    <property type="method" value="X-ray"/>
    <property type="resolution" value="2.30 A"/>
    <property type="chains" value="A/C=1-142"/>
</dbReference>
<dbReference type="PDB" id="8FDK">
    <property type="method" value="X-ray"/>
    <property type="resolution" value="1.89 A"/>
    <property type="chains" value="A/C=2-142"/>
</dbReference>
<dbReference type="PDB" id="8FDL">
    <property type="method" value="X-ray"/>
    <property type="resolution" value="1.75 A"/>
    <property type="chains" value="A/C=2-142"/>
</dbReference>
<dbReference type="PDB" id="8FDM">
    <property type="method" value="X-ray"/>
    <property type="resolution" value="1.91 A"/>
    <property type="chains" value="A/C=2-142"/>
</dbReference>
<dbReference type="PDB" id="8FDN">
    <property type="method" value="X-ray"/>
    <property type="resolution" value="2.20 A"/>
    <property type="chains" value="A/C=2-142"/>
</dbReference>
<dbReference type="PDB" id="8VYL">
    <property type="method" value="X-ray"/>
    <property type="resolution" value="2.02 A"/>
    <property type="chains" value="A/C=1-142"/>
</dbReference>
<dbReference type="PDB" id="8WJ0">
    <property type="method" value="EM"/>
    <property type="resolution" value="2.24 A"/>
    <property type="chains" value="A=1-142"/>
</dbReference>
<dbReference type="PDB" id="8WJ1">
    <property type="method" value="EM"/>
    <property type="resolution" value="2.27 A"/>
    <property type="chains" value="A=1-142"/>
</dbReference>
<dbReference type="PDB" id="8WJ2">
    <property type="method" value="EM"/>
    <property type="resolution" value="2.35 A"/>
    <property type="chains" value="A=1-142"/>
</dbReference>
<dbReference type="PDB" id="8WXW">
    <property type="method" value="X-ray"/>
    <property type="resolution" value="1.86 A"/>
    <property type="chains" value="P=35-48"/>
</dbReference>
<dbReference type="PDB" id="8XMP">
    <property type="method" value="EM"/>
    <property type="resolution" value="3.11 A"/>
    <property type="chains" value="C=1-142"/>
</dbReference>
<dbReference type="PDB" id="8XMQ">
    <property type="method" value="EM"/>
    <property type="resolution" value="3.21 A"/>
    <property type="chains" value="C=1-142"/>
</dbReference>
<dbReference type="PDB" id="8XMW">
    <property type="method" value="EM"/>
    <property type="resolution" value="2.94 A"/>
    <property type="chains" value="A=1-142"/>
</dbReference>
<dbReference type="PDB" id="9AV9">
    <property type="method" value="X-ray"/>
    <property type="resolution" value="1.94 A"/>
    <property type="chains" value="A/C=2-142"/>
</dbReference>
<dbReference type="PDB" id="9AYZ">
    <property type="method" value="X-ray"/>
    <property type="resolution" value="2.24 A"/>
    <property type="chains" value="A/C/E/G=2-142"/>
</dbReference>
<dbReference type="PDB" id="9BCJ">
    <property type="method" value="X-ray"/>
    <property type="resolution" value="1.69 A"/>
    <property type="chains" value="A=2-142"/>
</dbReference>
<dbReference type="PDB" id="9FHB">
    <property type="method" value="EM"/>
    <property type="resolution" value="3.87 A"/>
    <property type="chains" value="A=1-142"/>
</dbReference>
<dbReference type="PDB" id="9FMU">
    <property type="method" value="EM"/>
    <property type="resolution" value="4.46 A"/>
    <property type="chains" value="A=1-142"/>
</dbReference>
<dbReference type="PDB" id="9FNO">
    <property type="method" value="EM"/>
    <property type="resolution" value="5.20 A"/>
    <property type="chains" value="A=1-142"/>
</dbReference>
<dbReference type="PDBsum" id="1A00"/>
<dbReference type="PDBsum" id="1A01"/>
<dbReference type="PDBsum" id="1A0U"/>
<dbReference type="PDBsum" id="1A0Z"/>
<dbReference type="PDBsum" id="1A3N"/>
<dbReference type="PDBsum" id="1A3O"/>
<dbReference type="PDBsum" id="1A9W"/>
<dbReference type="PDBsum" id="1ABW"/>
<dbReference type="PDBsum" id="1ABY"/>
<dbReference type="PDBsum" id="1AJ9"/>
<dbReference type="PDBsum" id="1B86"/>
<dbReference type="PDBsum" id="1BAB"/>
<dbReference type="PDBsum" id="1BBB"/>
<dbReference type="PDBsum" id="1BIJ"/>
<dbReference type="PDBsum" id="1BUW"/>
<dbReference type="PDBsum" id="1BZ0"/>
<dbReference type="PDBsum" id="1BZ1"/>
<dbReference type="PDBsum" id="1BZZ"/>
<dbReference type="PDBsum" id="1C7B"/>
<dbReference type="PDBsum" id="1C7C"/>
<dbReference type="PDBsum" id="1C7D"/>
<dbReference type="PDBsum" id="1CLS"/>
<dbReference type="PDBsum" id="1CMY"/>
<dbReference type="PDBsum" id="1COH"/>
<dbReference type="PDBsum" id="1DKE"/>
<dbReference type="PDBsum" id="1DXT"/>
<dbReference type="PDBsum" id="1DXU"/>
<dbReference type="PDBsum" id="1DXV"/>
<dbReference type="PDBsum" id="1FDH"/>
<dbReference type="PDBsum" id="1FN3"/>
<dbReference type="PDBsum" id="1G9V"/>
<dbReference type="PDBsum" id="1GBU"/>
<dbReference type="PDBsum" id="1GBV"/>
<dbReference type="PDBsum" id="1GLI"/>
<dbReference type="PDBsum" id="1GZX"/>
<dbReference type="PDBsum" id="1HAB"/>
<dbReference type="PDBsum" id="1HAC"/>
<dbReference type="PDBsum" id="1HBA"/>
<dbReference type="PDBsum" id="1HBB"/>
<dbReference type="PDBsum" id="1HBS"/>
<dbReference type="PDBsum" id="1HCO"/>
<dbReference type="PDBsum" id="1HDB"/>
<dbReference type="PDBsum" id="1HGA"/>
<dbReference type="PDBsum" id="1HGB"/>
<dbReference type="PDBsum" id="1HGC"/>
<dbReference type="PDBsum" id="1HHO"/>
<dbReference type="PDBsum" id="1IRD"/>
<dbReference type="PDBsum" id="1J3Y"/>
<dbReference type="PDBsum" id="1J3Z"/>
<dbReference type="PDBsum" id="1J40"/>
<dbReference type="PDBsum" id="1J41"/>
<dbReference type="PDBsum" id="1J7S"/>
<dbReference type="PDBsum" id="1J7W"/>
<dbReference type="PDBsum" id="1J7Y"/>
<dbReference type="PDBsum" id="1JY7"/>
<dbReference type="PDBsum" id="1K0Y"/>
<dbReference type="PDBsum" id="1K1K"/>
<dbReference type="PDBsum" id="1KD2"/>
<dbReference type="PDBsum" id="1LFL"/>
<dbReference type="PDBsum" id="1LFQ"/>
<dbReference type="PDBsum" id="1LFT"/>
<dbReference type="PDBsum" id="1LFV"/>
<dbReference type="PDBsum" id="1LFY"/>
<dbReference type="PDBsum" id="1LFZ"/>
<dbReference type="PDBsum" id="1LJW"/>
<dbReference type="PDBsum" id="1M9P"/>
<dbReference type="PDBsum" id="1MKO"/>
<dbReference type="PDBsum" id="1NEJ"/>
<dbReference type="PDBsum" id="1NIH"/>
<dbReference type="PDBsum" id="1NQP"/>
<dbReference type="PDBsum" id="1O1I"/>
<dbReference type="PDBsum" id="1O1J"/>
<dbReference type="PDBsum" id="1O1K"/>
<dbReference type="PDBsum" id="1O1L"/>
<dbReference type="PDBsum" id="1O1M"/>
<dbReference type="PDBsum" id="1O1N"/>
<dbReference type="PDBsum" id="1O1O"/>
<dbReference type="PDBsum" id="1O1P"/>
<dbReference type="PDBsum" id="1QI8"/>
<dbReference type="PDBsum" id="1QSH"/>
<dbReference type="PDBsum" id="1QSI"/>
<dbReference type="PDBsum" id="1QXD"/>
<dbReference type="PDBsum" id="1QXE"/>
<dbReference type="PDBsum" id="1R1X"/>
<dbReference type="PDBsum" id="1R1Y"/>
<dbReference type="PDBsum" id="1RPS"/>
<dbReference type="PDBsum" id="1RQ3"/>
<dbReference type="PDBsum" id="1RQ4"/>
<dbReference type="PDBsum" id="1RQA"/>
<dbReference type="PDBsum" id="1RVW"/>
<dbReference type="PDBsum" id="1SDK"/>
<dbReference type="PDBsum" id="1SDL"/>
<dbReference type="PDBsum" id="1SHR"/>
<dbReference type="PDBsum" id="1SI4"/>
<dbReference type="PDBsum" id="1THB"/>
<dbReference type="PDBsum" id="1UIW"/>
<dbReference type="PDBsum" id="1VWT"/>
<dbReference type="PDBsum" id="1XXT"/>
<dbReference type="PDBsum" id="1XY0"/>
<dbReference type="PDBsum" id="1XYE"/>
<dbReference type="PDBsum" id="1XZ2"/>
<dbReference type="PDBsum" id="1XZ4"/>
<dbReference type="PDBsum" id="1XZ5"/>
<dbReference type="PDBsum" id="1XZ7"/>
<dbReference type="PDBsum" id="1XZU"/>
<dbReference type="PDBsum" id="1XZV"/>
<dbReference type="PDBsum" id="1Y01"/>
<dbReference type="PDBsum" id="1Y09"/>
<dbReference type="PDBsum" id="1Y0A"/>
<dbReference type="PDBsum" id="1Y0C"/>
<dbReference type="PDBsum" id="1Y0D"/>
<dbReference type="PDBsum" id="1Y0T"/>
<dbReference type="PDBsum" id="1Y0W"/>
<dbReference type="PDBsum" id="1Y22"/>
<dbReference type="PDBsum" id="1Y2Z"/>
<dbReference type="PDBsum" id="1Y31"/>
<dbReference type="PDBsum" id="1Y35"/>
<dbReference type="PDBsum" id="1Y45"/>
<dbReference type="PDBsum" id="1Y46"/>
<dbReference type="PDBsum" id="1Y4B"/>
<dbReference type="PDBsum" id="1Y4F"/>
<dbReference type="PDBsum" id="1Y4G"/>
<dbReference type="PDBsum" id="1Y4P"/>
<dbReference type="PDBsum" id="1Y4Q"/>
<dbReference type="PDBsum" id="1Y4R"/>
<dbReference type="PDBsum" id="1Y4V"/>
<dbReference type="PDBsum" id="1Y5F"/>
<dbReference type="PDBsum" id="1Y5J"/>
<dbReference type="PDBsum" id="1Y5K"/>
<dbReference type="PDBsum" id="1Y7C"/>
<dbReference type="PDBsum" id="1Y7D"/>
<dbReference type="PDBsum" id="1Y7G"/>
<dbReference type="PDBsum" id="1Y7Z"/>
<dbReference type="PDBsum" id="1Y83"/>
<dbReference type="PDBsum" id="1Y85"/>
<dbReference type="PDBsum" id="1Y8W"/>
<dbReference type="PDBsum" id="1YDZ"/>
<dbReference type="PDBsum" id="1YE0"/>
<dbReference type="PDBsum" id="1YE1"/>
<dbReference type="PDBsum" id="1YE2"/>
<dbReference type="PDBsum" id="1YEN"/>
<dbReference type="PDBsum" id="1YEO"/>
<dbReference type="PDBsum" id="1YEQ"/>
<dbReference type="PDBsum" id="1YEU"/>
<dbReference type="PDBsum" id="1YEV"/>
<dbReference type="PDBsum" id="1YFF"/>
<dbReference type="PDBsum" id="1YG5"/>
<dbReference type="PDBsum" id="1YGD"/>
<dbReference type="PDBsum" id="1YGF"/>
<dbReference type="PDBsum" id="1YH9"/>
<dbReference type="PDBsum" id="1YHE"/>
<dbReference type="PDBsum" id="1YHR"/>
<dbReference type="PDBsum" id="1YIE"/>
<dbReference type="PDBsum" id="1YIH"/>
<dbReference type="PDBsum" id="1YVQ"/>
<dbReference type="PDBsum" id="1YVT"/>
<dbReference type="PDBsum" id="1YZI"/>
<dbReference type="PDBsum" id="1Z8U"/>
<dbReference type="PDBsum" id="2D5Z"/>
<dbReference type="PDBsum" id="2D60"/>
<dbReference type="PDBsum" id="2DN1"/>
<dbReference type="PDBsum" id="2DN2"/>
<dbReference type="PDBsum" id="2DN3"/>
<dbReference type="PDBsum" id="2DXM"/>
<dbReference type="PDBsum" id="2H35"/>
<dbReference type="PDBsum" id="2HBC"/>
<dbReference type="PDBsum" id="2HBD"/>
<dbReference type="PDBsum" id="2HBE"/>
<dbReference type="PDBsum" id="2HBF"/>
<dbReference type="PDBsum" id="2HBS"/>
<dbReference type="PDBsum" id="2HCO"/>
<dbReference type="PDBsum" id="2HHB"/>
<dbReference type="PDBsum" id="2HHD"/>
<dbReference type="PDBsum" id="2HHE"/>
<dbReference type="PDBsum" id="2M6Z"/>
<dbReference type="PDBsum" id="2W6V"/>
<dbReference type="PDBsum" id="2W72"/>
<dbReference type="PDBsum" id="2YRS"/>
<dbReference type="PDBsum" id="3B75"/>
<dbReference type="PDBsum" id="3D17"/>
<dbReference type="PDBsum" id="3D7O"/>
<dbReference type="PDBsum" id="3DUT"/>
<dbReference type="PDBsum" id="3HHB"/>
<dbReference type="PDBsum" id="3HXN"/>
<dbReference type="PDBsum" id="3IA3"/>
<dbReference type="PDBsum" id="3IC0"/>
<dbReference type="PDBsum" id="3IC2"/>
<dbReference type="PDBsum" id="3KMF"/>
<dbReference type="PDBsum" id="3NL7"/>
<dbReference type="PDBsum" id="3NMM"/>
<dbReference type="PDBsum" id="3ODQ"/>
<dbReference type="PDBsum" id="3ONZ"/>
<dbReference type="PDBsum" id="3OO4"/>
<dbReference type="PDBsum" id="3OO5"/>
<dbReference type="PDBsum" id="3OVU"/>
<dbReference type="PDBsum" id="3P5Q"/>
<dbReference type="PDBsum" id="3QJB"/>
<dbReference type="PDBsum" id="3QJC"/>
<dbReference type="PDBsum" id="3QJD"/>
<dbReference type="PDBsum" id="3QJE"/>
<dbReference type="PDBsum" id="3R5I"/>
<dbReference type="PDBsum" id="3S48"/>
<dbReference type="PDBsum" id="3S65"/>
<dbReference type="PDBsum" id="3S66"/>
<dbReference type="PDBsum" id="3SZK"/>
<dbReference type="PDBsum" id="3WCP"/>
<dbReference type="PDBsum" id="3WHM"/>
<dbReference type="PDBsum" id="4FC3"/>
<dbReference type="PDBsum" id="4HHB"/>
<dbReference type="PDBsum" id="4IJ2"/>
<dbReference type="PDBsum" id="4L7Y"/>
<dbReference type="PDBsum" id="4M4A"/>
<dbReference type="PDBsum" id="4M4B"/>
<dbReference type="PDBsum" id="4MQC"/>
<dbReference type="PDBsum" id="4MQG"/>
<dbReference type="PDBsum" id="4MQH"/>
<dbReference type="PDBsum" id="4MQI"/>
<dbReference type="PDBsum" id="4MQJ"/>
<dbReference type="PDBsum" id="4MQK"/>
<dbReference type="PDBsum" id="4N7N"/>
<dbReference type="PDBsum" id="4N7O"/>
<dbReference type="PDBsum" id="4N7P"/>
<dbReference type="PDBsum" id="4N8T"/>
<dbReference type="PDBsum" id="4NI0"/>
<dbReference type="PDBsum" id="4NI1"/>
<dbReference type="PDBsum" id="4ROL"/>
<dbReference type="PDBsum" id="4ROM"/>
<dbReference type="PDBsum" id="4WJG"/>
<dbReference type="PDBsum" id="4X0L"/>
<dbReference type="PDBsum" id="4XS0"/>
<dbReference type="PDBsum" id="5E29"/>
<dbReference type="PDBsum" id="5E6E"/>
<dbReference type="PDBsum" id="5E83"/>
<dbReference type="PDBsum" id="5EE4"/>
<dbReference type="PDBsum" id="5HU6"/>
<dbReference type="PDBsum" id="5HY8"/>
<dbReference type="PDBsum" id="5JDO"/>
<dbReference type="PDBsum" id="5KDQ"/>
<dbReference type="PDBsum" id="5KSI"/>
<dbReference type="PDBsum" id="5KSJ"/>
<dbReference type="PDBsum" id="5NI1"/>
<dbReference type="PDBsum" id="5SW7"/>
<dbReference type="PDBsum" id="5U3I"/>
<dbReference type="PDBsum" id="5UCU"/>
<dbReference type="PDBsum" id="5UFJ"/>
<dbReference type="PDBsum" id="5URC"/>
<dbReference type="PDBsum" id="5VMM"/>
<dbReference type="PDBsum" id="5WOG"/>
<dbReference type="PDBsum" id="5WOH"/>
<dbReference type="PDBsum" id="5X2R"/>
<dbReference type="PDBsum" id="5X2S"/>
<dbReference type="PDBsum" id="5X2T"/>
<dbReference type="PDBsum" id="5X2U"/>
<dbReference type="PDBsum" id="6BB5"/>
<dbReference type="PDBsum" id="6BNR"/>
<dbReference type="PDBsum" id="6BWP"/>
<dbReference type="PDBsum" id="6BWU"/>
<dbReference type="PDBsum" id="6DI4"/>
<dbReference type="PDBsum" id="6HAL"/>
<dbReference type="PDBsum" id="6HBW"/>
<dbReference type="PDBsum" id="6HK2"/>
<dbReference type="PDBsum" id="6KA9"/>
<dbReference type="PDBsum" id="6KAE"/>
<dbReference type="PDBsum" id="6KAH"/>
<dbReference type="PDBsum" id="6KAI"/>
<dbReference type="PDBsum" id="6KAO"/>
<dbReference type="PDBsum" id="6KAP"/>
<dbReference type="PDBsum" id="6KAQ"/>
<dbReference type="PDBsum" id="6KAR"/>
<dbReference type="PDBsum" id="6KAS"/>
<dbReference type="PDBsum" id="6KAT"/>
<dbReference type="PDBsum" id="6KAU"/>
<dbReference type="PDBsum" id="6KAV"/>
<dbReference type="PDBsum" id="6KYE"/>
<dbReference type="PDBsum" id="6L5V"/>
<dbReference type="PDBsum" id="6L5W"/>
<dbReference type="PDBsum" id="6L5X"/>
<dbReference type="PDBsum" id="6L5Y"/>
<dbReference type="PDBsum" id="6LCW"/>
<dbReference type="PDBsum" id="6LCX"/>
<dbReference type="PDBsum" id="6NBC"/>
<dbReference type="PDBsum" id="6NBD"/>
<dbReference type="PDBsum" id="6NQ5"/>
<dbReference type="PDBsum" id="6TB2"/>
<dbReference type="PDBsum" id="6XD9"/>
<dbReference type="PDBsum" id="6XDT"/>
<dbReference type="PDBsum" id="6XE7"/>
<dbReference type="PDBsum" id="7AET"/>
<dbReference type="PDBsum" id="7AEU"/>
<dbReference type="PDBsum" id="7AEV"/>
<dbReference type="PDBsum" id="7CUE"/>
<dbReference type="PDBsum" id="7DY3"/>
<dbReference type="PDBsum" id="7DY4"/>
<dbReference type="PDBsum" id="7JJQ"/>
<dbReference type="PDBsum" id="7JXZ"/>
<dbReference type="PDBsum" id="7JY0"/>
<dbReference type="PDBsum" id="7JY1"/>
<dbReference type="PDBsum" id="7JY3"/>
<dbReference type="PDBsum" id="7K4M"/>
<dbReference type="PDBsum" id="7PCF"/>
<dbReference type="PDBsum" id="7PCH"/>
<dbReference type="PDBsum" id="7PCQ"/>
<dbReference type="PDBsum" id="7QU4"/>
<dbReference type="PDBsum" id="7UD7"/>
<dbReference type="PDBsum" id="7UD8"/>
<dbReference type="PDBsum" id="7UF6"/>
<dbReference type="PDBsum" id="7UF7"/>
<dbReference type="PDBsum" id="7UVB"/>
<dbReference type="PDBsum" id="7VDE"/>
<dbReference type="PDBsum" id="7XGY"/>
<dbReference type="PDBsum" id="8DOV"/>
<dbReference type="PDBsum" id="8EGI"/>
<dbReference type="PDBsum" id="8FDK"/>
<dbReference type="PDBsum" id="8FDL"/>
<dbReference type="PDBsum" id="8FDM"/>
<dbReference type="PDBsum" id="8FDN"/>
<dbReference type="PDBsum" id="8VYL"/>
<dbReference type="PDBsum" id="8WJ0"/>
<dbReference type="PDBsum" id="8WJ1"/>
<dbReference type="PDBsum" id="8WJ2"/>
<dbReference type="PDBsum" id="8WXW"/>
<dbReference type="PDBsum" id="8XMP"/>
<dbReference type="PDBsum" id="8XMQ"/>
<dbReference type="PDBsum" id="8XMW"/>
<dbReference type="PDBsum" id="9AV9"/>
<dbReference type="PDBsum" id="9AYZ"/>
<dbReference type="PDBsum" id="9BCJ"/>
<dbReference type="PDBsum" id="9FHB"/>
<dbReference type="PDBsum" id="9FMU"/>
<dbReference type="PDBsum" id="9FNO"/>
<dbReference type="EMDB" id="EMD-0407"/>
<dbReference type="EMDB" id="EMD-0408"/>
<dbReference type="EMDB" id="EMD-13319"/>
<dbReference type="EMDB" id="EMD-13320"/>
<dbReference type="EMDB" id="EMD-13325"/>
<dbReference type="EMDB" id="EMD-31915"/>
<dbReference type="EMDB" id="EMD-33189"/>
<dbReference type="EMDB" id="EMD-37574"/>
<dbReference type="EMDB" id="EMD-37575"/>
<dbReference type="EMDB" id="EMD-37576"/>
<dbReference type="EMDB" id="EMD-38485"/>
<dbReference type="EMDB" id="EMD-38486"/>
<dbReference type="EMDB" id="EMD-38490"/>
<dbReference type="EMDB" id="EMD-50444"/>
<dbReference type="EMDB" id="EMD-50570"/>
<dbReference type="EMDB" id="EMD-50600"/>
<dbReference type="SASBDB" id="P69905"/>
<dbReference type="SMR" id="P69905"/>
<dbReference type="BioGRID" id="109289">
    <property type="interactions" value="70"/>
</dbReference>
<dbReference type="BioGRID" id="109290">
    <property type="interactions" value="141"/>
</dbReference>
<dbReference type="ComplexPortal" id="CPX-2158">
    <property type="entry name" value="Hemoglobin HbA complex"/>
</dbReference>
<dbReference type="ComplexPortal" id="CPX-2419">
    <property type="entry name" value="Hemoglobin HbA2 complex"/>
</dbReference>
<dbReference type="ComplexPortal" id="CPX-2927">
    <property type="entry name" value="Hemoglobin E complex"/>
</dbReference>
<dbReference type="ComplexPortal" id="CPX-2932">
    <property type="entry name" value="Hemoglobin HbF Variant 1 complex"/>
</dbReference>
<dbReference type="ComplexPortal" id="CPX-2933">
    <property type="entry name" value="Hemoglobin HbF Variant 2 complex"/>
</dbReference>
<dbReference type="CORUM" id="P69905"/>
<dbReference type="DIP" id="DIP-35199N"/>
<dbReference type="FunCoup" id="P69905">
    <property type="interactions" value="19"/>
</dbReference>
<dbReference type="IntAct" id="P69905">
    <property type="interactions" value="106"/>
</dbReference>
<dbReference type="MINT" id="P69905"/>
<dbReference type="STRING" id="9606.ENSP00000251595"/>
<dbReference type="BindingDB" id="P69905"/>
<dbReference type="ChEMBL" id="CHEMBL2887"/>
<dbReference type="DrugBank" id="DB17706">
    <property type="generic name" value="2,2-Dimethylbutyrate"/>
</dbReference>
<dbReference type="DrugBank" id="DB08262">
    <property type="generic name" value="2,6-dicarboxynaphthalene"/>
</dbReference>
<dbReference type="DrugBank" id="DB07427">
    <property type="generic name" value="2-[(2-methoxy-5-methylphenoxy)methyl]pyridine"/>
</dbReference>
<dbReference type="DrugBank" id="DB08077">
    <property type="generic name" value="2-[4-({[(3,5-DICHLOROPHENYL)AMINO]CARBONYL}AMINO)PHENOXY]-2-METHYLPROPANOIC ACID"/>
</dbReference>
<dbReference type="DrugBank" id="DB07428">
    <property type="generic name" value="4-[(5-methoxy-2-methylphenoxy)methyl]pyridine"/>
</dbReference>
<dbReference type="DrugBank" id="DB02126">
    <property type="generic name" value="4-Carboxycinnamic Acid"/>
</dbReference>
<dbReference type="DrugBank" id="DB12298">
    <property type="generic name" value="5-Hydroxymethylfurfural"/>
</dbReference>
<dbReference type="DrugBank" id="DB09130">
    <property type="generic name" value="Copper"/>
</dbReference>
<dbReference type="DrugBank" id="DB13120">
    <property type="generic name" value="Deferitazole"/>
</dbReference>
<dbReference type="DrugBank" id="DB08486">
    <property type="generic name" value="Efaproxiral"/>
</dbReference>
<dbReference type="DrugBank" id="DB15617">
    <property type="generic name" value="Ferric derisomaltose"/>
</dbReference>
<dbReference type="DrugBank" id="DB09147">
    <property type="generic name" value="Ferric pyrophosphate"/>
</dbReference>
<dbReference type="DrugBank" id="DB13995">
    <property type="generic name" value="Ferric pyrophosphate citrate"/>
</dbReference>
<dbReference type="DrugBank" id="DB18267">
    <property type="generic name" value="Ferroheme"/>
</dbReference>
<dbReference type="DrugBank" id="DB14490">
    <property type="generic name" value="Ferrous ascorbate"/>
</dbReference>
<dbReference type="DrugBank" id="DB14491">
    <property type="generic name" value="Ferrous fumarate"/>
</dbReference>
<dbReference type="DrugBank" id="DB14488">
    <property type="generic name" value="Ferrous gluconate"/>
</dbReference>
<dbReference type="DrugBank" id="DB14501">
    <property type="generic name" value="Ferrous glycine sulfate"/>
</dbReference>
<dbReference type="DrugBank" id="DB14489">
    <property type="generic name" value="Ferrous succinate"/>
</dbReference>
<dbReference type="DrugBank" id="DB13257">
    <property type="generic name" value="Ferrous sulfate anhydrous"/>
</dbReference>
<dbReference type="DrugBank" id="DB01592">
    <property type="generic name" value="Iron"/>
</dbReference>
<dbReference type="DrugBank" id="DB00893">
    <property type="generic name" value="Iron Dextran"/>
</dbReference>
<dbReference type="DrugBank" id="DB09112">
    <property type="generic name" value="Nitrous acid"/>
</dbReference>
<dbReference type="DrugBank" id="DB09140">
    <property type="generic name" value="Oxygen"/>
</dbReference>
<dbReference type="DrugBank" id="DB06154">
    <property type="generic name" value="Pentaerythritol tetranitrate"/>
</dbReference>
<dbReference type="DrugBank" id="DB07645">
    <property type="generic name" value="Sebacic acid"/>
</dbReference>
<dbReference type="DrugBank" id="DB09517">
    <property type="generic name" value="Sodium ferric gluconate complex"/>
</dbReference>
<dbReference type="DrugBank" id="DB08632">
    <property type="generic name" value="Trimesic acid"/>
</dbReference>
<dbReference type="DrugBank" id="DB14975">
    <property type="generic name" value="Voxelotor"/>
</dbReference>
<dbReference type="DrugBank" id="DB01593">
    <property type="generic name" value="Zinc"/>
</dbReference>
<dbReference type="DrugBank" id="DB14487">
    <property type="generic name" value="Zinc acetate"/>
</dbReference>
<dbReference type="DrugBank" id="DB14533">
    <property type="generic name" value="Zinc chloride"/>
</dbReference>
<dbReference type="DrugBank" id="DB14548">
    <property type="generic name" value="Zinc sulfate, unspecified form"/>
</dbReference>
<dbReference type="DrugCentral" id="P69905"/>
<dbReference type="TCDB" id="1.A.107.1.1">
    <property type="family name" value="the pore-forming globin (globin) family"/>
</dbReference>
<dbReference type="CarbonylDB" id="P69905"/>
<dbReference type="GlyConnect" id="2851">
    <property type="glycosylation" value="1 O-GlcNAc glycan (3 sites)"/>
</dbReference>
<dbReference type="GlyCosmos" id="P69905">
    <property type="glycosylation" value="7 sites, 1 glycan"/>
</dbReference>
<dbReference type="GlyGen" id="P69905">
    <property type="glycosylation" value="6 sites, 1 O-linked glycan (6 sites)"/>
</dbReference>
<dbReference type="iPTMnet" id="P69905"/>
<dbReference type="MetOSite" id="P69905"/>
<dbReference type="PhosphoSitePlus" id="P69905"/>
<dbReference type="BioMuta" id="HBA1"/>
<dbReference type="DMDM" id="57013850"/>
<dbReference type="REPRODUCTION-2DPAGE" id="IPI00410714"/>
<dbReference type="CPTAC" id="non-CPTAC-1129"/>
<dbReference type="CPTAC" id="non-CPTAC-1130"/>
<dbReference type="jPOST" id="P69905"/>
<dbReference type="MassIVE" id="P69905"/>
<dbReference type="PaxDb" id="9606-ENSP00000251595"/>
<dbReference type="PeptideAtlas" id="P69905"/>
<dbReference type="PRIDE" id="P69905"/>
<dbReference type="ProteomicsDB" id="57547"/>
<dbReference type="TopDownProteomics" id="P69905"/>
<dbReference type="ABCD" id="P69905">
    <property type="antibodies" value="2 sequenced antibodies"/>
</dbReference>
<dbReference type="Antibodypedia" id="65596">
    <property type="antibodies" value="189 antibodies from 18 providers"/>
</dbReference>
<dbReference type="Antibodypedia" id="8893">
    <property type="antibodies" value="241 antibodies from 28 providers"/>
</dbReference>
<dbReference type="DNASU" id="3039"/>
<dbReference type="Ensembl" id="ENST00000251595.11">
    <property type="protein sequence ID" value="ENSP00000251595.6"/>
    <property type="gene ID" value="ENSG00000188536.13"/>
</dbReference>
<dbReference type="Ensembl" id="ENST00000320868.9">
    <property type="protein sequence ID" value="ENSP00000322421.5"/>
    <property type="gene ID" value="ENSG00000206172.8"/>
</dbReference>
<dbReference type="GeneID" id="3039"/>
<dbReference type="GeneID" id="3040"/>
<dbReference type="KEGG" id="hsa:3039"/>
<dbReference type="KEGG" id="hsa:3040"/>
<dbReference type="MANE-Select" id="ENST00000251595.11">
    <property type="protein sequence ID" value="ENSP00000251595.6"/>
    <property type="RefSeq nucleotide sequence ID" value="NM_000517.6"/>
    <property type="RefSeq protein sequence ID" value="NP_000508.1"/>
</dbReference>
<dbReference type="MANE-Select" id="ENST00000320868.9">
    <property type="protein sequence ID" value="ENSP00000322421.5"/>
    <property type="RefSeq nucleotide sequence ID" value="NM_000558.5"/>
    <property type="RefSeq protein sequence ID" value="NP_000549.1"/>
</dbReference>
<dbReference type="UCSC" id="uc002cfv.4">
    <property type="organism name" value="human"/>
</dbReference>
<dbReference type="AGR" id="HGNC:4823"/>
<dbReference type="AGR" id="HGNC:4824"/>
<dbReference type="CTD" id="3039"/>
<dbReference type="CTD" id="3040"/>
<dbReference type="DisGeNET" id="3039"/>
<dbReference type="DisGeNET" id="3040"/>
<dbReference type="GeneCards" id="HBA1"/>
<dbReference type="GeneCards" id="HBA2"/>
<dbReference type="GeneReviews" id="HBA1"/>
<dbReference type="GeneReviews" id="HBA2"/>
<dbReference type="HGNC" id="HGNC:4823">
    <property type="gene designation" value="HBA1"/>
</dbReference>
<dbReference type="HGNC" id="HGNC:4824">
    <property type="gene designation" value="HBA2"/>
</dbReference>
<dbReference type="HPA" id="ENSG00000188536">
    <property type="expression patterns" value="Tissue enriched (bone)"/>
</dbReference>
<dbReference type="HPA" id="ENSG00000206172">
    <property type="expression patterns" value="Tissue enriched (bone)"/>
</dbReference>
<dbReference type="MalaCards" id="HBA1"/>
<dbReference type="MalaCards" id="HBA2"/>
<dbReference type="MIM" id="140700">
    <property type="type" value="phenotype"/>
</dbReference>
<dbReference type="MIM" id="141800">
    <property type="type" value="gene+phenotype"/>
</dbReference>
<dbReference type="MIM" id="141850">
    <property type="type" value="gene"/>
</dbReference>
<dbReference type="MIM" id="141860">
    <property type="type" value="gene"/>
</dbReference>
<dbReference type="MIM" id="604131">
    <property type="type" value="phenotype"/>
</dbReference>
<dbReference type="MIM" id="613978">
    <property type="type" value="phenotype"/>
</dbReference>
<dbReference type="neXtProt" id="NX_P69905"/>
<dbReference type="OpenTargets" id="ENSG00000188536"/>
<dbReference type="OpenTargets" id="ENSG00000206172"/>
<dbReference type="Orphanet" id="98791">
    <property type="disease" value="Alpha-thalassemia-intellectual disability syndrome linked to chromosome 16"/>
</dbReference>
<dbReference type="Orphanet" id="247511">
    <property type="disease" value="Autosomal dominant secondary polycythemia"/>
</dbReference>
<dbReference type="Orphanet" id="163596">
    <property type="disease" value="Hb Bart's hydrops fetalis"/>
</dbReference>
<dbReference type="Orphanet" id="93616">
    <property type="disease" value="Hemoglobin H disease"/>
</dbReference>
<dbReference type="Orphanet" id="330041">
    <property type="disease" value="Hemoglobin M disease"/>
</dbReference>
<dbReference type="PharmGKB" id="PA29199"/>
<dbReference type="VEuPathDB" id="HostDB:ENSG00000188536"/>
<dbReference type="VEuPathDB" id="HostDB:ENSG00000206172"/>
<dbReference type="eggNOG" id="KOG3378">
    <property type="taxonomic scope" value="Eukaryota"/>
</dbReference>
<dbReference type="GeneTree" id="ENSGT00940000154590"/>
<dbReference type="InParanoid" id="P69905"/>
<dbReference type="OMA" id="MFTSFPT"/>
<dbReference type="OrthoDB" id="8751793at2759"/>
<dbReference type="PAN-GO" id="P69905">
    <property type="GO annotations" value="9 GO annotations based on evolutionary models"/>
</dbReference>
<dbReference type="PhylomeDB" id="P69905"/>
<dbReference type="TreeFam" id="TF332328"/>
<dbReference type="PathwayCommons" id="P69905"/>
<dbReference type="Reactome" id="R-HSA-1237044">
    <property type="pathway name" value="Erythrocytes take up carbon dioxide and release oxygen"/>
</dbReference>
<dbReference type="Reactome" id="R-HSA-1247673">
    <property type="pathway name" value="Erythrocytes take up oxygen and release carbon dioxide"/>
</dbReference>
<dbReference type="Reactome" id="R-HSA-2168880">
    <property type="pathway name" value="Scavenging of heme from plasma"/>
</dbReference>
<dbReference type="Reactome" id="R-HSA-9707564">
    <property type="pathway name" value="Cytoprotection by HMOX1"/>
</dbReference>
<dbReference type="Reactome" id="R-HSA-9707616">
    <property type="pathway name" value="Heme signaling"/>
</dbReference>
<dbReference type="SignaLink" id="P69905"/>
<dbReference type="SIGNOR" id="P69905"/>
<dbReference type="BioGRID-ORCS" id="3039">
    <property type="hits" value="13 hits in 607 CRISPR screens"/>
</dbReference>
<dbReference type="BioGRID-ORCS" id="3040">
    <property type="hits" value="2 hits in 290 CRISPR screens"/>
</dbReference>
<dbReference type="ChiTaRS" id="HBA1">
    <property type="organism name" value="human"/>
</dbReference>
<dbReference type="ChiTaRS" id="HBA2">
    <property type="organism name" value="human"/>
</dbReference>
<dbReference type="EvolutionaryTrace" id="P69905"/>
<dbReference type="GeneWiki" id="HBA2"/>
<dbReference type="GeneWiki" id="Hemoglobin,_alpha_1"/>
<dbReference type="GeneWiki" id="Hemoglobin,_alpha_2"/>
<dbReference type="Pharos" id="P69905">
    <property type="development level" value="Tclin"/>
</dbReference>
<dbReference type="PRO" id="PR:P69905"/>
<dbReference type="Proteomes" id="UP000005640">
    <property type="component" value="Chromosome 16"/>
</dbReference>
<dbReference type="RNAct" id="P69905">
    <property type="molecule type" value="protein"/>
</dbReference>
<dbReference type="Bgee" id="ENSG00000188536">
    <property type="expression patterns" value="Expressed in monocyte and 102 other cell types or tissues"/>
</dbReference>
<dbReference type="ExpressionAtlas" id="P69905">
    <property type="expression patterns" value="baseline and differential"/>
</dbReference>
<dbReference type="GO" id="GO:0072562">
    <property type="term" value="C:blood microparticle"/>
    <property type="evidence" value="ECO:0007005"/>
    <property type="project" value="UniProtKB"/>
</dbReference>
<dbReference type="GO" id="GO:0005829">
    <property type="term" value="C:cytosol"/>
    <property type="evidence" value="ECO:0000304"/>
    <property type="project" value="Reactome"/>
</dbReference>
<dbReference type="GO" id="GO:0071682">
    <property type="term" value="C:endocytic vesicle lumen"/>
    <property type="evidence" value="ECO:0000304"/>
    <property type="project" value="Reactome"/>
</dbReference>
<dbReference type="GO" id="GO:0070062">
    <property type="term" value="C:extracellular exosome"/>
    <property type="evidence" value="ECO:0007005"/>
    <property type="project" value="UniProtKB"/>
</dbReference>
<dbReference type="GO" id="GO:0005576">
    <property type="term" value="C:extracellular region"/>
    <property type="evidence" value="ECO:0000304"/>
    <property type="project" value="Reactome"/>
</dbReference>
<dbReference type="GO" id="GO:0005615">
    <property type="term" value="C:extracellular space"/>
    <property type="evidence" value="ECO:0000314"/>
    <property type="project" value="UniProtKB"/>
</dbReference>
<dbReference type="GO" id="GO:0031838">
    <property type="term" value="C:haptoglobin-hemoglobin complex"/>
    <property type="evidence" value="ECO:0000314"/>
    <property type="project" value="BHF-UCL"/>
</dbReference>
<dbReference type="GO" id="GO:0005833">
    <property type="term" value="C:hemoglobin complex"/>
    <property type="evidence" value="ECO:0000314"/>
    <property type="project" value="BHF-UCL"/>
</dbReference>
<dbReference type="GO" id="GO:0016020">
    <property type="term" value="C:membrane"/>
    <property type="evidence" value="ECO:0007005"/>
    <property type="project" value="UniProtKB"/>
</dbReference>
<dbReference type="GO" id="GO:0020037">
    <property type="term" value="F:heme binding"/>
    <property type="evidence" value="ECO:0000318"/>
    <property type="project" value="GO_Central"/>
</dbReference>
<dbReference type="GO" id="GO:0005506">
    <property type="term" value="F:iron ion binding"/>
    <property type="evidence" value="ECO:0007669"/>
    <property type="project" value="InterPro"/>
</dbReference>
<dbReference type="GO" id="GO:0019825">
    <property type="term" value="F:oxygen binding"/>
    <property type="evidence" value="ECO:0000318"/>
    <property type="project" value="GO_Central"/>
</dbReference>
<dbReference type="GO" id="GO:0005344">
    <property type="term" value="F:oxygen carrier activity"/>
    <property type="evidence" value="ECO:0000318"/>
    <property type="project" value="GO_Central"/>
</dbReference>
<dbReference type="GO" id="GO:0015670">
    <property type="term" value="P:carbon dioxide transport"/>
    <property type="evidence" value="ECO:0000303"/>
    <property type="project" value="ComplexPortal"/>
</dbReference>
<dbReference type="GO" id="GO:0098869">
    <property type="term" value="P:cellular oxidant detoxification"/>
    <property type="evidence" value="ECO:0007669"/>
    <property type="project" value="GOC"/>
</dbReference>
<dbReference type="GO" id="GO:0042744">
    <property type="term" value="P:hydrogen peroxide catabolic process"/>
    <property type="evidence" value="ECO:0000314"/>
    <property type="project" value="BHF-UCL"/>
</dbReference>
<dbReference type="GO" id="GO:0006954">
    <property type="term" value="P:inflammatory response"/>
    <property type="evidence" value="ECO:0000314"/>
    <property type="project" value="BHF-UCL"/>
</dbReference>
<dbReference type="GO" id="GO:0030185">
    <property type="term" value="P:nitric oxide transport"/>
    <property type="evidence" value="ECO:0000314"/>
    <property type="project" value="ComplexPortal"/>
</dbReference>
<dbReference type="GO" id="GO:0015671">
    <property type="term" value="P:oxygen transport"/>
    <property type="evidence" value="ECO:0000314"/>
    <property type="project" value="ComplexPortal"/>
</dbReference>
<dbReference type="GO" id="GO:0042542">
    <property type="term" value="P:response to hydrogen peroxide"/>
    <property type="evidence" value="ECO:0000314"/>
    <property type="project" value="BHF-UCL"/>
</dbReference>
<dbReference type="CDD" id="cd08927">
    <property type="entry name" value="Hb-alpha-like"/>
    <property type="match status" value="1"/>
</dbReference>
<dbReference type="FunFam" id="1.10.490.10:FF:000002">
    <property type="entry name" value="Hemoglobin subunit alpha"/>
    <property type="match status" value="1"/>
</dbReference>
<dbReference type="Gene3D" id="1.10.490.10">
    <property type="entry name" value="Globins"/>
    <property type="match status" value="1"/>
</dbReference>
<dbReference type="InterPro" id="IPR000971">
    <property type="entry name" value="Globin"/>
</dbReference>
<dbReference type="InterPro" id="IPR009050">
    <property type="entry name" value="Globin-like_sf"/>
</dbReference>
<dbReference type="InterPro" id="IPR012292">
    <property type="entry name" value="Globin/Proto"/>
</dbReference>
<dbReference type="InterPro" id="IPR002338">
    <property type="entry name" value="Hemoglobin_a-typ"/>
</dbReference>
<dbReference type="InterPro" id="IPR050056">
    <property type="entry name" value="Hemoglobin_oxygen_transport"/>
</dbReference>
<dbReference type="InterPro" id="IPR002339">
    <property type="entry name" value="Hemoglobin_pi"/>
</dbReference>
<dbReference type="PANTHER" id="PTHR11442">
    <property type="entry name" value="HEMOGLOBIN FAMILY MEMBER"/>
    <property type="match status" value="1"/>
</dbReference>
<dbReference type="PANTHER" id="PTHR11442:SF48">
    <property type="entry name" value="HEMOGLOBIN SUBUNIT ALPHA"/>
    <property type="match status" value="1"/>
</dbReference>
<dbReference type="Pfam" id="PF00042">
    <property type="entry name" value="Globin"/>
    <property type="match status" value="1"/>
</dbReference>
<dbReference type="PRINTS" id="PR00612">
    <property type="entry name" value="ALPHAHAEM"/>
</dbReference>
<dbReference type="PRINTS" id="PR00815">
    <property type="entry name" value="PIHAEM"/>
</dbReference>
<dbReference type="SUPFAM" id="SSF46458">
    <property type="entry name" value="Globin-like"/>
    <property type="match status" value="1"/>
</dbReference>
<dbReference type="PROSITE" id="PS01033">
    <property type="entry name" value="GLOBIN"/>
    <property type="match status" value="1"/>
</dbReference>
<keyword id="KW-0002">3D-structure</keyword>
<keyword id="KW-0007">Acetylation</keyword>
<keyword id="KW-0903">Direct protein sequencing</keyword>
<keyword id="KW-0225">Disease variant</keyword>
<keyword id="KW-0971">Glycation</keyword>
<keyword id="KW-0325">Glycoprotein</keyword>
<keyword id="KW-0349">Heme</keyword>
<keyword id="KW-0360">Hereditary hemolytic anemia</keyword>
<keyword id="KW-0408">Iron</keyword>
<keyword id="KW-0479">Metal-binding</keyword>
<keyword id="KW-0561">Oxygen transport</keyword>
<keyword id="KW-0597">Phosphoprotein</keyword>
<keyword id="KW-1267">Proteomics identification</keyword>
<keyword id="KW-1185">Reference proteome</keyword>
<keyword id="KW-0813">Transport</keyword>
<sequence>MVLSPADKTNVKAAWGKVGAHAGEYGAEALERMFLSFPTTKTYFPHFDLSHGSAQVKGHGKKVADALTNAVAHVDDMPNALSALSDLHAHKLRVDPVNFKLLSHCLLVTLAAHLPAEFTPAVHASLDKFLASVSTVLTSKYR</sequence>
<proteinExistence type="evidence at protein level"/>
<organism>
    <name type="scientific">Homo sapiens</name>
    <name type="common">Human</name>
    <dbReference type="NCBI Taxonomy" id="9606"/>
    <lineage>
        <taxon>Eukaryota</taxon>
        <taxon>Metazoa</taxon>
        <taxon>Chordata</taxon>
        <taxon>Craniata</taxon>
        <taxon>Vertebrata</taxon>
        <taxon>Euteleostomi</taxon>
        <taxon>Mammalia</taxon>
        <taxon>Eutheria</taxon>
        <taxon>Euarchontoglires</taxon>
        <taxon>Primates</taxon>
        <taxon>Haplorrhini</taxon>
        <taxon>Catarrhini</taxon>
        <taxon>Hominidae</taxon>
        <taxon>Homo</taxon>
    </lineage>
</organism>
<gene>
    <name type="primary">HBA1</name>
</gene>
<gene>
    <name type="primary">HBA2</name>
</gene>
<evidence type="ECO:0000250" key="1">
    <source>
        <dbReference type="UniProtKB" id="P01942"/>
    </source>
</evidence>
<evidence type="ECO:0000255" key="2">
    <source>
        <dbReference type="PROSITE-ProRule" id="PRU00238"/>
    </source>
</evidence>
<evidence type="ECO:0000269" key="3">
    <source>
    </source>
</evidence>
<evidence type="ECO:0000269" key="4">
    <source>
    </source>
</evidence>
<evidence type="ECO:0000269" key="5">
    <source>
    </source>
</evidence>
<evidence type="ECO:0000269" key="6">
    <source>
    </source>
</evidence>
<evidence type="ECO:0000269" key="7">
    <source>
    </source>
</evidence>
<evidence type="ECO:0000269" key="8">
    <source>
    </source>
</evidence>
<evidence type="ECO:0000269" key="9">
    <source>
    </source>
</evidence>
<evidence type="ECO:0000269" key="10">
    <source>
    </source>
</evidence>
<evidence type="ECO:0000269" key="11">
    <source>
    </source>
</evidence>
<evidence type="ECO:0000269" key="12">
    <source>
    </source>
</evidence>
<evidence type="ECO:0000269" key="13">
    <source>
    </source>
</evidence>
<evidence type="ECO:0000269" key="14">
    <source>
    </source>
</evidence>
<evidence type="ECO:0000269" key="15">
    <source>
    </source>
</evidence>
<evidence type="ECO:0000269" key="16">
    <source>
    </source>
</evidence>
<evidence type="ECO:0000269" key="17">
    <source>
    </source>
</evidence>
<evidence type="ECO:0000269" key="18">
    <source>
    </source>
</evidence>
<evidence type="ECO:0000269" key="19">
    <source>
    </source>
</evidence>
<evidence type="ECO:0000269" key="20">
    <source>
    </source>
</evidence>
<evidence type="ECO:0000269" key="21">
    <source>
    </source>
</evidence>
<evidence type="ECO:0000269" key="22">
    <source>
    </source>
</evidence>
<evidence type="ECO:0000269" key="23">
    <source>
    </source>
</evidence>
<evidence type="ECO:0000269" key="24">
    <source>
    </source>
</evidence>
<evidence type="ECO:0000269" key="25">
    <source>
    </source>
</evidence>
<evidence type="ECO:0000269" key="26">
    <source>
    </source>
</evidence>
<evidence type="ECO:0000269" key="27">
    <source>
    </source>
</evidence>
<evidence type="ECO:0000269" key="28">
    <source>
    </source>
</evidence>
<evidence type="ECO:0000269" key="29">
    <source>
    </source>
</evidence>
<evidence type="ECO:0000269" key="30">
    <source>
    </source>
</evidence>
<evidence type="ECO:0000269" key="31">
    <source>
    </source>
</evidence>
<evidence type="ECO:0000269" key="32">
    <source>
    </source>
</evidence>
<evidence type="ECO:0000269" key="33">
    <source>
    </source>
</evidence>
<evidence type="ECO:0000269" key="34">
    <source>
    </source>
</evidence>
<evidence type="ECO:0000269" key="35">
    <source>
    </source>
</evidence>
<evidence type="ECO:0000269" key="36">
    <source>
    </source>
</evidence>
<evidence type="ECO:0000269" key="37">
    <source>
    </source>
</evidence>
<evidence type="ECO:0000269" key="38">
    <source>
    </source>
</evidence>
<evidence type="ECO:0000269" key="39">
    <source>
    </source>
</evidence>
<evidence type="ECO:0000269" key="40">
    <source>
    </source>
</evidence>
<evidence type="ECO:0000269" key="41">
    <source>
    </source>
</evidence>
<evidence type="ECO:0000269" key="42">
    <source>
    </source>
</evidence>
<evidence type="ECO:0000269" key="43">
    <source>
    </source>
</evidence>
<evidence type="ECO:0000269" key="44">
    <source>
    </source>
</evidence>
<evidence type="ECO:0000269" key="45">
    <source>
    </source>
</evidence>
<evidence type="ECO:0000269" key="46">
    <source>
    </source>
</evidence>
<evidence type="ECO:0000269" key="47">
    <source>
    </source>
</evidence>
<evidence type="ECO:0000269" key="48">
    <source>
    </source>
</evidence>
<evidence type="ECO:0000269" key="49">
    <source>
    </source>
</evidence>
<evidence type="ECO:0000269" key="50">
    <source>
    </source>
</evidence>
<evidence type="ECO:0000269" key="51">
    <source>
    </source>
</evidence>
<evidence type="ECO:0000269" key="52">
    <source>
    </source>
</evidence>
<evidence type="ECO:0000269" key="53">
    <source>
    </source>
</evidence>
<evidence type="ECO:0000269" key="54">
    <source>
    </source>
</evidence>
<evidence type="ECO:0000269" key="55">
    <source>
    </source>
</evidence>
<evidence type="ECO:0000269" key="56">
    <source>
    </source>
</evidence>
<evidence type="ECO:0000269" key="57">
    <source>
    </source>
</evidence>
<evidence type="ECO:0000269" key="58">
    <source>
    </source>
</evidence>
<evidence type="ECO:0000269" key="59">
    <source>
    </source>
</evidence>
<evidence type="ECO:0000269" key="60">
    <source>
    </source>
</evidence>
<evidence type="ECO:0000269" key="61">
    <source>
    </source>
</evidence>
<evidence type="ECO:0000269" key="62">
    <source>
    </source>
</evidence>
<evidence type="ECO:0000269" key="63">
    <source>
    </source>
</evidence>
<evidence type="ECO:0000269" key="64">
    <source>
    </source>
</evidence>
<evidence type="ECO:0000269" key="65">
    <source>
    </source>
</evidence>
<evidence type="ECO:0000269" key="66">
    <source>
    </source>
</evidence>
<evidence type="ECO:0000269" key="67">
    <source>
    </source>
</evidence>
<evidence type="ECO:0000269" key="68">
    <source>
    </source>
</evidence>
<evidence type="ECO:0000269" key="69">
    <source>
    </source>
</evidence>
<evidence type="ECO:0000269" key="70">
    <source>
    </source>
</evidence>
<evidence type="ECO:0000269" key="71">
    <source>
    </source>
</evidence>
<evidence type="ECO:0000269" key="72">
    <source>
    </source>
</evidence>
<evidence type="ECO:0000269" key="73">
    <source>
    </source>
</evidence>
<evidence type="ECO:0000269" key="74">
    <source>
    </source>
</evidence>
<evidence type="ECO:0000269" key="75">
    <source>
    </source>
</evidence>
<evidence type="ECO:0000269" key="76">
    <source>
    </source>
</evidence>
<evidence type="ECO:0000269" key="77">
    <source>
    </source>
</evidence>
<evidence type="ECO:0000269" key="78">
    <source>
    </source>
</evidence>
<evidence type="ECO:0000269" key="79">
    <source>
    </source>
</evidence>
<evidence type="ECO:0000269" key="80">
    <source>
    </source>
</evidence>
<evidence type="ECO:0000269" key="81">
    <source>
    </source>
</evidence>
<evidence type="ECO:0000269" key="82">
    <source>
    </source>
</evidence>
<evidence type="ECO:0000269" key="83">
    <source>
    </source>
</evidence>
<evidence type="ECO:0000269" key="84">
    <source>
    </source>
</evidence>
<evidence type="ECO:0000269" key="85">
    <source>
    </source>
</evidence>
<evidence type="ECO:0000269" key="86">
    <source>
    </source>
</evidence>
<evidence type="ECO:0000269" key="87">
    <source>
    </source>
</evidence>
<evidence type="ECO:0000269" key="88">
    <source>
    </source>
</evidence>
<evidence type="ECO:0000269" key="89">
    <source>
    </source>
</evidence>
<evidence type="ECO:0000269" key="90">
    <source>
    </source>
</evidence>
<evidence type="ECO:0000269" key="91">
    <source>
    </source>
</evidence>
<evidence type="ECO:0000269" key="92">
    <source>
    </source>
</evidence>
<evidence type="ECO:0000269" key="93">
    <source>
    </source>
</evidence>
<evidence type="ECO:0000269" key="94">
    <source>
    </source>
</evidence>
<evidence type="ECO:0000269" key="95">
    <source>
    </source>
</evidence>
<evidence type="ECO:0000269" key="96">
    <source>
    </source>
</evidence>
<evidence type="ECO:0000269" key="97">
    <source>
    </source>
</evidence>
<evidence type="ECO:0000269" key="98">
    <source>
    </source>
</evidence>
<evidence type="ECO:0000269" key="99">
    <source>
    </source>
</evidence>
<evidence type="ECO:0000269" key="100">
    <source>
    </source>
</evidence>
<evidence type="ECO:0000269" key="101">
    <source ref="11"/>
</evidence>
<evidence type="ECO:0000269" key="102">
    <source ref="12"/>
</evidence>
<evidence type="ECO:0000269" key="103">
    <source ref="83"/>
</evidence>
<evidence type="ECO:0000303" key="104">
    <source>
    </source>
</evidence>
<evidence type="ECO:0000305" key="105"/>
<evidence type="ECO:0000305" key="106">
    <source>
    </source>
</evidence>
<evidence type="ECO:0007744" key="107">
    <source>
    </source>
</evidence>
<evidence type="ECO:0007744" key="108">
    <source>
    </source>
</evidence>
<evidence type="ECO:0007829" key="109">
    <source>
        <dbReference type="PDB" id="1M9P"/>
    </source>
</evidence>
<evidence type="ECO:0007829" key="110">
    <source>
        <dbReference type="PDB" id="2M6Z"/>
    </source>
</evidence>
<evidence type="ECO:0007829" key="111">
    <source>
        <dbReference type="PDB" id="2W72"/>
    </source>
</evidence>
<evidence type="ECO:0007829" key="112">
    <source>
        <dbReference type="PDB" id="6HK2"/>
    </source>
</evidence>
<evidence type="ECO:0007829" key="113">
    <source>
        <dbReference type="PDB" id="6XDT"/>
    </source>
</evidence>
<comment type="function">
    <text>Involved in oxygen transport from the lung to the various peripheral tissues.</text>
</comment>
<comment type="function">
    <molecule>Hemopressin</molecule>
    <text evidence="30">Hemopressin acts as an antagonist peptide of the cannabinoid receptor CNR1 (PubMed:18077343). Hemopressin-binding efficiently blocks cannabinoid receptor CNR1 and subsequent signaling (PubMed:18077343).</text>
</comment>
<comment type="subunit">
    <text>Heterotetramer of two alpha chains and two beta chains in adult hemoglobin A (HbA); two alpha chains and two delta chains in adult hemoglobin A2 (HbA2); two alpha chains and two epsilon chains in early embryonic hemoglobin Gower-2; two alpha chains and two gamma chains in fetal hemoglobin F (HbF).</text>
</comment>
<comment type="subunit">
    <text evidence="42">(Microbial infection) Interacts with Staphylococcus aureus protein isdB.</text>
</comment>
<comment type="interaction">
    <interactant intactId="EBI-714680">
        <id>P69905</id>
    </interactant>
    <interactant intactId="EBI-720250">
        <id>Q9NZD4</id>
        <label>AHSP</label>
    </interactant>
    <organismsDiffer>false</organismsDiffer>
    <experiments>2</experiments>
</comment>
<comment type="interaction">
    <interactant intactId="EBI-714680">
        <id>P69905</id>
    </interactant>
    <interactant intactId="EBI-2808286">
        <id>Q2TAC2</id>
        <label>CCDC57</label>
    </interactant>
    <organismsDiffer>false</organismsDiffer>
    <experiments>3</experiments>
</comment>
<comment type="interaction">
    <interactant intactId="EBI-714680">
        <id>P69905</id>
    </interactant>
    <interactant intactId="EBI-1046040">
        <id>P00387</id>
        <label>CYB5R3</label>
    </interactant>
    <organismsDiffer>false</organismsDiffer>
    <experiments>2</experiments>
</comment>
<comment type="interaction">
    <interactant intactId="EBI-714680">
        <id>P69905</id>
    </interactant>
    <interactant intactId="EBI-715554">
        <id>P68871</id>
        <label>HBB</label>
    </interactant>
    <organismsDiffer>false</organismsDiffer>
    <experiments>32</experiments>
</comment>
<comment type="interaction">
    <interactant intactId="EBI-714680">
        <id>P69905</id>
    </interactant>
    <interactant intactId="EBI-6152722">
        <id>P02042</id>
        <label>HBD</label>
    </interactant>
    <organismsDiffer>false</organismsDiffer>
    <experiments>3</experiments>
</comment>
<comment type="interaction">
    <interactant intactId="EBI-714680">
        <id>P69905</id>
    </interactant>
    <interactant intactId="EBI-6190240">
        <id>P02100</id>
        <label>HBE1</label>
    </interactant>
    <organismsDiffer>false</organismsDiffer>
    <experiments>4</experiments>
</comment>
<comment type="interaction">
    <interactant intactId="EBI-714680">
        <id>P69905</id>
    </interactant>
    <interactant intactId="EBI-3910089">
        <id>P69892</id>
        <label>HBG2</label>
    </interactant>
    <organismsDiffer>false</organismsDiffer>
    <experiments>3</experiments>
</comment>
<comment type="interaction">
    <interactant intactId="EBI-714680">
        <id>P69905</id>
    </interactant>
    <interactant intactId="EBI-10193656">
        <id>P09105</id>
        <label>HBQ1</label>
    </interactant>
    <organismsDiffer>false</organismsDiffer>
    <experiments>3</experiments>
</comment>
<comment type="interaction">
    <interactant intactId="EBI-714680">
        <id>P69905</id>
    </interactant>
    <interactant intactId="EBI-948001">
        <id>Q15323</id>
        <label>KRT31</label>
    </interactant>
    <organismsDiffer>false</organismsDiffer>
    <experiments>3</experiments>
</comment>
<comment type="interaction">
    <interactant intactId="EBI-714680">
        <id>P69905</id>
    </interactant>
    <interactant intactId="EBI-1047093">
        <id>O76011</id>
        <label>KRT34</label>
    </interactant>
    <organismsDiffer>false</organismsDiffer>
    <experiments>3</experiments>
</comment>
<comment type="interaction">
    <interactant intactId="EBI-714680">
        <id>P69905</id>
    </interactant>
    <interactant intactId="EBI-10171697">
        <id>Q6A162</id>
        <label>KRT40</label>
    </interactant>
    <organismsDiffer>false</organismsDiffer>
    <experiments>3</experiments>
</comment>
<comment type="interaction">
    <interactant intactId="EBI-714680">
        <id>P69905</id>
    </interactant>
    <interactant intactId="EBI-1391623">
        <id>P29474</id>
        <label>NOS3</label>
    </interactant>
    <organismsDiffer>false</organismsDiffer>
    <experiments>2</experiments>
</comment>
<comment type="interaction">
    <interactant intactId="EBI-714680">
        <id>P69905</id>
    </interactant>
    <interactant intactId="EBI-22310682">
        <id>P0DPK4</id>
        <label>NOTCH2NLC</label>
    </interactant>
    <organismsDiffer>false</organismsDiffer>
    <experiments>3</experiments>
</comment>
<comment type="tissue specificity">
    <text>Red blood cells.</text>
</comment>
<comment type="PTM">
    <text>The initiator Met is not cleaved in variant Thionville and is acetylated.</text>
</comment>
<comment type="disease" evidence="41">
    <disease id="DI-01698">
        <name>Heinz body anemias</name>
        <acronym>HEIBAN</acronym>
        <description>Form of non-spherocytic hemolytic anemia of Dacie type 1. After splenectomy, which has little benefit, basophilic inclusions called Heinz bodies are demonstrable in the erythrocytes. Before splenectomy, diffuse or punctate basophilia may be evident. Most of these cases are probably instances of hemoglobinopathy. The hemoglobin demonstrates heat lability. Heinz bodies are observed also with the Ivemark syndrome (asplenia with cardiovascular anomalies) and with glutathione peroxidase deficiency.</description>
        <dbReference type="MIM" id="140700"/>
    </disease>
    <text>The disease may be caused by variants affecting the gene represented in this entry.</text>
</comment>
<comment type="disease">
    <disease id="DI-01181">
        <name>Alpha-thalassemia</name>
        <acronym>A-THAL</acronym>
        <description>A form of thalassemia. Thalassemias are common monogenic diseases occurring mostly in Mediterranean and Southeast Asian populations. The hallmark of alpha-thalassemia is an imbalance in globin-chain production in the adult HbA molecule. The level of alpha chain production can range from none to very nearly normal levels. Deletion of both copies of each of the two alpha-globin genes causes alpha(0)-thalassemia, also known as homozygous alpha thalassemia. Due to the complete absence of alpha chains, the predominant fetal hemoglobin is a tetramer of gamma-chains (Bart hemoglobin) that has essentially no oxygen carrying capacity. This causes oxygen starvation in the fetal tissues leading to prenatal lethality or early neonatal death. The loss of two alpha genes results in mild alpha-thalassemia, also known as heterozygous alpha-thalassemia. Affected individuals have small red cells and a mild anemia (microcytosis). If three of the four alpha-globin genes are functional, individuals are completely asymptomatic. Some rare forms of alpha-thalassemia are due to point mutations (non-deletional alpha-thalassemia).</description>
        <dbReference type="MIM" id="604131"/>
    </disease>
    <text>The disease is caused by variants affecting the gene represented in this entry.</text>
</comment>
<comment type="disease">
    <text>Alpha(0)-thalassemia is associated with non-immune hydrops fetalis, a generalized edema of the fetus with fluid accumulation in the body cavities due to non-immune causes. Non-immune hydrops fetalis is not a diagnosis in itself but a symptom, a feature of many genetic disorders, and the end-stage of a wide variety of disorders.</text>
</comment>
<comment type="disease" evidence="4">
    <disease id="DI-03202">
        <name>Hemoglobin H disease</name>
        <acronym>HBH</acronym>
        <description>A form of alpha-thalassemia due to the loss of three alpha genes. This results in high levels of a tetramer of four beta chains (hemoglobin H), causing a severe and life-threatening anemia. Untreated, most patients die in childhood or early adolescence.</description>
        <dbReference type="MIM" id="613978"/>
    </disease>
    <text>The disease is caused by variants affecting the gene represented in this entry.</text>
</comment>
<comment type="miscellaneous">
    <text>Gives blood its red color.</text>
</comment>
<comment type="similarity">
    <text evidence="2">Belongs to the globin family.</text>
</comment>
<comment type="sequence caution" evidence="105">
    <conflict type="erroneous initiation">
        <sequence resource="EMBL-CDS" id="BAD97112"/>
    </conflict>
</comment>
<comment type="online information" name="HbVar">
    <link uri="https://globin.bx.psu.edu/cgi-bin/hbvar/query_vars3?mode=directlink&amp;gene=HBA1"/>
    <text>Human hemoglobin variants and thalassemias</text>
</comment>
<comment type="online information" name="HbVar">
    <link uri="https://globin.bx.psu.edu/cgi-bin/hbvar/query_vars3?mode=directlink&amp;gene=HBA2"/>
    <text>Human hemoglobin variants and thalassemias</text>
</comment>
<comment type="online information" name="Wikipedia">
    <link uri="https://en.wikipedia.org/wiki/Hemoglobin"/>
    <text>Hemoglobin entry</text>
</comment>
<comment type="online information" name="Protein Spotlight">
    <link uri="https://www.proteinspotlight.org/back_issues/084/"/>
    <text>Journey into a tiny world - Issue 84 of July 2007</text>
</comment>
<protein>
    <recommendedName>
        <fullName>Hemoglobin subunit alpha</fullName>
    </recommendedName>
    <alternativeName>
        <fullName>Alpha-globin</fullName>
    </alternativeName>
    <alternativeName>
        <fullName>Hemoglobin alpha chain</fullName>
    </alternativeName>
    <component>
        <recommendedName>
            <fullName evidence="104">Hemopressin</fullName>
        </recommendedName>
    </component>
</protein>
<accession>P69905</accession>
<accession>P01922</accession>
<accession>Q1HDT5</accession>
<accession>Q3MIF5</accession>
<accession>Q53F97</accession>
<accession>Q96KF1</accession>
<accession>Q9NYR7</accession>
<accession>Q9UCM0</accession>
<reference key="1">
    <citation type="journal article" date="1980" name="Cell">
        <title>The 3' untranslated regions of the duplicated human alpha-globin genes are unexpectedly divergent.</title>
        <authorList>
            <person name="Michelson A.M."/>
            <person name="Orkin S.H."/>
        </authorList>
    </citation>
    <scope>NUCLEOTIDE SEQUENCE [GENOMIC DNA] (HBA1)</scope>
</reference>
<reference key="2">
    <citation type="journal article" date="1980" name="J. Biol. Chem.">
        <title>Nucleotide sequence of the coding portion of human alpha globin messenger RNA.</title>
        <authorList>
            <person name="Wilson J.T."/>
            <person name="Wilson L.B."/>
            <person name="Reddy V.B."/>
            <person name="Cavallesco C."/>
            <person name="Ghosh P.K."/>
            <person name="Deriel J.K."/>
            <person name="Forget B.G."/>
            <person name="Weissman S.M."/>
        </authorList>
    </citation>
    <scope>NUCLEOTIDE SEQUENCE [MRNA] (HBA2)</scope>
</reference>
<reference key="3">
    <citation type="journal article" date="1980" name="Proc. Natl. Acad. Sci. U.S.A.">
        <title>Cloning and complete nucleotide sequence of human 5'-alpha-globin gene.</title>
        <authorList>
            <person name="Liebhaber S.A."/>
            <person name="Goossens M.J."/>
            <person name="Kan Y.W."/>
        </authorList>
    </citation>
    <scope>NUCLEOTIDE SEQUENCE [GENOMIC DNA] (HBA2)</scope>
</reference>
<reference key="4">
    <citation type="journal article" date="1981" name="Proc. Natl. Acad. Sci. U.S.A.">
        <title>Mutation in an intervening sequence splice junction in man.</title>
        <authorList>
            <person name="Orkin S.H."/>
            <person name="Goff S.C."/>
            <person name="Hechtman R.L."/>
        </authorList>
    </citation>
    <scope>NUCLEOTIDE SEQUENCE [GENOMIC DNA]</scope>
</reference>
<reference key="5">
    <citation type="journal article" date="2001" name="Haematologica">
        <title>Alpha2(CD31 AGG--&gt;AAG, Arg--&gt;Lys) causing non-deletional alpha-thalassemia in a Chinese family with HbH disease.</title>
        <authorList>
            <person name="Zhao Y."/>
            <person name="Xu X."/>
        </authorList>
    </citation>
    <scope>NUCLEOTIDE SEQUENCE [GENOMIC DNA]</scope>
    <scope>VARIANT LYS-32</scope>
</reference>
<reference key="6">
    <citation type="journal article" date="2001" name="Zhonghua Yi Xue Yi Chuan Xue Za Zhi">
        <title>Rapid detection of the common alpha-thalassemia-2 determinants by PCR assay.</title>
        <authorList>
            <person name="Zhao Y."/>
            <person name="Zhong M."/>
            <person name="Liu Z."/>
            <person name="Xu X."/>
        </authorList>
    </citation>
    <scope>NUCLEOTIDE SEQUENCE [GENOMIC DNA] (HBA1)</scope>
</reference>
<reference key="7">
    <citation type="journal article" date="2006" name="Science">
        <title>A regulatory SNP causes a human genetic disease by creating a new transcriptional promoter.</title>
        <authorList>
            <person name="De Gobbi M."/>
            <person name="Viprakasit V."/>
            <person name="Hughes J.R."/>
            <person name="Fisher C."/>
            <person name="Buckle V.J."/>
            <person name="Ayyub H."/>
            <person name="Gibbons R.J."/>
            <person name="Vernimmen D."/>
            <person name="Yoshinaga Y."/>
            <person name="de Jong P."/>
            <person name="Cheng J.-F."/>
            <person name="Rubin E.M."/>
            <person name="Wood W.G."/>
            <person name="Bowden D."/>
            <person name="Higgs D.R."/>
        </authorList>
    </citation>
    <scope>NUCLEOTIDE SEQUENCE [GENOMIC DNA] (ALPHA-1 AND ALPHA-2)</scope>
</reference>
<reference key="8">
    <citation type="submission" date="1998-10" db="EMBL/GenBank/DDBJ databases">
        <title>Rapid sequencing of mRNA of the human alpha two globin, directly isolated from reticulocytes in whole blood.</title>
        <authorList>
            <person name="Kutlar F."/>
            <person name="Leithner C."/>
            <person name="Kutlar A."/>
        </authorList>
    </citation>
    <scope>NUCLEOTIDE SEQUENCE [MRNA] (HBA2)</scope>
    <source>
        <tissue>Blood</tissue>
    </source>
</reference>
<reference key="9">
    <citation type="submission" date="1998-11" db="EMBL/GenBank/DDBJ databases">
        <title>cDNA sequencing of human alpha one globin mRNA, the 3'untranslated region is different than alpha two globin.</title>
        <authorList>
            <person name="Kutlar F."/>
            <person name="Leithner C."/>
            <person name="Kutlar A."/>
        </authorList>
    </citation>
    <scope>NUCLEOTIDE SEQUENCE [MRNA] (HBA1)</scope>
    <source>
        <tissue>Blood</tissue>
    </source>
</reference>
<reference key="10">
    <citation type="submission" date="2001-02" db="EMBL/GenBank/DDBJ databases">
        <title>An alpha chain variant 'Hemoglobin J-Toronto (Cd.5 /Ala to Asp)' mutation was detected on the alpha-1 globin mRNA by sequencing of cDNA.</title>
        <authorList>
            <person name="Kutlar F."/>
            <person name="Holley L."/>
            <person name="Leithner C."/>
            <person name="Kutlar A."/>
        </authorList>
    </citation>
    <scope>NUCLEOTIDE SEQUENCE [MRNA]</scope>
    <source>
        <tissue>Blood</tissue>
    </source>
</reference>
<reference key="11">
    <citation type="submission" date="2002-08" db="EMBL/GenBank/DDBJ databases">
        <title>Unstable Hb 'Evans' (GTG-&gt;ATG/Val 62 Met) was detected on the alpha-2 globin gene of an Hispanic girl.</title>
        <authorList>
            <person name="Kutlar F."/>
            <person name="Elam D."/>
            <person name="Hoff J.V."/>
            <person name="Holley L."/>
            <person name="Kutlar A."/>
        </authorList>
    </citation>
    <scope>NUCLEOTIDE SEQUENCE [GENOMIC DNA] (HBA2)</scope>
    <scope>VARIANT EVANS MET-63</scope>
    <source>
        <tissue>Blood</tissue>
    </source>
</reference>
<reference key="12">
    <citation type="submission" date="2006-04" db="EMBL/GenBank/DDBJ databases">
        <title>Hb G-Philadelphia (Alpha,Codon 68;AAC&gt;AAG/Asn&gt;Lys)in black is detected on a chromosome that carries alpha 3.7 kb deletion showed completely normal alpha-2 globin gene sequence.</title>
        <authorList>
            <person name="Kutlar F."/>
            <person name="Davis D.H."/>
            <person name="Nechtman J."/>
            <person name="Elam D."/>
        </authorList>
    </citation>
    <scope>NUCLEOTIDE SEQUENCE [GENOMIC DNA] (HBA2)</scope>
    <scope>VARIANT G-PHILADELPHIA LYS-69</scope>
</reference>
<reference key="13">
    <citation type="submission" date="2005-04" db="EMBL/GenBank/DDBJ databases">
        <authorList>
            <person name="Totoki Y."/>
            <person name="Toyoda A."/>
            <person name="Takeda T."/>
            <person name="Sakaki Y."/>
            <person name="Tanaka A."/>
            <person name="Yokoyama S."/>
        </authorList>
    </citation>
    <scope>NUCLEOTIDE SEQUENCE [LARGE SCALE MRNA]</scope>
    <source>
        <tissue>Thymus</tissue>
    </source>
</reference>
<reference key="14">
    <citation type="journal article" date="2001" name="Hum. Mol. Genet.">
        <title>Sequence, structure and pathology of the fully annotated terminal 2 Mb of the short arm of human chromosome 16.</title>
        <authorList>
            <person name="Daniels R.J."/>
            <person name="Peden J.F."/>
            <person name="Lloyd C."/>
            <person name="Horsley S.W."/>
            <person name="Clark K."/>
            <person name="Tufarelli C."/>
            <person name="Kearney L."/>
            <person name="Buckle V.J."/>
            <person name="Doggett N.A."/>
            <person name="Flint J."/>
            <person name="Higgs D.R."/>
        </authorList>
    </citation>
    <scope>NUCLEOTIDE SEQUENCE [LARGE SCALE GENOMIC DNA] (HBA1 AND HBA2)</scope>
</reference>
<reference key="15">
    <citation type="journal article" date="2004" name="Nature">
        <title>The sequence and analysis of duplication-rich human chromosome 16.</title>
        <authorList>
            <person name="Martin J."/>
            <person name="Han C."/>
            <person name="Gordon L.A."/>
            <person name="Terry A."/>
            <person name="Prabhakar S."/>
            <person name="She X."/>
            <person name="Xie G."/>
            <person name="Hellsten U."/>
            <person name="Chan Y.M."/>
            <person name="Altherr M."/>
            <person name="Couronne O."/>
            <person name="Aerts A."/>
            <person name="Bajorek E."/>
            <person name="Black S."/>
            <person name="Blumer H."/>
            <person name="Branscomb E."/>
            <person name="Brown N.C."/>
            <person name="Bruno W.J."/>
            <person name="Buckingham J.M."/>
            <person name="Callen D.F."/>
            <person name="Campbell C.S."/>
            <person name="Campbell M.L."/>
            <person name="Campbell E.W."/>
            <person name="Caoile C."/>
            <person name="Challacombe J.F."/>
            <person name="Chasteen L.A."/>
            <person name="Chertkov O."/>
            <person name="Chi H.C."/>
            <person name="Christensen M."/>
            <person name="Clark L.M."/>
            <person name="Cohn J.D."/>
            <person name="Denys M."/>
            <person name="Detter J.C."/>
            <person name="Dickson M."/>
            <person name="Dimitrijevic-Bussod M."/>
            <person name="Escobar J."/>
            <person name="Fawcett J.J."/>
            <person name="Flowers D."/>
            <person name="Fotopulos D."/>
            <person name="Glavina T."/>
            <person name="Gomez M."/>
            <person name="Gonzales E."/>
            <person name="Goodstein D."/>
            <person name="Goodwin L.A."/>
            <person name="Grady D.L."/>
            <person name="Grigoriev I."/>
            <person name="Groza M."/>
            <person name="Hammon N."/>
            <person name="Hawkins T."/>
            <person name="Haydu L."/>
            <person name="Hildebrand C.E."/>
            <person name="Huang W."/>
            <person name="Israni S."/>
            <person name="Jett J."/>
            <person name="Jewett P.B."/>
            <person name="Kadner K."/>
            <person name="Kimball H."/>
            <person name="Kobayashi A."/>
            <person name="Krawczyk M.-C."/>
            <person name="Leyba T."/>
            <person name="Longmire J.L."/>
            <person name="Lopez F."/>
            <person name="Lou Y."/>
            <person name="Lowry S."/>
            <person name="Ludeman T."/>
            <person name="Manohar C.F."/>
            <person name="Mark G.A."/>
            <person name="McMurray K.L."/>
            <person name="Meincke L.J."/>
            <person name="Morgan J."/>
            <person name="Moyzis R.K."/>
            <person name="Mundt M.O."/>
            <person name="Munk A.C."/>
            <person name="Nandkeshwar R.D."/>
            <person name="Pitluck S."/>
            <person name="Pollard M."/>
            <person name="Predki P."/>
            <person name="Parson-Quintana B."/>
            <person name="Ramirez L."/>
            <person name="Rash S."/>
            <person name="Retterer J."/>
            <person name="Ricke D.O."/>
            <person name="Robinson D.L."/>
            <person name="Rodriguez A."/>
            <person name="Salamov A."/>
            <person name="Saunders E.H."/>
            <person name="Scott D."/>
            <person name="Shough T."/>
            <person name="Stallings R.L."/>
            <person name="Stalvey M."/>
            <person name="Sutherland R.D."/>
            <person name="Tapia R."/>
            <person name="Tesmer J.G."/>
            <person name="Thayer N."/>
            <person name="Thompson L.S."/>
            <person name="Tice H."/>
            <person name="Torney D.C."/>
            <person name="Tran-Gyamfi M."/>
            <person name="Tsai M."/>
            <person name="Ulanovsky L.E."/>
            <person name="Ustaszewska A."/>
            <person name="Vo N."/>
            <person name="White P.S."/>
            <person name="Williams A.L."/>
            <person name="Wills P.L."/>
            <person name="Wu J.-R."/>
            <person name="Wu K."/>
            <person name="Yang J."/>
            <person name="DeJong P."/>
            <person name="Bruce D."/>
            <person name="Doggett N.A."/>
            <person name="Deaven L."/>
            <person name="Schmutz J."/>
            <person name="Grimwood J."/>
            <person name="Richardson P."/>
            <person name="Rokhsar D.S."/>
            <person name="Eichler E.E."/>
            <person name="Gilna P."/>
            <person name="Lucas S.M."/>
            <person name="Myers R.M."/>
            <person name="Rubin E.M."/>
            <person name="Pennacchio L.A."/>
        </authorList>
    </citation>
    <scope>NUCLEOTIDE SEQUENCE [LARGE SCALE GENOMIC DNA] (HBA1 AND HBA2)</scope>
</reference>
<reference key="16">
    <citation type="journal article" date="2004" name="Genome Res.">
        <title>The status, quality, and expansion of the NIH full-length cDNA project: the Mammalian Gene Collection (MGC).</title>
        <authorList>
            <consortium name="The MGC Project Team"/>
        </authorList>
    </citation>
    <scope>NUCLEOTIDE SEQUENCE [LARGE SCALE MRNA] (HBA1 AND HBA2)</scope>
    <source>
        <tissue>Bone marrow</tissue>
        <tissue>Brain</tissue>
        <tissue>Lung</tissue>
        <tissue>Spleen</tissue>
    </source>
</reference>
<reference key="17">
    <citation type="journal article" date="1961" name="Hoppe-Seyler's Z. Physiol. Chem.">
        <title>The constitution of normal adult human haemoglobin.</title>
        <authorList>
            <person name="Braunitzer G."/>
            <person name="Gehring-Muller R."/>
            <person name="Hilschmann N."/>
            <person name="Hilse K."/>
            <person name="Hobom G."/>
            <person name="Rudloff V."/>
            <person name="Wittmann-Liebold B."/>
        </authorList>
    </citation>
    <scope>PROTEIN SEQUENCE OF 2-142</scope>
</reference>
<reference key="18">
    <citation type="journal article" date="1962" name="J. Biol. Chem.">
        <title>The structure of human hemoglobin: IV. The chymotryptic digestion of the alpha chain of human hemoglobin.</title>
        <authorList>
            <person name="Hill R.J."/>
            <person name="Konigsberg W."/>
        </authorList>
    </citation>
    <scope>PROTEIN SEQUENCE OF 2-142</scope>
</reference>
<reference key="19">
    <citation type="journal article" date="1963" name="Biochemistry">
        <title>The amino acid sequence of the alpha chain of human fetal hemoglobin.</title>
        <authorList>
            <person name="Schroeder W.A."/>
            <person name="Shelton J.R."/>
            <person name="Shelton J.B."/>
            <person name="Cormick J."/>
        </authorList>
    </citation>
    <scope>PROTEIN SEQUENCE OF 2-142</scope>
</reference>
<reference key="20">
    <citation type="journal article" date="2003" name="Nat. Biotechnol.">
        <title>Exploring proteomes and analyzing protein processing by mass spectrometric identification of sorted N-terminal peptides.</title>
        <authorList>
            <person name="Gevaert K."/>
            <person name="Goethals M."/>
            <person name="Martens L."/>
            <person name="Van Damme J."/>
            <person name="Staes A."/>
            <person name="Thomas G.R."/>
            <person name="Vandekerckhove J."/>
        </authorList>
    </citation>
    <scope>PROTEIN SEQUENCE OF 2-32</scope>
    <source>
        <tissue>Platelet</tissue>
    </source>
</reference>
<reference key="21">
    <citation type="journal article" date="1992" name="Hemoglobin">
        <title>Hb Ethiopia or alpha 2(140)(HC2)Tyr----His beta 2.</title>
        <authorList>
            <person name="Webber B.B."/>
            <person name="Wilson J.B."/>
            <person name="Gu L.-H."/>
            <person name="Huisman T.H.J."/>
        </authorList>
    </citation>
    <scope>PROTEIN SEQUENCE OF 128-142</scope>
    <scope>VARIANT ETHIOPIA HIS-141</scope>
    <source>
        <tissue>Umbilical cord blood</tissue>
    </source>
</reference>
<reference key="22">
    <citation type="journal article" date="1980" name="J. Biol. Chem.">
        <title>Sites of nonenzymatic glycosylation of human hemoglobin A.</title>
        <authorList>
            <person name="Shapiro R."/>
            <person name="McManus M.J."/>
            <person name="Zalut C."/>
            <person name="Bunn H.F."/>
        </authorList>
    </citation>
    <scope>GLYCATION AT LYS-8; LYS-17; LYS-41 AND LYS-62</scope>
    <scope>LACK OF GLYCATION AT LYS-12; LYS-57; LYS-61; LYS-91 AND LYS-100</scope>
</reference>
<reference key="23">
    <citation type="journal article" date="2003" name="J. Infect. Dis.">
        <title>Hookworm aspartic protease, Na-APR-2, cleaves human hemoglobin and serum proteins in a host-specific fashion.</title>
        <authorList>
            <person name="Williamson A.L."/>
            <person name="Brindley P.J."/>
            <person name="Abbenante G."/>
            <person name="Datu B.J."/>
            <person name="Prociv P."/>
            <person name="Berry C."/>
            <person name="Girdwood K."/>
            <person name="Pritchard D.I."/>
            <person name="Fairlie D.P."/>
            <person name="Hotez P.J."/>
            <person name="Zhan B."/>
            <person name="Loukas A."/>
        </authorList>
    </citation>
    <scope>PROTEOLYTIC CLEAVAGE (MICROBIAL INFECTION) BY N.AMERICANUS APR-2</scope>
    <scope>PARTIAL PROTEIN SEQUENCE</scope>
</reference>
<reference key="24">
    <citation type="journal article" date="2007" name="Proc. Natl. Acad. Sci. U.S.A.">
        <title>Hemopressin is an inverse agonist of CB1 cannabinoid receptors.</title>
        <authorList>
            <person name="Heimann A.S."/>
            <person name="Gomes I."/>
            <person name="Dale C.S."/>
            <person name="Pagano R.L."/>
            <person name="Gupta A."/>
            <person name="de Souza L.L."/>
            <person name="Luchessi A.D."/>
            <person name="Castro L.M."/>
            <person name="Giorgi R."/>
            <person name="Rioli V."/>
            <person name="Ferro E.S."/>
            <person name="Devi L.A."/>
        </authorList>
    </citation>
    <scope>FUNCTION (HEMOPRESSIN)</scope>
</reference>
<reference key="25">
    <citation type="journal article" date="2009" name="Science">
        <title>Lysine acetylation targets protein complexes and co-regulates major cellular functions.</title>
        <authorList>
            <person name="Choudhary C."/>
            <person name="Kumar C."/>
            <person name="Gnad F."/>
            <person name="Nielsen M.L."/>
            <person name="Rehman M."/>
            <person name="Walther T.C."/>
            <person name="Olsen J.V."/>
            <person name="Mann M."/>
        </authorList>
    </citation>
    <scope>ACETYLATION [LARGE SCALE ANALYSIS] AT LYS-17</scope>
    <scope>IDENTIFICATION BY MASS SPECTROMETRY [LARGE SCALE ANALYSIS]</scope>
</reference>
<reference key="26">
    <citation type="journal article" date="2011" name="BMC Syst. Biol.">
        <title>Initial characterization of the human central proteome.</title>
        <authorList>
            <person name="Burkard T.R."/>
            <person name="Planyavsky M."/>
            <person name="Kaupe I."/>
            <person name="Breitwieser F.P."/>
            <person name="Buerckstuemmer T."/>
            <person name="Bennett K.L."/>
            <person name="Superti-Furga G."/>
            <person name="Colinge J."/>
        </authorList>
    </citation>
    <scope>IDENTIFICATION BY MASS SPECTROMETRY [LARGE SCALE ANALYSIS]</scope>
</reference>
<reference key="27">
    <citation type="journal article" date="2014" name="J. Proteomics">
        <title>An enzyme assisted RP-RPLC approach for in-depth analysis of human liver phosphoproteome.</title>
        <authorList>
            <person name="Bian Y."/>
            <person name="Song C."/>
            <person name="Cheng K."/>
            <person name="Dong M."/>
            <person name="Wang F."/>
            <person name="Huang J."/>
            <person name="Sun D."/>
            <person name="Wang L."/>
            <person name="Ye M."/>
            <person name="Zou H."/>
        </authorList>
    </citation>
    <scope>PHOSPHORYLATION [LARGE SCALE ANALYSIS] AT SER-4; THR-9; TYR-25; SER-36 AND SER-50</scope>
    <scope>IDENTIFICATION BY MASS SPECTROMETRY [LARGE SCALE ANALYSIS]</scope>
    <source>
        <tissue>Liver</tissue>
    </source>
</reference>
<reference key="28">
    <citation type="journal article" date="2015" name="Proteomics">
        <title>N-terminome analysis of the human mitochondrial proteome.</title>
        <authorList>
            <person name="Vaca Jacome A.S."/>
            <person name="Rabilloud T."/>
            <person name="Schaeffer-Reiss C."/>
            <person name="Rompais M."/>
            <person name="Ayoub D."/>
            <person name="Lane L."/>
            <person name="Bairoch A."/>
            <person name="Van Dorsselaer A."/>
            <person name="Carapito C."/>
        </authorList>
    </citation>
    <scope>IDENTIFICATION BY MASS SPECTROMETRY [LARGE SCALE ANALYSIS]</scope>
</reference>
<reference key="29">
    <citation type="journal article" date="1975" name="J. Mol. Biol.">
        <title>Three-dimensional Fourier synthesis of human deoxyhaemoglobin at 2.5-A resolution: refinement of the atomic model.</title>
        <authorList>
            <person name="Fermi G."/>
        </authorList>
    </citation>
    <scope>X-RAY CRYSTALLOGRAPHY (2.5 ANGSTROMS) OF DEOXYHEMOGLOBIN</scope>
</reference>
<reference key="30">
    <citation type="journal article" date="1980" name="J. Mol. Biol.">
        <title>The structure of human carbonmonoxy haemoglobin at 2.7-A resolution.</title>
        <authorList>
            <person name="Baldwin J.M."/>
        </authorList>
    </citation>
    <scope>X-RAY CRYSTALLOGRAPHY (2.7 ANGSTROMS)</scope>
</reference>
<reference key="31">
    <citation type="journal article" date="1992" name="J. Biol. Chem.">
        <title>A third quaternary structure of human hemoglobin A at 1.7-A resolution.</title>
        <authorList>
            <person name="Silva M.M."/>
            <person name="Rogers P.H."/>
            <person name="Arnone A."/>
        </authorList>
    </citation>
    <scope>X-RAY CRYSTALLOGRAPHY (1.7 ANGSTROMS) OF LIGANDED R2 STATE</scope>
</reference>
<reference key="32">
    <citation type="journal article" date="1998" name="J. Mol. Biol.">
        <title>Crystal structure of a human embryonic haemoglobin: the carbonmonoxy form of Gower II (alpha2 epsilon2) haemoglobin at 2.9-A resolution.</title>
        <authorList>
            <person name="Sutherland-Smith A.J."/>
            <person name="Baker H.M."/>
            <person name="Hofmann O.M."/>
            <person name="Brittain T."/>
            <person name="Baker E.N."/>
        </authorList>
    </citation>
    <scope>X-RAY CRYSTALLOGRAPHY (2.9 ANGSTROMS) OF HB GOWER-2</scope>
</reference>
<reference key="33">
    <citation type="journal article" date="1993" name="Biochemistry">
        <title>Accommodation of insertions in helices: the mutation in hemoglobin Catonsville (Pro 37 alpha-Glu-Thr 38 alpha) generates a 3(10)--&gt;alpha bulge.</title>
        <authorList>
            <person name="Kavanaugh J.S."/>
            <person name="Moo-Penn W.F."/>
            <person name="Arnone A."/>
        </authorList>
    </citation>
    <scope>X-RAY CRYSTALLOGRAPHY (1.5 ANGSTROMS) OF VARIANT HB CATONSVILLE GLU-38 INS</scope>
</reference>
<reference key="34">
    <citation type="journal article" date="2018" name="J. Biol. Chem.">
        <title>Structure-function analyses reveal key features in Staphylococcus aureus IsdB-associated unfolding of the heme-binding pocket of human hemoglobin.</title>
        <authorList>
            <person name="Bowden C.F.M."/>
            <person name="Chan A.C.K."/>
            <person name="Li E.J.W."/>
            <person name="Arrieta A.L."/>
            <person name="Eltis L.D."/>
            <person name="Murphy M.E.P."/>
        </authorList>
    </citation>
    <scope>X-RAY CRYSTALLOGRAPHY (3.60 ANGSTROMS)</scope>
    <scope>INTERACTION WITH STAPHYLOCOCCUS AUREUS PROTEIN ISDB</scope>
</reference>
<reference key="35">
    <citation type="journal article" date="1966" name="Nature">
        <title>Hemoglobin J Cape Town-alpha-2 92 arginine replaced by glutamine beta-2.</title>
        <authorList>
            <person name="Botha M.C."/>
            <person name="Beale D."/>
            <person name="Isaacs W.A."/>
            <person name="Lehmann H."/>
        </authorList>
    </citation>
    <scope>VARIANT J-CAPE TOWN GLN-93</scope>
</reference>
<reference key="36">
    <citation type="journal article" date="1970" name="J. Biol. Chem.">
        <title>Subunit dissociation of the unstable hemoglobin Bibba (alpha 2-136Pro(H19)beta 2).</title>
        <authorList>
            <person name="Smith L.L."/>
            <person name="Barton B.P."/>
            <person name="Huisman T.H."/>
        </authorList>
    </citation>
    <scope>VARIANT BIBBA PRO-137</scope>
</reference>
<reference key="37">
    <citation type="journal article" date="1971" name="J. Mol. Biol.">
        <title>Ligand binding in hemoglobin J Capetown.</title>
        <authorList>
            <person name="Nagel R.L."/>
            <person name="Gibson Q.H."/>
            <person name="Jenkins T."/>
        </authorList>
    </citation>
    <scope>CHARACTERIZATION OF VARIANT J-CAPE TOWN GLN-93</scope>
</reference>
<reference key="38">
    <citation type="journal article" date="1971" name="Nature New Biol.">
        <title>Clinical studies and physiological properties of Hopkins-2 haemoglobin.</title>
        <authorList>
            <person name="Charache S."/>
            <person name="Ostertag W."/>
            <person name="von Ehrenstein G."/>
        </authorList>
    </citation>
    <scope>VARIANT HOPKINS-II ASP-113</scope>
</reference>
<reference key="39">
    <citation type="journal article" date="1972" name="Biochim. Biophys. Acta">
        <title>Haemoglobin Denmark Hill 95 (G2) Pro-Ala, a variant with unusual electrophoretic and oxygen-binding properties.</title>
        <authorList>
            <person name="Wiltshire B.G."/>
            <person name="Clark K.G."/>
            <person name="Lorkin P.A."/>
            <person name="Lehmann H."/>
        </authorList>
    </citation>
    <scope>VARIANT DENMARK HILL ALA-96</scope>
</reference>
<reference key="40">
    <citation type="journal article" date="1972" name="FEBS Lett.">
        <title>Hb Setif: G1 (94) Asp-Tyr. A new chain hemoglobin variant with substitution of the residue involved in hydrogen bond between unlike subunits.</title>
        <authorList>
            <person name="Wajcman H."/>
            <person name="Belkhodja O."/>
            <person name="Labie D."/>
        </authorList>
    </citation>
    <scope>VARIANT SETIF TYR-95</scope>
</reference>
<reference key="41">
    <citation type="journal article" date="1972" name="Science">
        <title>Biosynthesis of hemoglobin Ann Arbor: evidence for catabolic and feedback regulation.</title>
        <authorList>
            <person name="Adams J.G. III"/>
            <person name="Winter W.P."/>
            <person name="Rucknagel D.L."/>
            <person name="Spencer H.H."/>
        </authorList>
    </citation>
    <scope>VARIANT ANN ARBOR ARG-81</scope>
</reference>
<reference key="42">
    <citation type="journal article" date="1973" name="Biochim. Biophys. Acta">
        <title>Hemoglobin Sawara: alpha 6(A4) aspartic acid leads to alanine.</title>
        <authorList>
            <person name="Sumida I."/>
            <person name="Ohta Y."/>
            <person name="Imamura T."/>
            <person name="Yanase T."/>
        </authorList>
    </citation>
    <scope>VARIANT SAWARA ALA-7</scope>
</reference>
<reference key="43">
    <citation type="journal article" date="1973" name="Proc. Natl. Acad. Sci. U.S.A.">
        <title>Structure of hemoglobin M Boston, a variant with a five-coordinated ferric heme.</title>
        <authorList>
            <person name="Pulsinelli P.D."/>
            <person name="Perutz M.F."/>
            <person name="Nagel R.L."/>
        </authorList>
    </citation>
    <scope>VARIANT M-BOSTON/M-OSAKA TYR-59</scope>
</reference>
<reference key="44">
    <citation type="journal article" date="1974" name="Biochim. Biophys. Acta">
        <title>A new haemoglobin variant: J-Rovigo alpha 53 (E-2) alanine leads to aspartic acid.</title>
        <authorList>
            <person name="Alberti R."/>
            <person name="Mariuzzi G.M."/>
            <person name="Artibani L."/>
            <person name="Bruni E."/>
            <person name="Tentori L."/>
        </authorList>
    </citation>
    <scope>VARIANT J-ROVIGO ASP-54</scope>
</reference>
<reference key="45">
    <citation type="journal article" date="1975" name="Biochim. Biophys. Acta">
        <title>Hemoglobin Hirosaki (alpha 43 [CE 1] Phe replaced by Leu), a new unstable variant.</title>
        <authorList>
            <person name="Ohba Y."/>
            <person name="Miyaji T."/>
            <person name="Matsuoka M."/>
            <person name="Yokoyama M."/>
            <person name="Numakura H."/>
        </authorList>
    </citation>
    <scope>VARIANT HIROSAKI LEU-44</scope>
</reference>
<reference key="46">
    <citation type="journal article" date="1977" name="Biochim. Biophys. Acta">
        <title>Hemoglobin Pontoise alpha63 Ala replaced by Asp(E12). A new fast moving variant.</title>
        <authorList>
            <person name="Thillet J."/>
            <person name="Blouquit Y."/>
            <person name="Perrone F."/>
            <person name="Rosa J."/>
        </authorList>
    </citation>
    <scope>VARIANT PONTOISE ASP-64</scope>
</reference>
<reference key="47">
    <citation type="journal article" date="1977" name="Biochim. Biophys. Acta">
        <title>Increased oxygen affinity for hemoglobin Sawara: alphaA4(6) aspartic acid replaced by alanine.</title>
        <authorList>
            <person name="Sasaki J."/>
            <person name="Imamura T."/>
            <person name="Sumida I."/>
            <person name="Yanase T."/>
            <person name="Ohya M."/>
        </authorList>
    </citation>
    <scope>CHARACTERIZATION OF VARIANT SAWARA ALA-7</scope>
</reference>
<reference key="48">
    <citation type="journal article" date="1977" name="FEBS Lett.">
        <title>Haemoglobin Port Phillip alpha91 (FG3) Leu replaced by Pro, a new unstable haemoglobin.</title>
        <authorList>
            <person name="Brennan S.O."/>
            <person name="Tauro G.P."/>
            <person name="Melrose W."/>
        </authorList>
    </citation>
    <scope>VARIANT PORT PHILLIP PRO-92</scope>
</reference>
<reference key="49">
    <citation type="journal article" date="1979" name="Acta Haematol.">
        <title>Hemoglobin Moabit: alpha 86 (F7) Leu leads to Arg: a new unstable abnormal hemoglobin.</title>
        <authorList>
            <person name="Knuth A."/>
            <person name="Pribilla W."/>
            <person name="Marti H.R."/>
            <person name="Winterhalter K.H."/>
        </authorList>
    </citation>
    <scope>VARIANT MOABIT ARG-87</scope>
</reference>
<reference key="50">
    <citation type="journal article" date="1979" name="Biochim. Biophys. Acta">
        <title>A new abnormal human hemoglobin: Hb Prato (alpha 2 31 (B12) Arg leads to Ser beta 2).</title>
        <authorList>
            <person name="Marinucci M."/>
            <person name="Mavilio F."/>
            <person name="Massa A."/>
            <person name="Gabbianelli M."/>
            <person name="Fontanarosa P.P."/>
            <person name="Camagna A."/>
            <person name="Ignesti C."/>
            <person name="Tentori L."/>
        </authorList>
    </citation>
    <scope>VARIANT PRATO SER-32</scope>
</reference>
<reference key="51">
    <citation type="journal article" date="1979" name="Hemoglobin">
        <title>Hemoglobin Dunn: alpha 6 (A4) aspartic acid replaced by asparagine.</title>
        <authorList>
            <person name="Jue D.L."/>
            <person name="Johnson M.H."/>
            <person name="Patchen L.C."/>
            <person name="Moo-Penn W.F."/>
        </authorList>
    </citation>
    <scope>VARIANT DUNN ASN-7</scope>
</reference>
<reference key="52">
    <citation type="journal article" date="1980" name="Am. J. Hematol.">
        <title>Oxygen affinity and stability of hemoglobin Dunn alpha 6(A4)Asp replaced by Asn): use of isoelectric focusing in recognition of a new abnormal hemoglobin.</title>
        <authorList>
            <person name="Charache S."/>
            <person name="Brimhall B."/>
            <person name="Zaatari G."/>
        </authorList>
    </citation>
    <scope>CHARACTERIZATION OF VARIANT DUNN ASN-7</scope>
</reference>
<reference key="53">
    <citation type="journal article" date="1980" name="Biochim. Biophys. Acta">
        <title>Hemoglobin Milledgeville (alpha 44 (CD2) Pro leads to Leu): a new variant with increased oxygen affinity.</title>
        <authorList>
            <person name="Honig G.R."/>
            <person name="Vida L.N."/>
            <person name="Shamsuddin M."/>
            <person name="Mason R.G."/>
            <person name="Schlumpf H.W."/>
            <person name="Luke R.A."/>
        </authorList>
    </citation>
    <scope>VARIANT MILLEDGEVILLE LEU-45</scope>
</reference>
<reference key="54">
    <citation type="journal article" date="1980" name="J. Biochem.">
        <title>Hemoglobin Legnano (alpha 2 141 (HC3) Arg leads to Leu beta2) a new high oxygen affinity variant. Functional and structural studies.</title>
        <authorList>
            <person name="Giuliani A."/>
            <person name="Maffi D."/>
            <person name="Cappabianca M.P."/>
            <person name="Tentori L."/>
        </authorList>
    </citation>
    <scope>VARIANT LEGNANO LEU-142</scope>
</reference>
<reference key="55">
    <citation type="journal article" date="1980" name="J. Biol. Chem.">
        <title>Structural and functional studies of hemoglobin Suresnes (arg 141 alpha 2 replaced by His beta 2). Consequences of disrupting an oxygen-linked anion-binding site.</title>
        <authorList>
            <person name="Poyart C."/>
            <person name="Bursaux E."/>
            <person name="Arnone A."/>
            <person name="Bonaventura J."/>
            <person name="Bonaventura C."/>
        </authorList>
    </citation>
    <scope>VARIANT SURESNES HIS-142</scope>
</reference>
<reference key="56">
    <citation type="journal article" date="1981" name="FEBS Lett.">
        <title>Haemoglobin Ferndown (alpha 6 [A4] aspartic acid replaced by valine).</title>
        <authorList>
            <person name="Lee-Potter J.P."/>
            <person name="Deacon-Smith R.A."/>
            <person name="Lehmann H."/>
            <person name="Robb L."/>
        </authorList>
    </citation>
    <scope>VARIANT FERNDOWN VAL-7</scope>
</reference>
<reference key="57">
    <citation type="journal article" date="1981" name="Hemoglobin">
        <title>Hemoglobin Tottori (alpha 59[E8] glycine replaced by valine).</title>
        <authorList>
            <person name="Nakatsuji T."/>
            <person name="Miwa S."/>
            <person name="Ohba Y."/>
            <person name="Miyaji T."/>
            <person name="Matsumoto N."/>
            <person name="Matsuoka I."/>
        </authorList>
    </citation>
    <scope>VARIANT TOTTORI VAL-60</scope>
</reference>
<reference key="58">
    <citation type="journal article" date="1982" name="Hemoglobin">
        <title>Hemoglobin Kawachi [alpha 44 (CE2) Pro leads to Arg]: a new hemoglobin variant of high oxygen affinity with amino acid substitution at alpha 1 beta 2 contact.</title>
        <authorList>
            <person name="Harano T."/>
            <person name="Harano K."/>
            <person name="Ueda S."/>
            <person name="Shibata S."/>
            <person name="Imai K."/>
            <person name="Ohba Y."/>
            <person name="Shinohara T."/>
            <person name="Horio S."/>
            <person name="Nishioka K."/>
            <person name="Shirotani H."/>
        </authorList>
    </citation>
    <scope>VARIANT KAWACHI ARG-45</scope>
</reference>
<reference key="59">
    <citation type="journal article" date="1982" name="Hemoglobin">
        <title>HB Kokura [alpha 47 (CE 5) Asp leads to Gly]: a slightly unstable variant.</title>
        <authorList>
            <person name="Ohba Y."/>
            <person name="Hattori Y."/>
            <person name="Matsuoka M."/>
            <person name="Miyaji T."/>
            <person name="Fuyuno K."/>
        </authorList>
    </citation>
    <scope>VARIANT KOKURA GLY-48</scope>
</reference>
<reference key="60">
    <citation type="journal article" date="1983" name="Biochim. Biophys. Acta">
        <title>Hemoglobin Evanston: alpha 14(A12) Trp leads to Arg. A variant hemoglobin associated with alpha-thalassemia-2.</title>
        <authorList>
            <person name="Moo-Penn W.F."/>
            <person name="Baine R.M."/>
            <person name="Jue D.L."/>
            <person name="Johnson M.H."/>
            <person name="McGuffey J.E."/>
            <person name="Benson J.M."/>
        </authorList>
    </citation>
    <scope>VARIANT EVANSTON ARG-15</scope>
</reference>
<reference key="61">
    <citation type="journal article" date="1983" name="Hemoglobin">
        <title>Hemoglobin Tokoname [alpha 139 (HC 1) Lys leads to Thr]: a new hemoglobin variant with a slightly increased oxygen affinity.</title>
        <authorList>
            <person name="Harano T."/>
            <person name="Harano K."/>
            <person name="Shibata S."/>
            <person name="Ueda S."/>
            <person name="Imai K."/>
            <person name="Seki M."/>
        </authorList>
    </citation>
    <scope>VARIANT TOKONAME THR-140</scope>
</reference>
<reference key="62">
    <citation type="journal article" date="1983" name="Hemoglobin">
        <title>A case of hemoglobin Iwata [alpha 87(F8)His leads to Arg] in China.</title>
        <authorList>
            <person name="Liu G.Y."/>
            <person name="Zhang G.X."/>
            <person name="Nie S.Y."/>
            <person name="Luo H.Y."/>
            <person name="Teng Y.Q."/>
            <person name="Liu S.P."/>
            <person name="Song M."/>
            <person name="Son L."/>
            <person name="Chen S.S."/>
            <person name="Jia P.C."/>
            <person name="Liang C.C."/>
        </authorList>
    </citation>
    <scope>VARIANT IWATA ARG-88</scope>
</reference>
<reference key="63">
    <citation type="journal article" date="1983" name="Hemoglobin">
        <title>Hb Etobicoke, alpha 85(F5) Ser leads to Arg found in a newborn of French-Indian-English descent.</title>
        <authorList>
            <person name="Headlee M.G."/>
            <person name="Nakatsuji T."/>
            <person name="Lam H."/>
            <person name="Wrightstone R.N."/>
            <person name="Huisman T.H."/>
        </authorList>
    </citation>
    <scope>VARIANT ETOBICOKE ARG-85</scope>
</reference>
<reference key="64">
    <citation type="journal article" date="1984" name="FEBS Lett.">
        <title>Hemoglobin Aichi [alpha 50(CE8) His----Arg]: a new slightly unstable hemoglobin variant discovered in Japan.</title>
        <authorList>
            <person name="Harano T."/>
            <person name="Harano K."/>
            <person name="Shibata S."/>
            <person name="Ueda S."/>
            <person name="Mori H."/>
            <person name="Seki M."/>
        </authorList>
    </citation>
    <scope>VARIANT AICHI ARG-51</scope>
</reference>
<reference key="65">
    <citation type="journal article" date="1984" name="Hemoglobin">
        <title>Hb Cordele alpha(2)47 (CE5)Asp----Ala beta 2. A mildly unstable variant observed in black twins.</title>
        <authorList>
            <person name="Nakatsuji T."/>
            <person name="Wilson J.B."/>
            <person name="Huisman T.H."/>
        </authorList>
    </citation>
    <scope>VARIANT CORDELE ALA-48</scope>
</reference>
<reference key="66">
    <citation type="journal article" date="1984" name="Hemoglobin">
        <title>The characterization of hemoglobin Manitoba or alpha (2)102(G9)Ser----Arg beta 2 and hemoglobin Contaldo or alpha (2)103(G10)His----Arg beta 2 by high performance liquid chromatography.</title>
        <authorList>
            <person name="Sciarratta G.V."/>
            <person name="Ivaldi G."/>
            <person name="Molaro G.L."/>
            <person name="Sansone G."/>
            <person name="Salkie M.L."/>
            <person name="Wilson J.B."/>
            <person name="Reese A.L."/>
            <person name="Huisman T.H."/>
        </authorList>
    </citation>
    <scope>VARIANT MANITOBA ARG-103</scope>
    <scope>VARIANT CONTALDO ARG-104</scope>
</reference>
<reference key="67">
    <citation type="journal article" date="1984" name="J. Clin. Invest.">
        <title>Hemoglobin Evanston (alpha 14 Trp----Arg). An unstable alpha-chain variant expressed as alpha-thalassemia.</title>
        <authorList>
            <person name="Honig G.R."/>
            <person name="Shamsuddin M."/>
            <person name="Vida L.N."/>
            <person name="Mompoint M."/>
            <person name="Valcourt E."/>
            <person name="Bowie L.J."/>
            <person name="Jones E.C."/>
            <person name="Powers P.A."/>
            <person name="Spritz R.A."/>
            <person name="Guis M."/>
        </authorList>
    </citation>
    <scope>CHARACTERIZATION OF VARIANT EVANSTON ARG-15</scope>
</reference>
<reference key="68">
    <citation type="journal article" date="1985" name="J. Clin. Invest.">
        <title>A new hemoglobin variant, hemoglobin Nunobiki [alpha 141 (HC3) Arg----Cys]. Notable influence of the carboxy-terminal cysteine upon various physico-chemical characteristics of hemoglobin.</title>
        <authorList>
            <person name="Shimasaki S."/>
        </authorList>
    </citation>
    <scope>VARIANT NUNOBIKI CYS-142</scope>
</reference>
<reference key="69">
    <citation type="journal article" date="1988" name="Eur. J. Biochem.">
        <title>Increased oxygen affinity with normal heterotropic effects in hemoglobin Loire [alpha 88(F9)Ala----Ser].</title>
        <authorList>
            <person name="Baklouti F."/>
            <person name="Baudin-Chich V."/>
            <person name="Kister J."/>
            <person name="Marden M."/>
            <person name="Teyssier G."/>
            <person name="Poyart C."/>
            <person name="Delaunay J."/>
            <person name="Wajcman H."/>
        </authorList>
    </citation>
    <scope>VARIANT LOIRE SER-89</scope>
</reference>
<reference key="70">
    <citation type="journal article" date="1989" name="Hemoglobin">
        <title>Hb Luxembourg [alpha 24(B5) Tyr----His]: a new unstable variant.</title>
        <authorList>
            <person name="Groff P."/>
            <person name="Galacteros F."/>
            <person name="Kalmes G."/>
            <person name="Blouquit Y."/>
            <person name="Wajcman H."/>
        </authorList>
    </citation>
    <scope>VARIANT LUXEMBOURG HIS-25</scope>
</reference>
<reference key="71">
    <citation type="journal article" date="1989" name="Hemoglobin">
        <title>Hb Miyano or alpha 41(C6)Thr----Ser: a new high oxygen affinity alpha chain variant found in an erythremic blood donor.</title>
        <authorList>
            <person name="Ohba Y."/>
            <person name="Imai K."/>
            <person name="Uenaka R."/>
            <person name="Ami M."/>
            <person name="Fujisawa K."/>
            <person name="Itoh K."/>
            <person name="Hirakawa K."/>
            <person name="Miyaji T."/>
        </authorList>
    </citation>
    <scope>VARIANT MIYANO SER-42</scope>
</reference>
<reference key="72">
    <citation type="journal article" date="1989" name="Hemoglobin">
        <title>Hb Reims [alpha 2(23)(B4)Glu----Gly beta 2]: a new alpha chain variant with slightly decreased stability.</title>
        <authorList>
            <person name="Bardakdjian-Michau J."/>
            <person name="Rosa J."/>
            <person name="Galacteros F."/>
            <person name="Lancelot M."/>
            <person name="Marquart F.X."/>
        </authorList>
    </citation>
    <scope>VARIANT REIMS GLY-24</scope>
</reference>
<reference key="73">
    <citation type="journal article" date="1990" name="Biochemistry">
        <title>Structural, functional, and subunit assembly properties of hemoglobin Attleboro [alpha 138 (H21) Ser----Pro], a variant possessing a site maturation at a critical C-terminal residue.</title>
        <authorList>
            <person name="McDonald M.J."/>
            <person name="Michalski L.A."/>
            <person name="Turci S.M."/>
            <person name="Guillette R.A."/>
            <person name="Jue D.L."/>
            <person name="Johnson M.H."/>
            <person name="Moo-Penn W.F."/>
        </authorList>
    </citation>
    <scope>VARIANT ATTLEBORO PRO-139</scope>
</reference>
<reference key="74">
    <citation type="journal article" date="1990" name="Hemoglobin">
        <title>Hb Fukutomi [alpha 126(H9)Asp----Val]: a new hemoglobin variant with high oxygen affinity.</title>
        <authorList>
            <person name="Hidaka K."/>
            <person name="Iuchi I."/>
            <person name="Kobayashi T."/>
            <person name="Katoh K."/>
            <person name="Yaguchi K."/>
        </authorList>
    </citation>
    <scope>VARIANT FUKUTOMI VAL-127</scope>
</reference>
<reference key="75">
    <citation type="journal article" date="1992" name="Biochim. Biophys. Acta">
        <title>Hemoglobin Dallas (alpha 97(G4)Asn--&gt;Lys): functional characterization of a high oxygen affinity natural mutant.</title>
        <authorList>
            <person name="Lendaro E."/>
            <person name="Ippoliti R."/>
            <person name="Brancaccio A."/>
            <person name="Bellelli A."/>
            <person name="Vallone B."/>
            <person name="Ivaldi G."/>
            <person name="Sciarratta G.V."/>
            <person name="Castello C."/>
            <person name="Tomova S."/>
            <person name="Brunori M."/>
        </authorList>
    </citation>
    <scope>VARIANT DALLAS LYS-98</scope>
</reference>
<reference key="76">
    <citation type="journal article" date="1992" name="Biochim. Biophys. Acta">
        <title>Hemoglobin Rouen (alpha-140 (HC2) Tyr--&gt;His): alteration of the alpha-chain C-terminal region and moderate increase in oxygen affinity.</title>
        <authorList>
            <person name="Wajcman H."/>
            <person name="Kister J."/>
            <person name="Marden M."/>
            <person name="Lahary A."/>
            <person name="Monconduit M."/>
            <person name="Galacteros F."/>
        </authorList>
    </citation>
    <scope>VARIANT ROUEN/ETHIOPIA HIS-141</scope>
</reference>
<reference key="77">
    <citation type="journal article" date="1992" name="Hemoglobin">
        <title>HB Al-Ain Abu Dhabi [alpha 18(A16)Gly--&gt;Asp]: a new hemoglobin variant discovered in an Emiratee family.</title>
        <authorList>
            <person name="Abbes S."/>
            <person name="M'Rad A."/>
            <person name="Fitzgerald P.A."/>
            <person name="Dormer P."/>
            <person name="Blouquit Y."/>
            <person name="Kister J."/>
            <person name="Galacteros F."/>
            <person name="Wajcman H."/>
        </authorList>
    </citation>
    <scope>VARIANT AL-AIN ABU DHABI ASP-19</scope>
</reference>
<reference key="78">
    <citation type="journal article" date="1993" name="Am. J. Hematol.">
        <title>Unstable alpha-chain hemoglobin variants with factitious beta-thalassemia biosynthetic ratio: Hb Questembert (alpha 131[H14]Ser--&gt;Pro) and Hb Caen (alpha 132[H15]Val--&gt;Gly).</title>
        <authorList>
            <person name="Wajcman H."/>
            <person name="Vasseur C."/>
            <person name="Blouquit Y."/>
            <person name="Rosa J."/>
            <person name="Labie D."/>
            <person name="Najman A."/>
            <person name="Reman O."/>
            <person name="Leporrier M."/>
            <person name="Galacteros F."/>
        </authorList>
    </citation>
    <scope>VARIANT QUESTEMBERT PRO-132</scope>
</reference>
<reference key="79">
    <citation type="journal article" date="1993" name="Am. J. Hematol.">
        <title>Hb Adana or alpha 2(59)(E8)Gly--&gt;Asp beta 2, a severely unstable alpha 1-globin variant, observed in combination with the -(alpha)20.5 Kb alpha-thal-1 deletion in two Turkish patients.</title>
        <authorList>
            <person name="Cueruek M.A."/>
            <person name="Dimovski A.J."/>
            <person name="Baysal E."/>
            <person name="Gu L.H."/>
            <person name="Kutlar F."/>
            <person name="Molchanova T.P."/>
            <person name="Webber B.B."/>
            <person name="Altay C."/>
            <person name="Guergey A."/>
            <person name="Huisman T.H."/>
        </authorList>
    </citation>
    <scope>VARIANT ADANA ASP-60</scope>
</reference>
<reference key="80">
    <citation type="journal article" date="1996" name="J. Biol. Chem.">
        <title>Hb Montefiore (126(H9)Asp--&gt;Tyr). High oxygen affinity and loss of cooperativity secondary to C-terminal disruption.</title>
        <authorList>
            <person name="Wajcman H."/>
            <person name="Kister J."/>
            <person name="Galacteros F."/>
            <person name="Spielvogel A."/>
            <person name="Lin M.J."/>
            <person name="Vidugiris G.J."/>
            <person name="Hirsch R.E."/>
            <person name="Friedman J.M."/>
            <person name="Nagel R.L."/>
        </authorList>
    </citation>
    <scope>VARIANT MONTEFIORE TYR-127</scope>
</reference>
<reference key="81">
    <citation type="journal article" date="1971" name="Int. J. Protein Res.">
        <title>Hemoglobin Atago (alpha2-85 Tyr beta-2) a new abnormal human hemoglobin found in Nagasaki. Biochemical studies on hemoglobins and myoglobins. VI.</title>
        <authorList>
            <person name="Fujiwara N."/>
            <person name="Maekawa T."/>
            <person name="Matsuda G."/>
        </authorList>
    </citation>
    <scope>VARIANT ATAGO TYR-86</scope>
</reference>
<reference key="82">
    <citation type="journal article" date="1997" name="Hemoglobin">
        <title>Hb Auckland [alpha 87(F8) His--&gt;Asn]: a new mutation of the proximal histidine identified by electrospray mass spectrometry.</title>
        <authorList>
            <person name="Brennan S.O."/>
            <person name="Matthews J.R."/>
        </authorList>
    </citation>
    <scope>VARIANT AUCKLAND ASN-88</scope>
</reference>
<reference key="83">
    <citation type="journal article" date="1974" name="Biochim. Biophys. Acta">
        <title>Structural characterizations of hemoglobins J-Buda (alpha 61 (E10) Lys-to-Asn) and G-Pest (alpha 74 (EF3) Asp-to-Asn).</title>
        <authorList>
            <person name="Brimhall B.J."/>
            <person name="Duerst M."/>
            <person name="Hollan S.R."/>
            <person name="Stenzel P."/>
            <person name="Szelenyi J."/>
            <person name="Jones R.T."/>
        </authorList>
    </citation>
    <scope>VARIANTS ASN-62 AND ASN-75</scope>
</reference>
<reference key="84">
    <citation type="journal article" date="1994" name="Ann. Hematol.">
        <title>Hb Cemenelum [alpha 92 (FG4) Arg--&gt;Trp]: a hemoglobin variant of the alpha 1/beta 2 interface that displays a moderate increase in oxygen affinity.</title>
        <authorList>
            <person name="Wajcman H."/>
            <person name="Kister J."/>
            <person name="M'Rad A."/>
            <person name="Soummer A.M."/>
            <person name="Galacteros F."/>
        </authorList>
    </citation>
    <scope>VARIANT CEMENELUM TRP-93</scope>
</reference>
<reference key="85">
    <citation type="journal article" date="1984" name="Hemoglobin">
        <title>Hemoglobin Chongqing [alpha 2(NA2)Leu--&gt;Arg] and hemoglobin Harbin [alpha 16(A14)Lys--&gt;Met] found in China.</title>
        <authorList>
            <person name="Zeng Y.-T."/>
            <person name="Huang S.-Z."/>
            <person name="Qiu X.-K."/>
            <person name="Cheng G.-C."/>
            <person name="Ren Z.-R."/>
            <person name="Jin Q.-C."/>
            <person name="Chen C.-Y."/>
            <person name="Jiao C.-T."/>
            <person name="Tang Z.-G."/>
            <person name="Liu R.-H."/>
            <person name="Bao X.-H."/>
            <person name="Zeng L.-Z."/>
            <person name="Duan Y.-Q."/>
            <person name="Zhang G.-Y."/>
        </authorList>
    </citation>
    <scope>VARIANTS ARG-3 AND MET-17</scope>
</reference>
<reference key="86">
    <citation type="journal article" date="1998" name="Hum. Mutat.">
        <title>Alpha-thalassaemia due to a single codon deletion in the alpha 1-globin gene. Computational structural analysis of the new alpha-chain variant.</title>
        <authorList>
            <person name="Ayala S."/>
            <person name="Colomer D."/>
            <person name="Gelpi J.L."/>
            <person name="Corron J.L.V."/>
        </authorList>
    </citation>
    <scope>VARIANT CLINIC LYS-61 DEL</scope>
</reference>
<reference key="87">
    <citation type="journal article" date="1990" name="Hemoglobin">
        <title>Hb Davenport or alpha 2(78)(EF7)Asn--&gt;His beta 2.</title>
        <authorList>
            <person name="Wilson J.B."/>
            <person name="Webber B.B."/>
            <person name="Plaseska D."/>
            <person name="de Alarcon P.A."/>
            <person name="McMillan S.K."/>
            <person name="Huisman T.H.J."/>
        </authorList>
    </citation>
    <scope>VARIANT DAVENPORT HIS-79</scope>
</reference>
<reference key="88">
    <citation type="journal article" date="1989" name="Hemoglobin">
        <title>Hb Evans or alpha 262(E11)Val--&gt;Met beta 2; an unstable hemoglobin causing a mild hemolytic anemia.</title>
        <authorList>
            <person name="Wilson J.B."/>
            <person name="Webber B.B."/>
            <person name="Kutlar A."/>
            <person name="Reese A.L."/>
            <person name="McKie V.C."/>
            <person name="Lutcher C.L."/>
            <person name="Felice A.E."/>
            <person name="Huisman T.H.J."/>
        </authorList>
    </citation>
    <scope>VARIANT EVANS MET-63</scope>
</reference>
<reference key="89">
    <citation type="journal article" date="1989" name="Blood">
        <title>Locus assignment of two alpha-globin structural mutants from the Caribbean basin: alpha Fort de France (alpha 45 Arg) and alpha Spanish Town (alpha 27 Val).</title>
        <authorList>
            <person name="Cash F.E."/>
            <person name="Monplaisir N."/>
            <person name="Goossens M."/>
            <person name="Liebhaber S.A."/>
        </authorList>
    </citation>
    <scope>VARIANTS VAL-28 AND ARG-46</scope>
</reference>
<reference key="90">
    <citation type="journal article" date="1998" name="Hemoglobin">
        <title>Hb Godavari [alpha 95(G2)Pro--&gt;Thr]: a neutral amino acid substitution in the alpha 1 beta 2 interface that modifies the electrophoretic mobility of hemoglobin.</title>
        <authorList>
            <person name="Wajcman H."/>
            <person name="Kister J."/>
            <person name="Riou J."/>
            <person name="Galacteros F."/>
            <person name="Girot R."/>
            <person name="Maier-Redelsperger M."/>
            <person name="Nayudu N.V.S."/>
            <person name="Giordano P.C."/>
        </authorList>
    </citation>
    <scope>VARIANT GODAVARI THR-96</scope>
</reference>
<reference key="91">
    <citation type="journal article" date="1974" name="Proc. Natl. Acad. Sci. U.S.A.">
        <title>Hemoglobin Grady: the first example of a variant with elongated chains due to an insertion of residues.</title>
        <authorList>
            <person name="Huisman T.H.J."/>
            <person name="Wilson J.B."/>
            <person name="Gravely M."/>
            <person name="Hubbard M."/>
        </authorList>
    </citation>
    <scope>VARIANT GRADY GLU-PHE-THR-119 INS</scope>
</reference>
<reference key="92">
    <citation type="journal article" date="1992" name="Hemoglobin">
        <title>A new alpha chain variant, Hb Hanamaki or alpha 2(139)(HC1)Lys--&gt;Glu beta 2, found in a Japanese family.</title>
        <authorList>
            <person name="Orisaka M."/>
            <person name="Tajima T."/>
            <person name="Harano T."/>
            <person name="Harano K."/>
            <person name="Kushida Y."/>
            <person name="Imai K."/>
        </authorList>
    </citation>
    <scope>VARIANT HANAMAKI GLU-140</scope>
</reference>
<reference key="93">
    <citation type="journal article" date="1982" name="Hemoglobin">
        <title>HB Handa [alpha 90 (FG 2) Lys replaced by Met]: structure and biosynthesis of a new slightly higher oxygen affinity variant.</title>
        <authorList>
            <person name="Harano T."/>
            <person name="Harano K."/>
            <person name="Shibata S."/>
            <person name="Ueda S."/>
            <person name="Imai K."/>
            <person name="Seki M."/>
        </authorList>
    </citation>
    <scope>VARIANT HANDA MET-91</scope>
</reference>
<reference key="94">
    <citation type="journal article" date="1969" name="J. Clin. Invest.">
        <title>Hemoglobin Hasharon (alpha-2-47 his(CD5)beta-2): a hemoglobin found in low concentration.</title>
        <authorList>
            <person name="Charache S."/>
            <person name="Mondzac A.M."/>
            <person name="Gessner U."/>
        </authorList>
    </citation>
    <scope>VARIANT HASHARON HIS-48</scope>
</reference>
<reference key="95">
    <citation type="journal article" date="1987" name="Hemoglobin">
        <title>Hemoglobin Hobart or alpha 20(Bl)His--&gt;Arg: a new alpha chain hemoglobin variant.</title>
        <authorList>
            <person name="Fleming P.J."/>
            <person name="Sumner D.R."/>
            <person name="Wyatt K."/>
            <person name="Hughes W.G."/>
            <person name="Melrose W.D."/>
            <person name="Jupe D.M.D."/>
            <person name="Baikie M.J."/>
        </authorList>
    </citation>
    <scope>VARIANT HOBART ARG-21</scope>
</reference>
<reference key="96">
    <citation type="journal article" date="1974" name="Br. J. Haematol.">
        <title>Haemoglobin Inkster (alpha2 85aspartic acid leads to valine beta2) coexisting with beta-thalassaemia in a Caucasian family.</title>
        <authorList>
            <person name="Reed R.E."/>
            <person name="Winter W.P."/>
            <person name="Rucknagel D.L."/>
        </authorList>
    </citation>
    <scope>VARIANT INKSTER VAL-86</scope>
</reference>
<reference key="97">
    <citation type="journal article" date="1992" name="Hemoglobin">
        <title>Hb Kanagawa [alpha 40(C5)Lys--&gt;Met]: a new alpha chain variant with an increased oxygen affinity.</title>
        <authorList>
            <person name="Miyashita H."/>
            <person name="Hashimoto K."/>
            <person name="Mohri H."/>
            <person name="Ohokubo T."/>
            <person name="Harano T."/>
            <person name="Harano K."/>
            <person name="Imai K."/>
        </authorList>
    </citation>
    <scope>VARIANT KANAGAWA MET-41</scope>
</reference>
<reference key="98">
    <citation type="journal article" date="1994" name="Hemoglobin">
        <title>Hb Kurdistan [alpha 47(CE5)Asp--&gt;Tyr], a new alpha chain variant in combination with beta (0)-thalassemia.</title>
        <authorList>
            <person name="Giordano P.C."/>
            <person name="Harteveld C.L."/>
            <person name="Streng H."/>
            <person name="Oosterwijk J.C."/>
            <person name="Heister J.G.A.M."/>
            <person name="Amons R."/>
            <person name="Bernini L.F."/>
        </authorList>
    </citation>
    <scope>VARIANT KURDISTAN TYR-48</scope>
</reference>
<reference key="99">
    <citation type="journal article" date="1995" name="Hemoglobin">
        <title>Hb Kurosaki [alpha 7(A5)Lys--&gt;Glu]: a new alpha chain variant found in a Japanese woman.</title>
        <authorList>
            <person name="Harano T."/>
            <person name="Harano K."/>
            <person name="Imai K."/>
            <person name="Murakami T."/>
            <person name="Matsubara H."/>
        </authorList>
    </citation>
    <scope>VARIANT KUROSAKI GLU-8</scope>
</reference>
<reference key="100">
    <citation type="journal article" date="1994" name="Hemoglobin">
        <title>A case of HB J-Meerut (or Hb J-Birmingham) [alpha 120(H3)Ala--&gt;Glu].</title>
        <authorList>
            <person name="Yalcin A."/>
            <person name="Avcu F."/>
            <person name="Beyan C."/>
            <person name="Guergey A."/>
            <person name="Ural A.U."/>
        </authorList>
    </citation>
    <scope>VARIANT J-MEERUT/J-BIRMINGHAM GLU-121</scope>
</reference>
<reference key="101">
    <citation type="journal article" date="1993" name="Hemoglobin">
        <title>Hb Melusine [alpha 114(GH2)Pro--&gt;Ser]: a new neutral hemoglobin variant.</title>
        <authorList>
            <person name="Wacjman H."/>
            <person name="Klames G."/>
            <person name="Groff P."/>
            <person name="Prome D."/>
            <person name="Riou J."/>
            <person name="Galacteros F."/>
        </authorList>
    </citation>
    <scope>VARIANT MELUSINE SER-115</scope>
</reference>
<reference key="102">
    <citation type="journal article" date="1975" name="Biochim. Biophys. Acta">
        <title>Two new hemoglobins. Hemoglobin Alabama (beta39(C5)Gln leads to Lys) and hemoglobin Montgomery (alpha 48(CD 6) Leu leads to Arg).</title>
        <authorList>
            <person name="Brimhall B."/>
            <person name="Jones R.T."/>
            <person name="Schneider R.G."/>
            <person name="Hosty T.S."/>
            <person name="Tomlin G."/>
            <person name="Atkins R."/>
        </authorList>
    </citation>
    <scope>VARIANT MONTGOMERY ARG-49</scope>
</reference>
<reference key="103">
    <citation type="journal article" date="1981" name="Blood">
        <title>Hemoglobin Petah Tikva (alpha 110 Ala replaced by Asp): a new unstable variant with alpha-thalassemia-like expression.</title>
        <authorList>
            <person name="Honig G.R."/>
            <person name="Shamsuddin M."/>
            <person name="Zaizov R."/>
            <person name="Steinherz M."/>
            <person name="Solar I."/>
            <person name="Kirschman C."/>
        </authorList>
    </citation>
    <scope>VARIANT PETAH TIKVA ASP-111</scope>
</reference>
<reference key="104">
    <citation type="journal article" date="1998" name="Hum. Mutat. Suppl.">
        <title>Hemoglobin Phnom Penh [alpha117Phe(H1)-Ile-alpha118Thr(H2)]; evidence for a hotspot for insertion of residues in the third exon of the alpha1-globin gene.</title>
        <authorList>
            <person name="Wajcman H."/>
            <person name="Prehu M.O."/>
            <person name="Prehu C."/>
            <person name="Blouquit Y."/>
            <person name="Prome D."/>
            <person name="Galacteros F."/>
        </authorList>
    </citation>
    <scope>VARIANT PHNOM PENH ILE-118 INS</scope>
</reference>
<reference key="105">
    <citation type="journal article" date="1991" name="Hemoglobin">
        <title>Hb Port Huron [alpha 56 (E5)Lys--&gt;Arg]: a new alpha chain variant.</title>
        <authorList>
            <person name="Zwerdling T."/>
            <person name="Williams S."/>
            <person name="Nasr S.A."/>
            <person name="Rucknagel D.L."/>
        </authorList>
    </citation>
    <scope>VARIANT PORT HURON ARG-57</scope>
</reference>
<reference key="106">
    <citation type="journal article" date="1982" name="Hemoglobin">
        <title>Hb Shenyang (alpha 26 (B7) Ala replaced by Glu): a new unstable variant found in China.</title>
        <authorList>
            <person name="Zeng Y.-T."/>
            <person name="Huang S.-Z."/>
            <person name="Zhou X."/>
            <person name="Qiu X.-K."/>
            <person name="Dong Q."/>
            <person name="Li M."/>
            <person name="Bai J."/>
        </authorList>
    </citation>
    <scope>VARIANT SHENYANG GLU-27</scope>
</reference>
<reference key="107">
    <citation type="journal article" date="1979" name="Hemoglobin">
        <title>Hemoglobin Suan-Dok (alpha 2 109 (G16) Leu replaced by Arg beta 2): an unstable variant associated with alpha-thalassemia.</title>
        <authorList>
            <person name="Sanguansermsri T."/>
            <person name="Matragoon S."/>
            <person name="Changloah L."/>
            <person name="Flatz G."/>
        </authorList>
    </citation>
    <scope>VARIANT SUAN-DOK ARG-110</scope>
</reference>
<reference key="108">
    <citation type="journal article" date="1987" name="Hemoglobin">
        <title>Hyperunstable hemoglobin Toyama [alpha 2 136(H19)Leu----Arg beta 2]: detection and identification by in vitro biosynthesis with radioactive amino acids.</title>
        <authorList>
            <person name="Ohba Y."/>
            <person name="Yamamoto K."/>
            <person name="Hattori Y."/>
            <person name="Kawata R."/>
            <person name="Miyaji T."/>
        </authorList>
    </citation>
    <scope>INVOLVEMENT IN HEIBAN</scope>
    <scope>VARIANT TOYAMA ARG-137</scope>
</reference>
<reference key="109">
    <citation type="journal article" date="1990" name="Hemoglobin">
        <title>Hb Sun Prairie or alpha(2)130(H13)Ala--&gt;Pro beta 2, a new unstable variant occurring in low quantities.</title>
        <authorList>
            <person name="Harkness M."/>
            <person name="Harkness D.R."/>
            <person name="Kutlar F."/>
            <person name="Kutlar A."/>
            <person name="Wilson J.B."/>
            <person name="Webber B.B."/>
            <person name="Codrington J.F."/>
            <person name="Huisman T.H.J."/>
        </authorList>
    </citation>
    <scope>VARIANT SUN PRAIRIE PRO-131</scope>
</reference>
<reference key="110">
    <citation type="journal article" date="1996" name="Hemoglobin">
        <title>HB Swan River [alpha 6(A4)Asp--&gt;Gly] observed in a Japanese man.</title>
        <authorList>
            <person name="Harano T."/>
            <person name="Harano K."/>
            <person name="Imai K."/>
            <person name="Terunuma S."/>
        </authorList>
    </citation>
    <scope>VARIANT SWAN RIVER GLY-7</scope>
</reference>
<reference key="111">
    <citation type="journal article" date="1992" name="J. Biol. Chem.">
        <title>Hemoglobin Thionville. An alpha-chain variant with a substitution of a glutamate for valine at NA-1 and having an acetylated methionine NH2 terminus.</title>
        <authorList>
            <person name="Vasseur C."/>
            <person name="Blouquit Y."/>
            <person name="Kister J."/>
            <person name="Prome D."/>
            <person name="Kavanaugh J.S."/>
            <person name="Rogers P.H."/>
            <person name="Guillemin C."/>
            <person name="Arnone A."/>
            <person name="Galacteros F."/>
            <person name="Poyart C."/>
            <person name="Rosa J."/>
            <person name="Wajcman H."/>
        </authorList>
    </citation>
    <scope>VARIANT THIONVILLE GLU-2</scope>
</reference>
<reference key="112">
    <citation type="journal article" date="1995" name="Br. J. Haematol.">
        <title>Haemoglobin Tunis-Bizerte: a new alpha 1 globin 129 Leu--&gt;Pro unstable variant with thalassaemic phenotype.</title>
        <authorList>
            <person name="Darbellay R."/>
            <person name="Mach-Pascual S."/>
            <person name="Rose K."/>
            <person name="Graf J."/>
            <person name="Beris P."/>
        </authorList>
    </citation>
    <scope>VARIANT TUNIS-BIZERTE PRO-130</scope>
</reference>
<reference key="113">
    <citation type="journal article" date="1992" name="Hemoglobin">
        <title>A new alpha chain variant, Hb Turriff [alpha 99(G6)Lys--&gt;Glu]: the interference of abnormal hemoglobins in Hb A1c determination.</title>
        <authorList>
            <person name="Langdown J.V."/>
            <person name="Davidson R.J."/>
            <person name="Williamson D."/>
        </authorList>
    </citation>
    <scope>VARIANT TURRIFF GLU-100</scope>
</reference>
<reference key="114">
    <citation type="journal article" date="1993" name="Hemoglobin">
        <title>Hb Val de Marne [alpha 133(H16)Ser--&gt;Arg]: a new hemoglobin variant with moderate increase in oxygen affinity.</title>
        <authorList>
            <person name="Wacjman H."/>
            <person name="Kister J."/>
            <person name="M'Rad A."/>
            <person name="Marden M.C."/>
            <person name="Riou J."/>
            <person name="Galacteros F."/>
        </authorList>
    </citation>
    <scope>VARIANT VAL DE MARNE ARG-134</scope>
</reference>
<reference key="115">
    <citation type="journal article" date="1991" name="Hemoglobin">
        <title>Hb Westmead: an alpha 2-globin gene mutation detected by polymerase chain reaction and Stu I cleavage.</title>
        <authorList>
            <person name="Jiang N.H."/>
            <person name="Liang S."/>
            <person name="Wen X.J."/>
            <person name="Liang R."/>
            <person name="Su C."/>
            <person name="Tang Z."/>
        </authorList>
    </citation>
    <scope>VARIANT WESTMEAD GLN-123</scope>
</reference>
<reference key="116">
    <citation type="journal article" date="1986" name="Hemoglobin">
        <title>Hemoglobin Woodville: alpha (2)6(A4) aspartic acid--&gt;tyrosine.</title>
        <authorList>
            <person name="Como P.F."/>
            <person name="Barber S."/>
            <person name="Sage R.E."/>
            <person name="Kronenberg H."/>
        </authorList>
    </citation>
    <scope>VARIANT WOODVILLE TYR-7</scope>
</reference>
<reference key="117">
    <citation type="journal article" date="1992" name="Hemoglobin">
        <title>Hb Yuda or alpha 130(H13)Ala--&gt;Asp; a new alpha chain variant with low oxygen affinity.</title>
        <authorList>
            <person name="Fujisawa K."/>
            <person name="Hattori Y."/>
            <person name="Ohba Y."/>
            <person name="Ando S."/>
        </authorList>
    </citation>
    <scope>VARIANT YUDA ASP-131</scope>
</reference>
<reference key="118">
    <citation type="journal article" date="1992" name="Hum. Genet.">
        <title>Two new human hemoglobin variants caused by unusual mutational events: Hb Zaire contains a five residue repetition within the alpha-chain and Hb Duino has two residues substituted in the beta-chain.</title>
        <authorList>
            <person name="Wajcman H."/>
            <person name="Blouquit Y."/>
            <person name="Vasseur C."/>
            <person name="le Querrec A."/>
            <person name="Laniece M."/>
            <person name="Melevendi C."/>
            <person name="Rasore A."/>
            <person name="Galacteros F."/>
        </authorList>
    </citation>
    <scope>VARIANT ZAIRE HIS-LEU-PRO-ALA-GLU-117 INS</scope>
</reference>
<reference key="119">
    <citation type="journal article" date="1999" name="Hemoglobin">
        <title>Hb Aghia Sophia [alpha62(E11)Val--&gt;0 (alpha1)], an 'in-frame' deletion causing alpha-thalassemia.</title>
        <authorList>
            <person name="Traeger-Synodinos J."/>
            <person name="Harteveld C.L."/>
            <person name="Kanavakis E."/>
            <person name="Giordano P.C."/>
            <person name="Kattamis C."/>
            <person name="Bernini L.F."/>
        </authorList>
    </citation>
    <scope>VARIANT HBH VAL-63 DEL</scope>
</reference>
<reference key="120">
    <citation type="journal article" date="1999" name="Hemoglobin">
        <title>Two new alpha chain variants: Hb Boghe [alpha58(E7)His--&gt;Gln, alpha2], a variant on the distal histidine, and Hb Charolles [alpha103(G10)His-Tyr, alpha1].</title>
        <authorList>
            <person name="Lacan P."/>
            <person name="Francina A."/>
            <person name="Souillet G."/>
            <person name="Aubry M."/>
            <person name="Couprie N."/>
            <person name="Dementhon L."/>
            <person name="Becchi M."/>
        </authorList>
    </citation>
    <scope>VARIANT BOGHE GLN-59</scope>
    <scope>VARIANT CHAROLLES TYR-104</scope>
</reference>
<reference key="121">
    <citation type="journal article" date="2003" name="Braz. J. Med. Biol. Res.">
        <title>Screening for mutations in human alpha-globin genes by nonradioactive single-strand conformation polymorphism.</title>
        <authorList>
            <person name="Jorge S.B."/>
            <person name="Melo M.B."/>
            <person name="Costa F.F."/>
            <person name="Sonati M.F."/>
        </authorList>
    </citation>
    <scope>VARIANT CAMPINAS VAL-27</scope>
    <scope>VARIANT WEST ONE GLY-127</scope>
</reference>
<reference key="122">
    <citation type="journal article" date="2004" name="Am. J. Hematol.">
        <title>Characterization of hemoglobin Bassett (alpha94Asp--&gt;Ala), a variant with very low oxygen affinity.</title>
        <authorList>
            <person name="Abdulmalik O."/>
            <person name="Safo M.K."/>
            <person name="Lerner N.B."/>
            <person name="Ochotorena J."/>
            <person name="Daikhin E."/>
            <person name="Lakka V."/>
            <person name="Santacroce R."/>
            <person name="Abraham D.J."/>
            <person name="Asakura T."/>
        </authorList>
    </citation>
    <scope>VARIANT BASSETT ALA-95</scope>
    <scope>CHARACTERIZATION OF VARIANT BASSETT ALA-95</scope>
</reference>
<reference key="123">
    <citation type="journal article" date="2005" name="Hemoglobin">
        <title>A novel mutation of the alpha2-globin causing alpha(+)-thalassemia: Hb Plasencia [alpha125(H8)Leu--&gt;Arg (alpha2).</title>
        <authorList>
            <person name="Martin G."/>
            <person name="Villegas A."/>
            <person name="Gonzalez F.A."/>
            <person name="Ropero P."/>
            <person name="Hojas R."/>
            <person name="Polo M."/>
            <person name="Mateo M."/>
            <person name="Salvador M."/>
            <person name="Benavente C."/>
        </authorList>
    </citation>
    <scope>VARIANT PLASENCIA ARG-126</scope>
</reference>